<organism>
    <name type="scientific">Homo sapiens</name>
    <name type="common">Human</name>
    <dbReference type="NCBI Taxonomy" id="9606"/>
    <lineage>
        <taxon>Eukaryota</taxon>
        <taxon>Metazoa</taxon>
        <taxon>Chordata</taxon>
        <taxon>Craniata</taxon>
        <taxon>Vertebrata</taxon>
        <taxon>Euteleostomi</taxon>
        <taxon>Mammalia</taxon>
        <taxon>Eutheria</taxon>
        <taxon>Euarchontoglires</taxon>
        <taxon>Primates</taxon>
        <taxon>Haplorrhini</taxon>
        <taxon>Catarrhini</taxon>
        <taxon>Hominidae</taxon>
        <taxon>Homo</taxon>
    </lineage>
</organism>
<proteinExistence type="evidence at protein level"/>
<gene>
    <name evidence="55" type="primary">HSP90AA1</name>
    <name type="synonym">HSP90A</name>
    <name type="synonym">HSPC1</name>
    <name type="synonym">HSPCA</name>
</gene>
<protein>
    <recommendedName>
        <fullName evidence="53">Heat shock protein HSP 90-alpha</fullName>
        <ecNumber evidence="9">3.6.4.10</ecNumber>
    </recommendedName>
    <alternativeName>
        <fullName>Heat shock 86 kDa</fullName>
        <shortName>HSP 86</shortName>
        <shortName>HSP86</shortName>
    </alternativeName>
    <alternativeName>
        <fullName>Heat shock protein family C member 1</fullName>
    </alternativeName>
    <alternativeName>
        <fullName>Lipopolysaccharide-associated protein 2</fullName>
        <shortName>LAP-2</shortName>
        <shortName>LPS-associated protein 2</shortName>
    </alternativeName>
    <alternativeName>
        <fullName>Renal carcinoma antigen NY-REN-38</fullName>
    </alternativeName>
</protein>
<name>HS90A_HUMAN</name>
<feature type="initiator methionine" description="Removed" evidence="33">
    <location>
        <position position="1"/>
    </location>
</feature>
<feature type="chain" id="PRO_0000062911" description="Heat shock protein HSP 90-alpha">
    <location>
        <begin position="2"/>
        <end position="732"/>
    </location>
</feature>
<feature type="region of interest" description="Interaction with NR3C1" evidence="2">
    <location>
        <begin position="9"/>
        <end position="236"/>
    </location>
</feature>
<feature type="region of interest" description="Disordered" evidence="4">
    <location>
        <begin position="225"/>
        <end position="278"/>
    </location>
</feature>
<feature type="region of interest" description="Interaction with NR3C1" evidence="2">
    <location>
        <begin position="271"/>
        <end position="616"/>
    </location>
</feature>
<feature type="region of interest" description="Interaction with FLCN and FNIP1" evidence="39">
    <location>
        <begin position="284"/>
        <end position="732"/>
    </location>
</feature>
<feature type="region of interest" description="Interaction with FNIP2 and TSC1" evidence="39 40">
    <location>
        <begin position="284"/>
        <end position="620"/>
    </location>
</feature>
<feature type="region of interest" description="Interaction with NR1D1" evidence="2">
    <location>
        <begin position="628"/>
        <end position="731"/>
    </location>
</feature>
<feature type="region of interest" description="Required for homodimerization" evidence="44">
    <location>
        <begin position="682"/>
        <end position="732"/>
    </location>
</feature>
<feature type="region of interest" description="Disordered" evidence="4">
    <location>
        <begin position="700"/>
        <end position="732"/>
    </location>
</feature>
<feature type="region of interest" description="Essential for interaction with SMYD3, TSC1 and STIP1/HOP" evidence="36 40">
    <location>
        <begin position="728"/>
        <end position="732"/>
    </location>
</feature>
<feature type="region of interest" description="Essential for interaction with SGTA and TTC1" evidence="15">
    <location>
        <begin position="729"/>
        <end position="732"/>
    </location>
</feature>
<feature type="short sequence motif" description="TPR repeat-binding" evidence="18">
    <location>
        <begin position="723"/>
        <end position="732"/>
    </location>
</feature>
<feature type="compositionally biased region" description="Acidic residues" evidence="4">
    <location>
        <begin position="230"/>
        <end position="246"/>
    </location>
</feature>
<feature type="compositionally biased region" description="Acidic residues" evidence="4">
    <location>
        <begin position="256"/>
        <end position="268"/>
    </location>
</feature>
<feature type="binding site">
    <location>
        <position position="51"/>
    </location>
    <ligand>
        <name>ATP</name>
        <dbReference type="ChEBI" id="CHEBI:30616"/>
    </ligand>
</feature>
<feature type="binding site">
    <location>
        <position position="93"/>
    </location>
    <ligand>
        <name>ATP</name>
        <dbReference type="ChEBI" id="CHEBI:30616"/>
    </ligand>
</feature>
<feature type="binding site" evidence="1">
    <location>
        <position position="112"/>
    </location>
    <ligand>
        <name>ATP</name>
        <dbReference type="ChEBI" id="CHEBI:30616"/>
    </ligand>
</feature>
<feature type="binding site">
    <location>
        <position position="138"/>
    </location>
    <ligand>
        <name>ATP</name>
        <dbReference type="ChEBI" id="CHEBI:30616"/>
    </ligand>
</feature>
<feature type="binding site" evidence="1">
    <location>
        <position position="400"/>
    </location>
    <ligand>
        <name>ATP</name>
        <dbReference type="ChEBI" id="CHEBI:30616"/>
    </ligand>
</feature>
<feature type="modified residue" description="Phosphothreonine; by PRKDC" evidence="34">
    <location>
        <position position="5"/>
    </location>
</feature>
<feature type="modified residue" description="Phosphothreonine; by PRKDC" evidence="34">
    <location>
        <position position="7"/>
    </location>
</feature>
<feature type="modified residue" description="N6-acetyllysine" evidence="2">
    <location>
        <position position="58"/>
    </location>
</feature>
<feature type="modified residue" description="N6-acetyllysine" evidence="2">
    <location>
        <position position="84"/>
    </location>
</feature>
<feature type="modified residue" description="Phosphoserine" evidence="33 57 59 65 66">
    <location>
        <position position="231"/>
    </location>
</feature>
<feature type="modified residue" description="Phosphoserine" evidence="58 64 65">
    <location>
        <position position="252"/>
    </location>
</feature>
<feature type="modified residue" description="Phosphoserine" evidence="33 56 57 58 59 60 61 62 65">
    <location>
        <position position="263"/>
    </location>
</feature>
<feature type="modified residue" description="Phosphotyrosine" evidence="2">
    <location>
        <position position="313"/>
    </location>
</feature>
<feature type="modified residue" description="N6-acetyllysine" evidence="63">
    <location>
        <position position="443"/>
    </location>
</feature>
<feature type="modified residue" description="Phosphoserine" evidence="3">
    <location>
        <position position="453"/>
    </location>
</feature>
<feature type="modified residue" description="N6-acetyllysine" evidence="63">
    <location>
        <position position="458"/>
    </location>
</feature>
<feature type="modified residue" description="Phosphoserine" evidence="65">
    <location>
        <position position="476"/>
    </location>
</feature>
<feature type="modified residue" description="N6-acetyllysine" evidence="63">
    <location>
        <position position="489"/>
    </location>
</feature>
<feature type="modified residue" description="Phosphotyrosine" evidence="2">
    <location>
        <position position="492"/>
    </location>
</feature>
<feature type="modified residue" description="N6-acetyllysine" evidence="63">
    <location>
        <position position="585"/>
    </location>
</feature>
<feature type="modified residue" description="S-nitrosocysteine" evidence="16">
    <location>
        <position position="598"/>
    </location>
</feature>
<feature type="modified residue" description="Phosphoserine" evidence="65">
    <location>
        <position position="641"/>
    </location>
</feature>
<feature type="splice variant" id="VSP_026604" description="In isoform 2." evidence="48 49">
    <original>M</original>
    <variation>MPPCSGGDGSTPPGPSLRDRDCPAQSAEYPRDRLDPRPGSPSEASSPPFLRSRAPVNWYQEKAQVFLWHLMVSGSTTLLCLWKQPFHVSAFPVTASLAFRQSQGAGQHLYKDLQPFILLRLLM</variation>
    <location>
        <position position="1"/>
    </location>
</feature>
<feature type="mutagenesis site" description="Strong ATP-binding. Strong interaction with HSF1, HIF1A, ERBB2, MET, KEAP1 and RHOBTB2. No effect on interaction with TSC1." evidence="37 40">
    <original>E</original>
    <variation>A</variation>
    <location>
        <position position="47"/>
    </location>
</feature>
<feature type="mutagenesis site" description="Impaired ATP-binding. Strong interaction with HIF1A, MET, KEAP1 and RHOBTB2. Loss of interaction with HSF1 and ERBB2. Los of interaction with TSC1." evidence="37 40">
    <original>D</original>
    <variation>A</variation>
    <location>
        <position position="93"/>
    </location>
</feature>
<feature type="mutagenesis site" description="Abolishes ATPase activity." evidence="23">
    <original>G</original>
    <variation>D</variation>
    <location>
        <position position="97"/>
    </location>
</feature>
<feature type="mutagenesis site" description="Loss of interaction with TSC1 and increases interaction with AHSA1." evidence="40">
    <original>Y</original>
    <variation>E</variation>
    <location>
        <position position="313"/>
    </location>
</feature>
<feature type="mutagenesis site" description="No deffect on the interaction with TSC1." evidence="40">
    <original>Y</original>
    <variation>F</variation>
    <location>
        <position position="313"/>
    </location>
</feature>
<feature type="mutagenesis site" description="Reduces ATPase activity and client protein activation." evidence="16 25">
    <original>C</original>
    <variation>A</variation>
    <variation>N</variation>
    <variation>D</variation>
    <location>
        <position position="598"/>
    </location>
</feature>
<feature type="mutagenesis site" description="Loss of S-nitrosylation." evidence="16 25">
    <original>C</original>
    <variation>S</variation>
    <location>
        <position position="598"/>
    </location>
</feature>
<feature type="mutagenesis site" description="Loss of interaction with TOMM70. No effect on interaction with IRF3." evidence="35">
    <original>MEEVD</original>
    <variation>AAAA</variation>
    <location>
        <begin position="728"/>
        <end position="732"/>
    </location>
</feature>
<feature type="mutagenesis site" description="Loss of interaction with TSC1." evidence="40">
    <location>
        <begin position="728"/>
        <end position="732"/>
    </location>
</feature>
<feature type="mutagenesis site" description="Loss of interaction with TOMM70." evidence="28">
    <location>
        <begin position="729"/>
        <end position="732"/>
    </location>
</feature>
<feature type="mutagenesis site" description="Loss of interaction with TOMM70. No effect on interaction with IRF3." evidence="28 35">
    <original>VD</original>
    <variation>AA</variation>
    <location>
        <begin position="731"/>
        <end position="732"/>
    </location>
</feature>
<feature type="sequence conflict" description="In Ref. 1; CAA33259." evidence="53" ref="1">
    <original>S</original>
    <variation>T</variation>
    <location>
        <position position="63"/>
    </location>
</feature>
<feature type="sequence conflict" description="In Ref. 4; CAI64495 and 6; BAG51711." evidence="53" ref="4 6">
    <original>K</original>
    <variation>R</variation>
    <location>
        <position position="74"/>
    </location>
</feature>
<feature type="sequence conflict" description="In Ref. 4; CAI64495 and 6; BAG51711." evidence="53" ref="4 6">
    <original>D</original>
    <variation>G</variation>
    <location>
        <position position="86"/>
    </location>
</feature>
<feature type="sequence conflict" description="In Ref. 15; AA sequence." evidence="53" ref="15">
    <original>W</original>
    <variation>D</variation>
    <location>
        <position position="162"/>
    </location>
</feature>
<feature type="helix" evidence="75">
    <location>
        <begin position="2"/>
        <end position="5"/>
    </location>
</feature>
<feature type="strand" evidence="73">
    <location>
        <begin position="18"/>
        <end position="21"/>
    </location>
</feature>
<feature type="helix" evidence="73">
    <location>
        <begin position="24"/>
        <end position="35"/>
    </location>
</feature>
<feature type="turn" evidence="74">
    <location>
        <begin position="39"/>
        <end position="42"/>
    </location>
</feature>
<feature type="helix" evidence="73">
    <location>
        <begin position="43"/>
        <end position="65"/>
    </location>
</feature>
<feature type="helix" evidence="73">
    <location>
        <begin position="67"/>
        <end position="70"/>
    </location>
</feature>
<feature type="strand" evidence="73">
    <location>
        <begin position="78"/>
        <end position="83"/>
    </location>
</feature>
<feature type="turn" evidence="73">
    <location>
        <begin position="84"/>
        <end position="87"/>
    </location>
</feature>
<feature type="strand" evidence="73">
    <location>
        <begin position="88"/>
        <end position="93"/>
    </location>
</feature>
<feature type="helix" evidence="73">
    <location>
        <begin position="100"/>
        <end position="104"/>
    </location>
</feature>
<feature type="turn" evidence="73">
    <location>
        <begin position="105"/>
        <end position="108"/>
    </location>
</feature>
<feature type="helix" evidence="73">
    <location>
        <begin position="111"/>
        <end position="123"/>
    </location>
</feature>
<feature type="helix" evidence="73">
    <location>
        <begin position="128"/>
        <end position="134"/>
    </location>
</feature>
<feature type="helix" evidence="73">
    <location>
        <begin position="137"/>
        <end position="143"/>
    </location>
</feature>
<feature type="strand" evidence="73">
    <location>
        <begin position="145"/>
        <end position="153"/>
    </location>
</feature>
<feature type="strand" evidence="67">
    <location>
        <begin position="155"/>
        <end position="157"/>
    </location>
</feature>
<feature type="strand" evidence="73">
    <location>
        <begin position="160"/>
        <end position="164"/>
    </location>
</feature>
<feature type="strand" evidence="79">
    <location>
        <begin position="166"/>
        <end position="168"/>
    </location>
</feature>
<feature type="strand" evidence="73">
    <location>
        <begin position="169"/>
        <end position="174"/>
    </location>
</feature>
<feature type="strand" evidence="73">
    <location>
        <begin position="181"/>
        <end position="190"/>
    </location>
</feature>
<feature type="helix" evidence="73">
    <location>
        <begin position="192"/>
        <end position="198"/>
    </location>
</feature>
<feature type="helix" evidence="73">
    <location>
        <begin position="200"/>
        <end position="210"/>
    </location>
</feature>
<feature type="strand" evidence="71">
    <location>
        <begin position="212"/>
        <end position="216"/>
    </location>
</feature>
<feature type="strand" evidence="73">
    <location>
        <begin position="218"/>
        <end position="220"/>
    </location>
</feature>
<feature type="turn" evidence="70">
    <location>
        <begin position="221"/>
        <end position="224"/>
    </location>
</feature>
<feature type="strand" evidence="70">
    <location>
        <begin position="225"/>
        <end position="227"/>
    </location>
</feature>
<feature type="helix" evidence="68">
    <location>
        <begin position="228"/>
        <end position="230"/>
    </location>
</feature>
<feature type="strand" evidence="77">
    <location>
        <begin position="284"/>
        <end position="289"/>
    </location>
</feature>
<feature type="helix" evidence="78">
    <location>
        <begin position="296"/>
        <end position="298"/>
    </location>
</feature>
<feature type="helix" evidence="76">
    <location>
        <begin position="301"/>
        <end position="303"/>
    </location>
</feature>
<feature type="helix" evidence="78">
    <location>
        <begin position="306"/>
        <end position="316"/>
    </location>
</feature>
<feature type="strand" evidence="78">
    <location>
        <begin position="324"/>
        <end position="331"/>
    </location>
</feature>
<feature type="strand" evidence="78">
    <location>
        <begin position="333"/>
        <end position="335"/>
    </location>
</feature>
<feature type="strand" evidence="78">
    <location>
        <begin position="337"/>
        <end position="343"/>
    </location>
</feature>
<feature type="turn" evidence="76">
    <location>
        <begin position="351"/>
        <end position="353"/>
    </location>
</feature>
<feature type="strand" evidence="78">
    <location>
        <begin position="361"/>
        <end position="365"/>
    </location>
</feature>
<feature type="strand" evidence="78">
    <location>
        <begin position="368"/>
        <end position="372"/>
    </location>
</feature>
<feature type="helix" evidence="78">
    <location>
        <begin position="375"/>
        <end position="377"/>
    </location>
</feature>
<feature type="helix" evidence="78">
    <location>
        <begin position="380"/>
        <end position="382"/>
    </location>
</feature>
<feature type="strand" evidence="78">
    <location>
        <begin position="386"/>
        <end position="394"/>
    </location>
</feature>
<feature type="turn" evidence="78">
    <location>
        <begin position="400"/>
        <end position="405"/>
    </location>
</feature>
<feature type="helix" evidence="78">
    <location>
        <begin position="407"/>
        <end position="428"/>
    </location>
</feature>
<feature type="helix" evidence="78">
    <location>
        <begin position="431"/>
        <end position="451"/>
    </location>
</feature>
<feature type="helix" evidence="76">
    <location>
        <begin position="453"/>
        <end position="455"/>
    </location>
</feature>
<feature type="helix" evidence="78">
    <location>
        <begin position="456"/>
        <end position="460"/>
    </location>
</feature>
<feature type="strand" evidence="78">
    <location>
        <begin position="465"/>
        <end position="467"/>
    </location>
</feature>
<feature type="turn" evidence="78">
    <location>
        <begin position="468"/>
        <end position="472"/>
    </location>
</feature>
<feature type="helix" evidence="78">
    <location>
        <begin position="477"/>
        <end position="482"/>
    </location>
</feature>
<feature type="strand" evidence="78">
    <location>
        <begin position="490"/>
        <end position="495"/>
    </location>
</feature>
<feature type="helix" evidence="78">
    <location>
        <begin position="499"/>
        <end position="503"/>
    </location>
</feature>
<feature type="helix" evidence="78">
    <location>
        <begin position="506"/>
        <end position="508"/>
    </location>
</feature>
<feature type="helix" evidence="78">
    <location>
        <begin position="509"/>
        <end position="513"/>
    </location>
</feature>
<feature type="strand" evidence="78">
    <location>
        <begin position="518"/>
        <end position="521"/>
    </location>
</feature>
<feature type="helix" evidence="78">
    <location>
        <begin position="524"/>
        <end position="529"/>
    </location>
</feature>
<feature type="turn" evidence="78">
    <location>
        <begin position="530"/>
        <end position="532"/>
    </location>
</feature>
<feature type="strand" evidence="78">
    <location>
        <begin position="539"/>
        <end position="543"/>
    </location>
</feature>
<feature type="strand" evidence="78">
    <location>
        <begin position="546"/>
        <end position="548"/>
    </location>
</feature>
<feature type="helix" evidence="78">
    <location>
        <begin position="555"/>
        <end position="579"/>
    </location>
</feature>
<feature type="helix" evidence="69">
    <location>
        <begin position="580"/>
        <end position="582"/>
    </location>
</feature>
<feature type="strand" evidence="78">
    <location>
        <begin position="584"/>
        <end position="588"/>
    </location>
</feature>
<feature type="strand" evidence="78">
    <location>
        <begin position="593"/>
        <end position="601"/>
    </location>
</feature>
<feature type="strand" evidence="77">
    <location>
        <begin position="603"/>
        <end position="605"/>
    </location>
</feature>
<feature type="helix" evidence="78">
    <location>
        <begin position="608"/>
        <end position="613"/>
    </location>
</feature>
<feature type="helix" evidence="77">
    <location>
        <begin position="622"/>
        <end position="624"/>
    </location>
</feature>
<feature type="turn" evidence="77">
    <location>
        <begin position="625"/>
        <end position="629"/>
    </location>
</feature>
<feature type="strand" evidence="78">
    <location>
        <begin position="632"/>
        <end position="636"/>
    </location>
</feature>
<feature type="helix" evidence="78">
    <location>
        <begin position="641"/>
        <end position="652"/>
    </location>
</feature>
<feature type="helix" evidence="78">
    <location>
        <begin position="657"/>
        <end position="673"/>
    </location>
</feature>
<feature type="helix" evidence="78">
    <location>
        <begin position="681"/>
        <end position="696"/>
    </location>
</feature>
<feature type="strand" evidence="72">
    <location>
        <begin position="728"/>
        <end position="730"/>
    </location>
</feature>
<feature type="sequence variant" id="VAR_082835" description="In dbSNP:rs8005905." evidence="53">
    <original>M</original>
    <variation>L</variation>
    <location sequence="P07900-2">
        <position position="71"/>
    </location>
</feature>
<evidence type="ECO:0000250" key="1"/>
<evidence type="ECO:0000250" key="2">
    <source>
        <dbReference type="UniProtKB" id="P07901"/>
    </source>
</evidence>
<evidence type="ECO:0000250" key="3">
    <source>
        <dbReference type="UniProtKB" id="P82995"/>
    </source>
</evidence>
<evidence type="ECO:0000256" key="4">
    <source>
        <dbReference type="SAM" id="MobiDB-lite"/>
    </source>
</evidence>
<evidence type="ECO:0000269" key="5">
    <source>
    </source>
</evidence>
<evidence type="ECO:0000269" key="6">
    <source>
    </source>
</evidence>
<evidence type="ECO:0000269" key="7">
    <source>
    </source>
</evidence>
<evidence type="ECO:0000269" key="8">
    <source>
    </source>
</evidence>
<evidence type="ECO:0000269" key="9">
    <source>
    </source>
</evidence>
<evidence type="ECO:0000269" key="10">
    <source>
    </source>
</evidence>
<evidence type="ECO:0000269" key="11">
    <source>
    </source>
</evidence>
<evidence type="ECO:0000269" key="12">
    <source>
    </source>
</evidence>
<evidence type="ECO:0000269" key="13">
    <source>
    </source>
</evidence>
<evidence type="ECO:0000269" key="14">
    <source>
    </source>
</evidence>
<evidence type="ECO:0000269" key="15">
    <source>
    </source>
</evidence>
<evidence type="ECO:0000269" key="16">
    <source>
    </source>
</evidence>
<evidence type="ECO:0000269" key="17">
    <source>
    </source>
</evidence>
<evidence type="ECO:0000269" key="18">
    <source>
    </source>
</evidence>
<evidence type="ECO:0000269" key="19">
    <source>
    </source>
</evidence>
<evidence type="ECO:0000269" key="20">
    <source>
    </source>
</evidence>
<evidence type="ECO:0000269" key="21">
    <source>
    </source>
</evidence>
<evidence type="ECO:0000269" key="22">
    <source>
    </source>
</evidence>
<evidence type="ECO:0000269" key="23">
    <source>
    </source>
</evidence>
<evidence type="ECO:0000269" key="24">
    <source>
    </source>
</evidence>
<evidence type="ECO:0000269" key="25">
    <source>
    </source>
</evidence>
<evidence type="ECO:0000269" key="26">
    <source>
    </source>
</evidence>
<evidence type="ECO:0000269" key="27">
    <source>
    </source>
</evidence>
<evidence type="ECO:0000269" key="28">
    <source>
    </source>
</evidence>
<evidence type="ECO:0000269" key="29">
    <source>
    </source>
</evidence>
<evidence type="ECO:0000269" key="30">
    <source>
    </source>
</evidence>
<evidence type="ECO:0000269" key="31">
    <source>
    </source>
</evidence>
<evidence type="ECO:0000269" key="32">
    <source>
    </source>
</evidence>
<evidence type="ECO:0000269" key="33">
    <source>
    </source>
</evidence>
<evidence type="ECO:0000269" key="34">
    <source>
    </source>
</evidence>
<evidence type="ECO:0000269" key="35">
    <source>
    </source>
</evidence>
<evidence type="ECO:0000269" key="36">
    <source>
    </source>
</evidence>
<evidence type="ECO:0000269" key="37">
    <source>
    </source>
</evidence>
<evidence type="ECO:0000269" key="38">
    <source>
    </source>
</evidence>
<evidence type="ECO:0000269" key="39">
    <source>
    </source>
</evidence>
<evidence type="ECO:0000269" key="40">
    <source>
    </source>
</evidence>
<evidence type="ECO:0000269" key="41">
    <source>
    </source>
</evidence>
<evidence type="ECO:0000269" key="42">
    <source>
    </source>
</evidence>
<evidence type="ECO:0000269" key="43">
    <source>
    </source>
</evidence>
<evidence type="ECO:0000269" key="44">
    <source>
    </source>
</evidence>
<evidence type="ECO:0000269" key="45">
    <source>
    </source>
</evidence>
<evidence type="ECO:0000269" key="46">
    <source>
    </source>
</evidence>
<evidence type="ECO:0000269" key="47">
    <source>
    </source>
</evidence>
<evidence type="ECO:0000303" key="48">
    <source>
    </source>
</evidence>
<evidence type="ECO:0000303" key="49">
    <source>
    </source>
</evidence>
<evidence type="ECO:0000303" key="50">
    <source>
    </source>
</evidence>
<evidence type="ECO:0000303" key="51">
    <source>
    </source>
</evidence>
<evidence type="ECO:0000303" key="52">
    <source>
    </source>
</evidence>
<evidence type="ECO:0000305" key="53"/>
<evidence type="ECO:0000305" key="54">
    <source>
    </source>
</evidence>
<evidence type="ECO:0000312" key="55">
    <source>
        <dbReference type="HGNC" id="HGNC:5253"/>
    </source>
</evidence>
<evidence type="ECO:0007744" key="56">
    <source>
    </source>
</evidence>
<evidence type="ECO:0007744" key="57">
    <source>
    </source>
</evidence>
<evidence type="ECO:0007744" key="58">
    <source>
    </source>
</evidence>
<evidence type="ECO:0007744" key="59">
    <source>
    </source>
</evidence>
<evidence type="ECO:0007744" key="60">
    <source>
    </source>
</evidence>
<evidence type="ECO:0007744" key="61">
    <source>
    </source>
</evidence>
<evidence type="ECO:0007744" key="62">
    <source>
    </source>
</evidence>
<evidence type="ECO:0007744" key="63">
    <source>
    </source>
</evidence>
<evidence type="ECO:0007744" key="64">
    <source>
    </source>
</evidence>
<evidence type="ECO:0007744" key="65">
    <source>
    </source>
</evidence>
<evidence type="ECO:0007744" key="66">
    <source>
    </source>
</evidence>
<evidence type="ECO:0007829" key="67">
    <source>
        <dbReference type="PDB" id="2WI6"/>
    </source>
</evidence>
<evidence type="ECO:0007829" key="68">
    <source>
        <dbReference type="PDB" id="2XJX"/>
    </source>
</evidence>
<evidence type="ECO:0007829" key="69">
    <source>
        <dbReference type="PDB" id="3Q6M"/>
    </source>
</evidence>
<evidence type="ECO:0007829" key="70">
    <source>
        <dbReference type="PDB" id="3T1K"/>
    </source>
</evidence>
<evidence type="ECO:0007829" key="71">
    <source>
        <dbReference type="PDB" id="3VHC"/>
    </source>
</evidence>
<evidence type="ECO:0007829" key="72">
    <source>
        <dbReference type="PDB" id="4CGW"/>
    </source>
</evidence>
<evidence type="ECO:0007829" key="73">
    <source>
        <dbReference type="PDB" id="5J80"/>
    </source>
</evidence>
<evidence type="ECO:0007829" key="74">
    <source>
        <dbReference type="PDB" id="6GPF"/>
    </source>
</evidence>
<evidence type="ECO:0007829" key="75">
    <source>
        <dbReference type="PDB" id="6GQS"/>
    </source>
</evidence>
<evidence type="ECO:0007829" key="76">
    <source>
        <dbReference type="PDB" id="6KSQ"/>
    </source>
</evidence>
<evidence type="ECO:0007829" key="77">
    <source>
        <dbReference type="PDB" id="7KRJ"/>
    </source>
</evidence>
<evidence type="ECO:0007829" key="78">
    <source>
        <dbReference type="PDB" id="7RY0"/>
    </source>
</evidence>
<evidence type="ECO:0007829" key="79">
    <source>
        <dbReference type="PDB" id="8FFV"/>
    </source>
</evidence>
<keyword id="KW-0002">3D-structure</keyword>
<keyword id="KW-0007">Acetylation</keyword>
<keyword id="KW-0025">Alternative splicing</keyword>
<keyword id="KW-0067">ATP-binding</keyword>
<keyword id="KW-1003">Cell membrane</keyword>
<keyword id="KW-0143">Chaperone</keyword>
<keyword id="KW-0963">Cytoplasm</keyword>
<keyword id="KW-0903">Direct protein sequencing</keyword>
<keyword id="KW-0945">Host-virus interaction</keyword>
<keyword id="KW-0378">Hydrolase</keyword>
<keyword id="KW-0472">Membrane</keyword>
<keyword id="KW-0496">Mitochondrion</keyword>
<keyword id="KW-0547">Nucleotide-binding</keyword>
<keyword id="KW-0539">Nucleus</keyword>
<keyword id="KW-0597">Phosphoprotein</keyword>
<keyword id="KW-1267">Proteomics identification</keyword>
<keyword id="KW-1185">Reference proteome</keyword>
<keyword id="KW-0702">S-nitrosylation</keyword>
<keyword id="KW-0346">Stress response</keyword>
<keyword id="KW-0832">Ubl conjugation</keyword>
<dbReference type="EC" id="3.6.4.10" evidence="9"/>
<dbReference type="EMBL" id="X15183">
    <property type="protein sequence ID" value="CAA33259.1"/>
    <property type="molecule type" value="mRNA"/>
</dbReference>
<dbReference type="EMBL" id="M27024">
    <property type="protein sequence ID" value="AAA63194.1"/>
    <property type="molecule type" value="Genomic_DNA"/>
</dbReference>
<dbReference type="EMBL" id="AJ890082">
    <property type="protein sequence ID" value="CAI64495.1"/>
    <property type="molecule type" value="mRNA"/>
</dbReference>
<dbReference type="EMBL" id="AJ890083">
    <property type="protein sequence ID" value="CAI64496.1"/>
    <property type="molecule type" value="mRNA"/>
</dbReference>
<dbReference type="EMBL" id="DQ314871">
    <property type="protein sequence ID" value="ABC40730.1"/>
    <property type="molecule type" value="Genomic_DNA"/>
</dbReference>
<dbReference type="EMBL" id="AK056446">
    <property type="protein sequence ID" value="BAG51711.1"/>
    <property type="molecule type" value="mRNA"/>
</dbReference>
<dbReference type="EMBL" id="AK291115">
    <property type="protein sequence ID" value="BAF83804.1"/>
    <property type="molecule type" value="mRNA"/>
</dbReference>
<dbReference type="EMBL" id="AK291607">
    <property type="protein sequence ID" value="BAF84296.1"/>
    <property type="molecule type" value="mRNA"/>
</dbReference>
<dbReference type="EMBL" id="AL133223">
    <property type="status" value="NOT_ANNOTATED_CDS"/>
    <property type="molecule type" value="Genomic_DNA"/>
</dbReference>
<dbReference type="EMBL" id="CH471061">
    <property type="protein sequence ID" value="EAW81765.1"/>
    <property type="molecule type" value="Genomic_DNA"/>
</dbReference>
<dbReference type="EMBL" id="X07270">
    <property type="protein sequence ID" value="CAA30255.1"/>
    <property type="molecule type" value="mRNA"/>
</dbReference>
<dbReference type="EMBL" id="M30626">
    <property type="protein sequence ID" value="AAA36023.1"/>
    <property type="molecule type" value="Genomic_DNA"/>
</dbReference>
<dbReference type="EMBL" id="BC000987">
    <property type="protein sequence ID" value="AAH00987.1"/>
    <property type="molecule type" value="mRNA"/>
</dbReference>
<dbReference type="EMBL" id="BC121062">
    <property type="protein sequence ID" value="AAI21063.1"/>
    <property type="molecule type" value="mRNA"/>
</dbReference>
<dbReference type="EMBL" id="D87666">
    <property type="protein sequence ID" value="BAA13430.1"/>
    <property type="molecule type" value="mRNA"/>
</dbReference>
<dbReference type="EMBL" id="D87666">
    <property type="protein sequence ID" value="BAA13431.1"/>
    <property type="molecule type" value="mRNA"/>
</dbReference>
<dbReference type="CCDS" id="CCDS32160.1">
    <molecule id="P07900-2"/>
</dbReference>
<dbReference type="CCDS" id="CCDS9967.1">
    <molecule id="P07900-1"/>
</dbReference>
<dbReference type="PIR" id="A32319">
    <property type="entry name" value="HHHU86"/>
</dbReference>
<dbReference type="RefSeq" id="NP_001017963.2">
    <molecule id="P07900-2"/>
    <property type="nucleotide sequence ID" value="NM_001017963.3"/>
</dbReference>
<dbReference type="RefSeq" id="NP_005339.3">
    <molecule id="P07900-1"/>
    <property type="nucleotide sequence ID" value="NM_005348.3"/>
</dbReference>
<dbReference type="PDB" id="1BYQ">
    <property type="method" value="X-ray"/>
    <property type="resolution" value="1.50 A"/>
    <property type="chains" value="A=9-236"/>
</dbReference>
<dbReference type="PDB" id="1OSF">
    <property type="method" value="X-ray"/>
    <property type="resolution" value="1.75 A"/>
    <property type="chains" value="A=9-223"/>
</dbReference>
<dbReference type="PDB" id="1UY6">
    <property type="method" value="X-ray"/>
    <property type="resolution" value="1.90 A"/>
    <property type="chains" value="A=2-236"/>
</dbReference>
<dbReference type="PDB" id="1UY7">
    <property type="method" value="X-ray"/>
    <property type="resolution" value="1.90 A"/>
    <property type="chains" value="A=2-236"/>
</dbReference>
<dbReference type="PDB" id="1UY8">
    <property type="method" value="X-ray"/>
    <property type="resolution" value="1.98 A"/>
    <property type="chains" value="A=2-236"/>
</dbReference>
<dbReference type="PDB" id="1UY9">
    <property type="method" value="X-ray"/>
    <property type="resolution" value="2.00 A"/>
    <property type="chains" value="A=2-236"/>
</dbReference>
<dbReference type="PDB" id="1UYC">
    <property type="method" value="X-ray"/>
    <property type="resolution" value="2.00 A"/>
    <property type="chains" value="A=2-236"/>
</dbReference>
<dbReference type="PDB" id="1UYD">
    <property type="method" value="X-ray"/>
    <property type="resolution" value="2.20 A"/>
    <property type="chains" value="A=2-236"/>
</dbReference>
<dbReference type="PDB" id="1UYE">
    <property type="method" value="X-ray"/>
    <property type="resolution" value="2.00 A"/>
    <property type="chains" value="A=2-236"/>
</dbReference>
<dbReference type="PDB" id="1UYF">
    <property type="method" value="X-ray"/>
    <property type="resolution" value="2.00 A"/>
    <property type="chains" value="A=2-236"/>
</dbReference>
<dbReference type="PDB" id="1UYG">
    <property type="method" value="X-ray"/>
    <property type="resolution" value="2.00 A"/>
    <property type="chains" value="A=2-236"/>
</dbReference>
<dbReference type="PDB" id="1UYH">
    <property type="method" value="X-ray"/>
    <property type="resolution" value="2.20 A"/>
    <property type="chains" value="A=2-236"/>
</dbReference>
<dbReference type="PDB" id="1UYI">
    <property type="method" value="X-ray"/>
    <property type="resolution" value="2.20 A"/>
    <property type="chains" value="A=2-236"/>
</dbReference>
<dbReference type="PDB" id="1UYK">
    <property type="method" value="X-ray"/>
    <property type="resolution" value="2.20 A"/>
    <property type="chains" value="A=2-236"/>
</dbReference>
<dbReference type="PDB" id="1UYL">
    <property type="method" value="X-ray"/>
    <property type="resolution" value="1.40 A"/>
    <property type="chains" value="A=2-236"/>
</dbReference>
<dbReference type="PDB" id="1YC1">
    <property type="method" value="X-ray"/>
    <property type="resolution" value="1.70 A"/>
    <property type="chains" value="A=9-236"/>
</dbReference>
<dbReference type="PDB" id="1YC3">
    <property type="method" value="X-ray"/>
    <property type="resolution" value="2.12 A"/>
    <property type="chains" value="A=9-236"/>
</dbReference>
<dbReference type="PDB" id="1YC4">
    <property type="method" value="X-ray"/>
    <property type="resolution" value="1.81 A"/>
    <property type="chains" value="A=9-236"/>
</dbReference>
<dbReference type="PDB" id="1YER">
    <property type="method" value="X-ray"/>
    <property type="resolution" value="1.65 A"/>
    <property type="chains" value="A=9-236"/>
</dbReference>
<dbReference type="PDB" id="1YES">
    <property type="method" value="X-ray"/>
    <property type="resolution" value="2.20 A"/>
    <property type="chains" value="A=9-236"/>
</dbReference>
<dbReference type="PDB" id="1YET">
    <property type="method" value="X-ray"/>
    <property type="resolution" value="1.90 A"/>
    <property type="chains" value="A=9-236"/>
</dbReference>
<dbReference type="PDB" id="2BSM">
    <property type="method" value="X-ray"/>
    <property type="resolution" value="2.05 A"/>
    <property type="chains" value="A=2-236"/>
</dbReference>
<dbReference type="PDB" id="2BT0">
    <property type="method" value="X-ray"/>
    <property type="resolution" value="1.90 A"/>
    <property type="chains" value="A/B=2-236"/>
</dbReference>
<dbReference type="PDB" id="2BUG">
    <property type="method" value="NMR"/>
    <property type="chains" value="B=728-732"/>
</dbReference>
<dbReference type="PDB" id="2BYH">
    <property type="method" value="X-ray"/>
    <property type="resolution" value="1.90 A"/>
    <property type="chains" value="A=11-236"/>
</dbReference>
<dbReference type="PDB" id="2BYI">
    <property type="method" value="X-ray"/>
    <property type="resolution" value="1.60 A"/>
    <property type="chains" value="A=11-236"/>
</dbReference>
<dbReference type="PDB" id="2BZ5">
    <property type="method" value="X-ray"/>
    <property type="resolution" value="1.90 A"/>
    <property type="chains" value="A/B=2-236"/>
</dbReference>
<dbReference type="PDB" id="2C2L">
    <property type="method" value="X-ray"/>
    <property type="resolution" value="3.30 A"/>
    <property type="chains" value="E/F/G/H=724-732"/>
</dbReference>
<dbReference type="PDB" id="2CCS">
    <property type="method" value="X-ray"/>
    <property type="resolution" value="1.79 A"/>
    <property type="chains" value="A=1-236"/>
</dbReference>
<dbReference type="PDB" id="2CCT">
    <property type="method" value="X-ray"/>
    <property type="resolution" value="2.30 A"/>
    <property type="chains" value="A=1-236"/>
</dbReference>
<dbReference type="PDB" id="2CCU">
    <property type="method" value="X-ray"/>
    <property type="resolution" value="2.70 A"/>
    <property type="chains" value="A=1-236"/>
</dbReference>
<dbReference type="PDB" id="2FWY">
    <property type="method" value="X-ray"/>
    <property type="resolution" value="2.10 A"/>
    <property type="chains" value="A=1-236"/>
</dbReference>
<dbReference type="PDB" id="2FWZ">
    <property type="method" value="X-ray"/>
    <property type="resolution" value="2.10 A"/>
    <property type="chains" value="A=1-236"/>
</dbReference>
<dbReference type="PDB" id="2H55">
    <property type="method" value="X-ray"/>
    <property type="resolution" value="2.00 A"/>
    <property type="chains" value="A=1-236"/>
</dbReference>
<dbReference type="PDB" id="2JJC">
    <property type="method" value="X-ray"/>
    <property type="resolution" value="1.95 A"/>
    <property type="chains" value="A=9-223"/>
</dbReference>
<dbReference type="PDB" id="2K5B">
    <property type="method" value="NMR"/>
    <property type="chains" value="A=14-223"/>
</dbReference>
<dbReference type="PDB" id="2QF6">
    <property type="method" value="X-ray"/>
    <property type="resolution" value="3.10 A"/>
    <property type="chains" value="A/B/C/D=17-223"/>
</dbReference>
<dbReference type="PDB" id="2QFO">
    <property type="method" value="X-ray"/>
    <property type="resolution" value="1.68 A"/>
    <property type="chains" value="A/B=17-223"/>
</dbReference>
<dbReference type="PDB" id="2QG0">
    <property type="method" value="X-ray"/>
    <property type="resolution" value="1.85 A"/>
    <property type="chains" value="A/B=17-223"/>
</dbReference>
<dbReference type="PDB" id="2QG2">
    <property type="method" value="X-ray"/>
    <property type="resolution" value="1.80 A"/>
    <property type="chains" value="A=17-223"/>
</dbReference>
<dbReference type="PDB" id="2UWD">
    <property type="method" value="X-ray"/>
    <property type="resolution" value="1.90 A"/>
    <property type="chains" value="A=2-236"/>
</dbReference>
<dbReference type="PDB" id="2VCI">
    <property type="method" value="X-ray"/>
    <property type="resolution" value="2.00 A"/>
    <property type="chains" value="A=1-236"/>
</dbReference>
<dbReference type="PDB" id="2VCJ">
    <property type="method" value="X-ray"/>
    <property type="resolution" value="2.50 A"/>
    <property type="chains" value="A=1-236"/>
</dbReference>
<dbReference type="PDB" id="2WI1">
    <property type="method" value="X-ray"/>
    <property type="resolution" value="2.30 A"/>
    <property type="chains" value="A=1-236"/>
</dbReference>
<dbReference type="PDB" id="2WI2">
    <property type="method" value="X-ray"/>
    <property type="resolution" value="2.09 A"/>
    <property type="chains" value="A/B=1-236"/>
</dbReference>
<dbReference type="PDB" id="2WI3">
    <property type="method" value="X-ray"/>
    <property type="resolution" value="1.90 A"/>
    <property type="chains" value="A=1-236"/>
</dbReference>
<dbReference type="PDB" id="2WI4">
    <property type="method" value="X-ray"/>
    <property type="resolution" value="2.40 A"/>
    <property type="chains" value="A=1-236"/>
</dbReference>
<dbReference type="PDB" id="2WI5">
    <property type="method" value="X-ray"/>
    <property type="resolution" value="2.10 A"/>
    <property type="chains" value="A=1-236"/>
</dbReference>
<dbReference type="PDB" id="2WI6">
    <property type="method" value="X-ray"/>
    <property type="resolution" value="2.18 A"/>
    <property type="chains" value="A=1-236"/>
</dbReference>
<dbReference type="PDB" id="2WI7">
    <property type="method" value="X-ray"/>
    <property type="resolution" value="2.50 A"/>
    <property type="chains" value="A=1-236"/>
</dbReference>
<dbReference type="PDB" id="2XAB">
    <property type="method" value="X-ray"/>
    <property type="resolution" value="1.90 A"/>
    <property type="chains" value="A/B=9-236"/>
</dbReference>
<dbReference type="PDB" id="2XDK">
    <property type="method" value="X-ray"/>
    <property type="resolution" value="1.97 A"/>
    <property type="chains" value="A=9-236"/>
</dbReference>
<dbReference type="PDB" id="2XDL">
    <property type="method" value="X-ray"/>
    <property type="resolution" value="1.98 A"/>
    <property type="chains" value="A=9-236"/>
</dbReference>
<dbReference type="PDB" id="2XDS">
    <property type="method" value="X-ray"/>
    <property type="resolution" value="1.97 A"/>
    <property type="chains" value="A=9-236"/>
</dbReference>
<dbReference type="PDB" id="2XDU">
    <property type="method" value="X-ray"/>
    <property type="resolution" value="1.74 A"/>
    <property type="chains" value="A=14-224"/>
</dbReference>
<dbReference type="PDB" id="2XDX">
    <property type="method" value="X-ray"/>
    <property type="resolution" value="2.42 A"/>
    <property type="chains" value="A=9-236"/>
</dbReference>
<dbReference type="PDB" id="2XHR">
    <property type="method" value="X-ray"/>
    <property type="resolution" value="2.20 A"/>
    <property type="chains" value="A=9-236"/>
</dbReference>
<dbReference type="PDB" id="2XHT">
    <property type="method" value="X-ray"/>
    <property type="resolution" value="2.27 A"/>
    <property type="chains" value="A=9-236"/>
</dbReference>
<dbReference type="PDB" id="2XHX">
    <property type="method" value="X-ray"/>
    <property type="resolution" value="2.80 A"/>
    <property type="chains" value="A=9-236"/>
</dbReference>
<dbReference type="PDB" id="2XJG">
    <property type="method" value="X-ray"/>
    <property type="resolution" value="2.25 A"/>
    <property type="chains" value="A=9-236"/>
</dbReference>
<dbReference type="PDB" id="2XJJ">
    <property type="method" value="X-ray"/>
    <property type="resolution" value="1.90 A"/>
    <property type="chains" value="A/B=9-236"/>
</dbReference>
<dbReference type="PDB" id="2XJX">
    <property type="method" value="X-ray"/>
    <property type="resolution" value="1.66 A"/>
    <property type="chains" value="A=9-236"/>
</dbReference>
<dbReference type="PDB" id="2XK2">
    <property type="method" value="X-ray"/>
    <property type="resolution" value="1.95 A"/>
    <property type="chains" value="A=9-236"/>
</dbReference>
<dbReference type="PDB" id="2YE2">
    <property type="method" value="X-ray"/>
    <property type="resolution" value="1.90 A"/>
    <property type="chains" value="A=9-236"/>
</dbReference>
<dbReference type="PDB" id="2YE3">
    <property type="method" value="X-ray"/>
    <property type="resolution" value="1.95 A"/>
    <property type="chains" value="A=9-236"/>
</dbReference>
<dbReference type="PDB" id="2YE4">
    <property type="method" value="X-ray"/>
    <property type="resolution" value="2.30 A"/>
    <property type="chains" value="A=9-236"/>
</dbReference>
<dbReference type="PDB" id="2YE5">
    <property type="method" value="X-ray"/>
    <property type="resolution" value="1.73 A"/>
    <property type="chains" value="A=9-236"/>
</dbReference>
<dbReference type="PDB" id="2YE6">
    <property type="method" value="X-ray"/>
    <property type="resolution" value="2.56 A"/>
    <property type="chains" value="A=9-236"/>
</dbReference>
<dbReference type="PDB" id="2YE7">
    <property type="method" value="X-ray"/>
    <property type="resolution" value="2.20 A"/>
    <property type="chains" value="A=9-236"/>
</dbReference>
<dbReference type="PDB" id="2YE8">
    <property type="method" value="X-ray"/>
    <property type="resolution" value="2.30 A"/>
    <property type="chains" value="A=9-236"/>
</dbReference>
<dbReference type="PDB" id="2YE9">
    <property type="method" value="X-ray"/>
    <property type="resolution" value="2.20 A"/>
    <property type="chains" value="A=9-236"/>
</dbReference>
<dbReference type="PDB" id="2YEA">
    <property type="method" value="X-ray"/>
    <property type="resolution" value="1.73 A"/>
    <property type="chains" value="A=9-236"/>
</dbReference>
<dbReference type="PDB" id="2YEB">
    <property type="method" value="X-ray"/>
    <property type="resolution" value="2.40 A"/>
    <property type="chains" value="A=9-236"/>
</dbReference>
<dbReference type="PDB" id="2YEC">
    <property type="method" value="X-ray"/>
    <property type="resolution" value="2.10 A"/>
    <property type="chains" value="A=9-236"/>
</dbReference>
<dbReference type="PDB" id="2YED">
    <property type="method" value="X-ray"/>
    <property type="resolution" value="2.10 A"/>
    <property type="chains" value="A=9-236"/>
</dbReference>
<dbReference type="PDB" id="2YEE">
    <property type="method" value="X-ray"/>
    <property type="resolution" value="2.30 A"/>
    <property type="chains" value="A=9-236"/>
</dbReference>
<dbReference type="PDB" id="2YEF">
    <property type="method" value="X-ray"/>
    <property type="resolution" value="1.55 A"/>
    <property type="chains" value="A=9-236"/>
</dbReference>
<dbReference type="PDB" id="2YEG">
    <property type="method" value="X-ray"/>
    <property type="resolution" value="2.50 A"/>
    <property type="chains" value="A/B=9-236"/>
</dbReference>
<dbReference type="PDB" id="2YEH">
    <property type="method" value="X-ray"/>
    <property type="resolution" value="2.10 A"/>
    <property type="chains" value="A=9-236"/>
</dbReference>
<dbReference type="PDB" id="2YEI">
    <property type="method" value="X-ray"/>
    <property type="resolution" value="2.20 A"/>
    <property type="chains" value="A=9-236"/>
</dbReference>
<dbReference type="PDB" id="2YEJ">
    <property type="method" value="X-ray"/>
    <property type="resolution" value="2.20 A"/>
    <property type="chains" value="A=9-236"/>
</dbReference>
<dbReference type="PDB" id="2YI0">
    <property type="method" value="X-ray"/>
    <property type="resolution" value="1.60 A"/>
    <property type="chains" value="A=1-229"/>
</dbReference>
<dbReference type="PDB" id="2YI5">
    <property type="method" value="X-ray"/>
    <property type="resolution" value="2.50 A"/>
    <property type="chains" value="A=1-229"/>
</dbReference>
<dbReference type="PDB" id="2YI6">
    <property type="method" value="X-ray"/>
    <property type="resolution" value="1.80 A"/>
    <property type="chains" value="A=1-229"/>
</dbReference>
<dbReference type="PDB" id="2YI7">
    <property type="method" value="X-ray"/>
    <property type="resolution" value="1.40 A"/>
    <property type="chains" value="A=1-229"/>
</dbReference>
<dbReference type="PDB" id="2YJW">
    <property type="method" value="X-ray"/>
    <property type="resolution" value="1.61 A"/>
    <property type="chains" value="A=18-223"/>
</dbReference>
<dbReference type="PDB" id="2YJX">
    <property type="method" value="X-ray"/>
    <property type="resolution" value="1.83 A"/>
    <property type="chains" value="A=18-223"/>
</dbReference>
<dbReference type="PDB" id="2YK2">
    <property type="method" value="X-ray"/>
    <property type="resolution" value="1.74 A"/>
    <property type="chains" value="A=18-223"/>
</dbReference>
<dbReference type="PDB" id="2YK9">
    <property type="method" value="X-ray"/>
    <property type="resolution" value="1.32 A"/>
    <property type="chains" value="A=18-223"/>
</dbReference>
<dbReference type="PDB" id="2YKB">
    <property type="method" value="X-ray"/>
    <property type="resolution" value="1.93 A"/>
    <property type="chains" value="A=18-223"/>
</dbReference>
<dbReference type="PDB" id="2YKC">
    <property type="method" value="X-ray"/>
    <property type="resolution" value="1.67 A"/>
    <property type="chains" value="A=18-223"/>
</dbReference>
<dbReference type="PDB" id="2YKE">
    <property type="method" value="X-ray"/>
    <property type="resolution" value="1.43 A"/>
    <property type="chains" value="A=18-223"/>
</dbReference>
<dbReference type="PDB" id="2YKI">
    <property type="method" value="X-ray"/>
    <property type="resolution" value="1.67 A"/>
    <property type="chains" value="A=18-223"/>
</dbReference>
<dbReference type="PDB" id="2YKJ">
    <property type="method" value="X-ray"/>
    <property type="resolution" value="1.46 A"/>
    <property type="chains" value="A=18-223"/>
</dbReference>
<dbReference type="PDB" id="3B24">
    <property type="method" value="X-ray"/>
    <property type="resolution" value="1.70 A"/>
    <property type="chains" value="A/B=9-236"/>
</dbReference>
<dbReference type="PDB" id="3B25">
    <property type="method" value="X-ray"/>
    <property type="resolution" value="1.75 A"/>
    <property type="chains" value="A=9-236"/>
</dbReference>
<dbReference type="PDB" id="3B26">
    <property type="method" value="X-ray"/>
    <property type="resolution" value="2.10 A"/>
    <property type="chains" value="A/B=9-236"/>
</dbReference>
<dbReference type="PDB" id="3B27">
    <property type="method" value="X-ray"/>
    <property type="resolution" value="1.50 A"/>
    <property type="chains" value="A=9-236"/>
</dbReference>
<dbReference type="PDB" id="3B28">
    <property type="method" value="X-ray"/>
    <property type="resolution" value="1.35 A"/>
    <property type="chains" value="A/B=9-236"/>
</dbReference>
<dbReference type="PDB" id="3BM9">
    <property type="method" value="X-ray"/>
    <property type="resolution" value="1.60 A"/>
    <property type="chains" value="A=14-236"/>
</dbReference>
<dbReference type="PDB" id="3BMY">
    <property type="method" value="X-ray"/>
    <property type="resolution" value="1.60 A"/>
    <property type="chains" value="A=14-236"/>
</dbReference>
<dbReference type="PDB" id="3D0B">
    <property type="method" value="X-ray"/>
    <property type="resolution" value="1.74 A"/>
    <property type="chains" value="A=1-232"/>
</dbReference>
<dbReference type="PDB" id="3EKO">
    <property type="method" value="X-ray"/>
    <property type="resolution" value="1.55 A"/>
    <property type="chains" value="A/B=9-225"/>
</dbReference>
<dbReference type="PDB" id="3EKR">
    <property type="method" value="X-ray"/>
    <property type="resolution" value="2.00 A"/>
    <property type="chains" value="A/B=9-225"/>
</dbReference>
<dbReference type="PDB" id="3FT5">
    <property type="method" value="X-ray"/>
    <property type="resolution" value="1.90 A"/>
    <property type="chains" value="A=9-236"/>
</dbReference>
<dbReference type="PDB" id="3FT8">
    <property type="method" value="X-ray"/>
    <property type="resolution" value="2.00 A"/>
    <property type="chains" value="A=9-236"/>
</dbReference>
<dbReference type="PDB" id="3HEK">
    <property type="method" value="X-ray"/>
    <property type="resolution" value="1.95 A"/>
    <property type="chains" value="A/B=9-225"/>
</dbReference>
<dbReference type="PDB" id="3HHU">
    <property type="method" value="X-ray"/>
    <property type="resolution" value="1.59 A"/>
    <property type="chains" value="A/B=1-224"/>
</dbReference>
<dbReference type="PDB" id="3HYY">
    <property type="method" value="X-ray"/>
    <property type="resolution" value="1.90 A"/>
    <property type="chains" value="A=9-236"/>
</dbReference>
<dbReference type="PDB" id="3HYZ">
    <property type="method" value="X-ray"/>
    <property type="resolution" value="2.30 A"/>
    <property type="chains" value="A/B=9-236"/>
</dbReference>
<dbReference type="PDB" id="3HZ1">
    <property type="method" value="X-ray"/>
    <property type="resolution" value="2.30 A"/>
    <property type="chains" value="A=9-236"/>
</dbReference>
<dbReference type="PDB" id="3HZ5">
    <property type="method" value="X-ray"/>
    <property type="resolution" value="1.90 A"/>
    <property type="chains" value="A=9-236"/>
</dbReference>
<dbReference type="PDB" id="3INW">
    <property type="method" value="X-ray"/>
    <property type="resolution" value="1.95 A"/>
    <property type="chains" value="A=10-236"/>
</dbReference>
<dbReference type="PDB" id="3INX">
    <property type="method" value="X-ray"/>
    <property type="resolution" value="1.75 A"/>
    <property type="chains" value="A=10-236"/>
</dbReference>
<dbReference type="PDB" id="3K97">
    <property type="method" value="X-ray"/>
    <property type="resolution" value="1.95 A"/>
    <property type="chains" value="A=9-236"/>
</dbReference>
<dbReference type="PDB" id="3K98">
    <property type="method" value="X-ray"/>
    <property type="resolution" value="2.40 A"/>
    <property type="chains" value="A/B=9-225"/>
</dbReference>
<dbReference type="PDB" id="3K99">
    <property type="method" value="X-ray"/>
    <property type="resolution" value="2.10 A"/>
    <property type="chains" value="A/B/C/D=9-225"/>
</dbReference>
<dbReference type="PDB" id="3MNR">
    <property type="method" value="X-ray"/>
    <property type="resolution" value="1.90 A"/>
    <property type="chains" value="P=1-232"/>
</dbReference>
<dbReference type="PDB" id="3O0I">
    <property type="method" value="X-ray"/>
    <property type="resolution" value="1.47 A"/>
    <property type="chains" value="A=1-236"/>
</dbReference>
<dbReference type="PDB" id="3OW6">
    <property type="method" value="X-ray"/>
    <property type="resolution" value="1.80 A"/>
    <property type="chains" value="A=17-223"/>
</dbReference>
<dbReference type="PDB" id="3OWB">
    <property type="method" value="X-ray"/>
    <property type="resolution" value="2.05 A"/>
    <property type="chains" value="A=17-223"/>
</dbReference>
<dbReference type="PDB" id="3OWD">
    <property type="method" value="X-ray"/>
    <property type="resolution" value="1.63 A"/>
    <property type="chains" value="A=17-223"/>
</dbReference>
<dbReference type="PDB" id="3Q6M">
    <property type="method" value="X-ray"/>
    <property type="resolution" value="3.00 A"/>
    <property type="chains" value="A/B/C=293-732"/>
</dbReference>
<dbReference type="PDB" id="3Q6N">
    <property type="method" value="X-ray"/>
    <property type="resolution" value="3.05 A"/>
    <property type="chains" value="A/B/C/D/E/F=293-732"/>
</dbReference>
<dbReference type="PDB" id="3QDD">
    <property type="method" value="X-ray"/>
    <property type="resolution" value="1.79 A"/>
    <property type="chains" value="A=1-236"/>
</dbReference>
<dbReference type="PDB" id="3QTF">
    <property type="method" value="X-ray"/>
    <property type="resolution" value="1.57 A"/>
    <property type="chains" value="A=14-236"/>
</dbReference>
<dbReference type="PDB" id="3R4M">
    <property type="method" value="X-ray"/>
    <property type="resolution" value="1.70 A"/>
    <property type="chains" value="A=9-236"/>
</dbReference>
<dbReference type="PDB" id="3R4N">
    <property type="method" value="X-ray"/>
    <property type="resolution" value="2.00 A"/>
    <property type="chains" value="A/B=9-225"/>
</dbReference>
<dbReference type="PDB" id="3R4O">
    <property type="method" value="X-ray"/>
    <property type="resolution" value="2.65 A"/>
    <property type="chains" value="A/B=9-225"/>
</dbReference>
<dbReference type="PDB" id="3R4P">
    <property type="method" value="X-ray"/>
    <property type="resolution" value="1.70 A"/>
    <property type="chains" value="A/B=9-225"/>
</dbReference>
<dbReference type="PDB" id="3R91">
    <property type="method" value="X-ray"/>
    <property type="resolution" value="1.58 A"/>
    <property type="chains" value="A=14-236"/>
</dbReference>
<dbReference type="PDB" id="3R92">
    <property type="method" value="X-ray"/>
    <property type="resolution" value="1.58 A"/>
    <property type="chains" value="A=14-236"/>
</dbReference>
<dbReference type="PDB" id="3RKZ">
    <property type="method" value="X-ray"/>
    <property type="resolution" value="1.57 A"/>
    <property type="chains" value="A=14-236"/>
</dbReference>
<dbReference type="PDB" id="3RLP">
    <property type="method" value="X-ray"/>
    <property type="resolution" value="1.70 A"/>
    <property type="chains" value="A/B=9-225"/>
</dbReference>
<dbReference type="PDB" id="3RLQ">
    <property type="method" value="X-ray"/>
    <property type="resolution" value="1.90 A"/>
    <property type="chains" value="A/B=9-225"/>
</dbReference>
<dbReference type="PDB" id="3RLR">
    <property type="method" value="X-ray"/>
    <property type="resolution" value="1.70 A"/>
    <property type="chains" value="A/B=9-225"/>
</dbReference>
<dbReference type="PDB" id="3T0H">
    <property type="method" value="X-ray"/>
    <property type="resolution" value="1.20 A"/>
    <property type="chains" value="A=9-236"/>
</dbReference>
<dbReference type="PDB" id="3T0Z">
    <property type="method" value="X-ray"/>
    <property type="resolution" value="2.19 A"/>
    <property type="chains" value="A=9-236"/>
</dbReference>
<dbReference type="PDB" id="3T10">
    <property type="method" value="X-ray"/>
    <property type="resolution" value="1.24 A"/>
    <property type="chains" value="A=9-236"/>
</dbReference>
<dbReference type="PDB" id="3T1K">
    <property type="method" value="X-ray"/>
    <property type="resolution" value="1.50 A"/>
    <property type="chains" value="A/B=9-236"/>
</dbReference>
<dbReference type="PDB" id="3T2S">
    <property type="method" value="X-ray"/>
    <property type="resolution" value="1.50 A"/>
    <property type="chains" value="A/B=9-236"/>
</dbReference>
<dbReference type="PDB" id="3TUH">
    <property type="method" value="X-ray"/>
    <property type="resolution" value="1.80 A"/>
    <property type="chains" value="A/B=16-224"/>
</dbReference>
<dbReference type="PDB" id="3VHA">
    <property type="method" value="X-ray"/>
    <property type="resolution" value="1.39 A"/>
    <property type="chains" value="A=9-236"/>
</dbReference>
<dbReference type="PDB" id="3VHC">
    <property type="method" value="X-ray"/>
    <property type="resolution" value="1.41 A"/>
    <property type="chains" value="A=9-236"/>
</dbReference>
<dbReference type="PDB" id="3VHD">
    <property type="method" value="X-ray"/>
    <property type="resolution" value="1.52 A"/>
    <property type="chains" value="A/B=9-236"/>
</dbReference>
<dbReference type="PDB" id="3WHA">
    <property type="method" value="X-ray"/>
    <property type="resolution" value="1.30 A"/>
    <property type="chains" value="A/B=9-236"/>
</dbReference>
<dbReference type="PDB" id="3WQ9">
    <property type="method" value="X-ray"/>
    <property type="resolution" value="1.80 A"/>
    <property type="chains" value="A=1-236"/>
</dbReference>
<dbReference type="PDB" id="4AIF">
    <property type="method" value="X-ray"/>
    <property type="resolution" value="2.01 A"/>
    <property type="chains" value="D/E=726-732"/>
</dbReference>
<dbReference type="PDB" id="4AWO">
    <property type="method" value="X-ray"/>
    <property type="resolution" value="1.70 A"/>
    <property type="chains" value="A/B=9-236"/>
</dbReference>
<dbReference type="PDB" id="4AWP">
    <property type="method" value="X-ray"/>
    <property type="resolution" value="1.82 A"/>
    <property type="chains" value="A/B=9-236"/>
</dbReference>
<dbReference type="PDB" id="4AWQ">
    <property type="method" value="X-ray"/>
    <property type="resolution" value="1.60 A"/>
    <property type="chains" value="A/B=9-236"/>
</dbReference>
<dbReference type="PDB" id="4B7P">
    <property type="method" value="X-ray"/>
    <property type="resolution" value="1.70 A"/>
    <property type="chains" value="A=9-236"/>
</dbReference>
<dbReference type="PDB" id="4BQG">
    <property type="method" value="X-ray"/>
    <property type="resolution" value="1.90 A"/>
    <property type="chains" value="A=9-236"/>
</dbReference>
<dbReference type="PDB" id="4BQJ">
    <property type="method" value="X-ray"/>
    <property type="resolution" value="2.00 A"/>
    <property type="chains" value="A=9-236"/>
</dbReference>
<dbReference type="PDB" id="4CGQ">
    <property type="method" value="X-ray"/>
    <property type="resolution" value="2.00 A"/>
    <property type="chains" value="Q=726-732"/>
</dbReference>
<dbReference type="PDB" id="4CGU">
    <property type="method" value="X-ray"/>
    <property type="resolution" value="2.11 A"/>
    <property type="chains" value="C=726-732"/>
</dbReference>
<dbReference type="PDB" id="4CGV">
    <property type="method" value="X-ray"/>
    <property type="resolution" value="2.54 A"/>
    <property type="chains" value="E/F=726-732"/>
</dbReference>
<dbReference type="PDB" id="4CGW">
    <property type="method" value="X-ray"/>
    <property type="resolution" value="3.00 A"/>
    <property type="chains" value="C/D=726-732"/>
</dbReference>
<dbReference type="PDB" id="4CWF">
    <property type="method" value="X-ray"/>
    <property type="resolution" value="2.00 A"/>
    <property type="chains" value="A=9-236"/>
</dbReference>
<dbReference type="PDB" id="4CWN">
    <property type="method" value="X-ray"/>
    <property type="resolution" value="1.80 A"/>
    <property type="chains" value="A=9-236"/>
</dbReference>
<dbReference type="PDB" id="4CWO">
    <property type="method" value="X-ray"/>
    <property type="resolution" value="2.31 A"/>
    <property type="chains" value="A=9-236"/>
</dbReference>
<dbReference type="PDB" id="4CWP">
    <property type="method" value="X-ray"/>
    <property type="resolution" value="1.95 A"/>
    <property type="chains" value="A=9-236"/>
</dbReference>
<dbReference type="PDB" id="4CWQ">
    <property type="method" value="X-ray"/>
    <property type="resolution" value="2.00 A"/>
    <property type="chains" value="A=9-236"/>
</dbReference>
<dbReference type="PDB" id="4CWR">
    <property type="method" value="X-ray"/>
    <property type="resolution" value="2.00 A"/>
    <property type="chains" value="A=9-236"/>
</dbReference>
<dbReference type="PDB" id="4CWS">
    <property type="method" value="X-ray"/>
    <property type="resolution" value="2.30 A"/>
    <property type="chains" value="A=9-236"/>
</dbReference>
<dbReference type="PDB" id="4CWT">
    <property type="method" value="X-ray"/>
    <property type="resolution" value="1.90 A"/>
    <property type="chains" value="A=9-236"/>
</dbReference>
<dbReference type="PDB" id="4EEH">
    <property type="method" value="X-ray"/>
    <property type="resolution" value="1.60 A"/>
    <property type="chains" value="A=9-236"/>
</dbReference>
<dbReference type="PDB" id="4EFT">
    <property type="method" value="X-ray"/>
    <property type="resolution" value="2.12 A"/>
    <property type="chains" value="A=9-236"/>
</dbReference>
<dbReference type="PDB" id="4EFU">
    <property type="method" value="X-ray"/>
    <property type="resolution" value="2.00 A"/>
    <property type="chains" value="A=9-236"/>
</dbReference>
<dbReference type="PDB" id="4EGH">
    <property type="method" value="X-ray"/>
    <property type="resolution" value="1.60 A"/>
    <property type="chains" value="A=9-236"/>
</dbReference>
<dbReference type="PDB" id="4EGI">
    <property type="method" value="X-ray"/>
    <property type="resolution" value="1.79 A"/>
    <property type="chains" value="A=9-236"/>
</dbReference>
<dbReference type="PDB" id="4EGK">
    <property type="method" value="X-ray"/>
    <property type="resolution" value="1.69 A"/>
    <property type="chains" value="A=9-236"/>
</dbReference>
<dbReference type="PDB" id="4FCP">
    <property type="method" value="X-ray"/>
    <property type="resolution" value="2.00 A"/>
    <property type="chains" value="A/B=1-236"/>
</dbReference>
<dbReference type="PDB" id="4FCQ">
    <property type="method" value="X-ray"/>
    <property type="resolution" value="2.15 A"/>
    <property type="chains" value="A=1-236"/>
</dbReference>
<dbReference type="PDB" id="4FCR">
    <property type="method" value="X-ray"/>
    <property type="resolution" value="1.70 A"/>
    <property type="chains" value="A=1-236"/>
</dbReference>
<dbReference type="PDB" id="4HY6">
    <property type="method" value="X-ray"/>
    <property type="resolution" value="1.65 A"/>
    <property type="chains" value="A=9-236"/>
</dbReference>
<dbReference type="PDB" id="4JQL">
    <property type="method" value="X-ray"/>
    <property type="resolution" value="1.72 A"/>
    <property type="chains" value="A=9-236"/>
</dbReference>
<dbReference type="PDB" id="4L8Z">
    <property type="method" value="X-ray"/>
    <property type="resolution" value="1.70 A"/>
    <property type="chains" value="A=9-236"/>
</dbReference>
<dbReference type="PDB" id="4L90">
    <property type="method" value="X-ray"/>
    <property type="resolution" value="2.00 A"/>
    <property type="chains" value="A=9-236"/>
</dbReference>
<dbReference type="PDB" id="4L91">
    <property type="method" value="X-ray"/>
    <property type="resolution" value="1.75 A"/>
    <property type="chains" value="A=9-236"/>
</dbReference>
<dbReference type="PDB" id="4L93">
    <property type="method" value="X-ray"/>
    <property type="resolution" value="1.84 A"/>
    <property type="chains" value="A/B=9-236"/>
</dbReference>
<dbReference type="PDB" id="4L94">
    <property type="method" value="X-ray"/>
    <property type="resolution" value="1.65 A"/>
    <property type="chains" value="A=9-236"/>
</dbReference>
<dbReference type="PDB" id="4LWE">
    <property type="method" value="X-ray"/>
    <property type="resolution" value="1.50 A"/>
    <property type="chains" value="A=17-224"/>
</dbReference>
<dbReference type="PDB" id="4LWF">
    <property type="method" value="X-ray"/>
    <property type="resolution" value="1.75 A"/>
    <property type="chains" value="A=17-224"/>
</dbReference>
<dbReference type="PDB" id="4LWG">
    <property type="method" value="X-ray"/>
    <property type="resolution" value="1.60 A"/>
    <property type="chains" value="A=17-224"/>
</dbReference>
<dbReference type="PDB" id="4LWH">
    <property type="method" value="X-ray"/>
    <property type="resolution" value="1.70 A"/>
    <property type="chains" value="A=16-224"/>
</dbReference>
<dbReference type="PDB" id="4LWI">
    <property type="method" value="X-ray"/>
    <property type="resolution" value="1.70 A"/>
    <property type="chains" value="A=17-224"/>
</dbReference>
<dbReference type="PDB" id="4NH7">
    <property type="method" value="X-ray"/>
    <property type="resolution" value="2.00 A"/>
    <property type="chains" value="A/B=9-236"/>
</dbReference>
<dbReference type="PDB" id="4NH8">
    <property type="method" value="X-ray"/>
    <property type="resolution" value="1.65 A"/>
    <property type="chains" value="A=9-236"/>
</dbReference>
<dbReference type="PDB" id="4O04">
    <property type="method" value="X-ray"/>
    <property type="resolution" value="1.82 A"/>
    <property type="chains" value="A=9-236"/>
</dbReference>
<dbReference type="PDB" id="4O05">
    <property type="method" value="X-ray"/>
    <property type="resolution" value="1.79 A"/>
    <property type="chains" value="A=9-236"/>
</dbReference>
<dbReference type="PDB" id="4O07">
    <property type="method" value="X-ray"/>
    <property type="resolution" value="1.86 A"/>
    <property type="chains" value="A=9-236"/>
</dbReference>
<dbReference type="PDB" id="4O09">
    <property type="method" value="X-ray"/>
    <property type="resolution" value="1.96 A"/>
    <property type="chains" value="A=9-236"/>
</dbReference>
<dbReference type="PDB" id="4O0B">
    <property type="method" value="X-ray"/>
    <property type="resolution" value="1.93 A"/>
    <property type="chains" value="A=9-236"/>
</dbReference>
<dbReference type="PDB" id="4R3M">
    <property type="method" value="X-ray"/>
    <property type="resolution" value="1.80 A"/>
    <property type="chains" value="A=16-224"/>
</dbReference>
<dbReference type="PDB" id="4U93">
    <property type="method" value="X-ray"/>
    <property type="resolution" value="1.55 A"/>
    <property type="chains" value="A=1-236"/>
</dbReference>
<dbReference type="PDB" id="4W7T">
    <property type="method" value="X-ray"/>
    <property type="resolution" value="1.80 A"/>
    <property type="chains" value="A=1-236"/>
</dbReference>
<dbReference type="PDB" id="4XIP">
    <property type="method" value="X-ray"/>
    <property type="resolution" value="1.70 A"/>
    <property type="chains" value="A=9-236"/>
</dbReference>
<dbReference type="PDB" id="4XIQ">
    <property type="method" value="X-ray"/>
    <property type="resolution" value="1.84 A"/>
    <property type="chains" value="A=9-236"/>
</dbReference>
<dbReference type="PDB" id="4XIR">
    <property type="method" value="X-ray"/>
    <property type="resolution" value="1.70 A"/>
    <property type="chains" value="A=9-236"/>
</dbReference>
<dbReference type="PDB" id="4XIT">
    <property type="method" value="X-ray"/>
    <property type="resolution" value="1.86 A"/>
    <property type="chains" value="A=9-236"/>
</dbReference>
<dbReference type="PDB" id="4YKQ">
    <property type="method" value="X-ray"/>
    <property type="resolution" value="1.91 A"/>
    <property type="chains" value="A=2-236"/>
</dbReference>
<dbReference type="PDB" id="4YKR">
    <property type="method" value="X-ray"/>
    <property type="resolution" value="1.61 A"/>
    <property type="chains" value="A=2-236"/>
</dbReference>
<dbReference type="PDB" id="4YKT">
    <property type="method" value="X-ray"/>
    <property type="resolution" value="1.85 A"/>
    <property type="chains" value="A=2-236"/>
</dbReference>
<dbReference type="PDB" id="4YKU">
    <property type="method" value="X-ray"/>
    <property type="resolution" value="1.70 A"/>
    <property type="chains" value="A=2-236"/>
</dbReference>
<dbReference type="PDB" id="4YKW">
    <property type="method" value="X-ray"/>
    <property type="resolution" value="1.85 A"/>
    <property type="chains" value="A/B=2-236"/>
</dbReference>
<dbReference type="PDB" id="4YKX">
    <property type="method" value="X-ray"/>
    <property type="resolution" value="1.80 A"/>
    <property type="chains" value="A=2-236"/>
</dbReference>
<dbReference type="PDB" id="4YKY">
    <property type="method" value="X-ray"/>
    <property type="resolution" value="1.78 A"/>
    <property type="chains" value="A=2-236"/>
</dbReference>
<dbReference type="PDB" id="4YKZ">
    <property type="method" value="X-ray"/>
    <property type="resolution" value="1.85 A"/>
    <property type="chains" value="A=2-236"/>
</dbReference>
<dbReference type="PDB" id="5CF0">
    <property type="method" value="X-ray"/>
    <property type="resolution" value="1.80 A"/>
    <property type="chains" value="A=9-236"/>
</dbReference>
<dbReference type="PDB" id="5FNC">
    <property type="method" value="X-ray"/>
    <property type="resolution" value="2.20 A"/>
    <property type="chains" value="A=1-236"/>
</dbReference>
<dbReference type="PDB" id="5FND">
    <property type="method" value="X-ray"/>
    <property type="resolution" value="2.00 A"/>
    <property type="chains" value="A=1-236"/>
</dbReference>
<dbReference type="PDB" id="5FNF">
    <property type="method" value="X-ray"/>
    <property type="resolution" value="2.10 A"/>
    <property type="chains" value="A=1-236"/>
</dbReference>
<dbReference type="PDB" id="5GGZ">
    <property type="method" value="X-ray"/>
    <property type="resolution" value="2.02 A"/>
    <property type="chains" value="A/B/C/D=16-225"/>
</dbReference>
<dbReference type="PDB" id="5J20">
    <property type="method" value="X-ray"/>
    <property type="resolution" value="1.76 A"/>
    <property type="chains" value="A=17-223"/>
</dbReference>
<dbReference type="PDB" id="5J27">
    <property type="method" value="X-ray"/>
    <property type="resolution" value="1.70 A"/>
    <property type="chains" value="A=16-224"/>
</dbReference>
<dbReference type="PDB" id="5J2V">
    <property type="method" value="X-ray"/>
    <property type="resolution" value="1.59 A"/>
    <property type="chains" value="A=17-223"/>
</dbReference>
<dbReference type="PDB" id="5J2X">
    <property type="method" value="X-ray"/>
    <property type="resolution" value="1.22 A"/>
    <property type="chains" value="A=17-224"/>
</dbReference>
<dbReference type="PDB" id="5J64">
    <property type="method" value="X-ray"/>
    <property type="resolution" value="1.38 A"/>
    <property type="chains" value="A=9-236"/>
</dbReference>
<dbReference type="PDB" id="5J6L">
    <property type="method" value="X-ray"/>
    <property type="resolution" value="1.75 A"/>
    <property type="chains" value="A=9-236"/>
</dbReference>
<dbReference type="PDB" id="5J6M">
    <property type="method" value="X-ray"/>
    <property type="resolution" value="1.64 A"/>
    <property type="chains" value="A=9-234"/>
</dbReference>
<dbReference type="PDB" id="5J6N">
    <property type="method" value="X-ray"/>
    <property type="resolution" value="1.90 A"/>
    <property type="chains" value="A=9-234"/>
</dbReference>
<dbReference type="PDB" id="5J80">
    <property type="method" value="X-ray"/>
    <property type="resolution" value="1.17 A"/>
    <property type="chains" value="A=9-233"/>
</dbReference>
<dbReference type="PDB" id="5J82">
    <property type="method" value="X-ray"/>
    <property type="resolution" value="2.17 A"/>
    <property type="chains" value="A=9-233"/>
</dbReference>
<dbReference type="PDB" id="5J86">
    <property type="method" value="X-ray"/>
    <property type="resolution" value="1.87 A"/>
    <property type="chains" value="A=9-233"/>
</dbReference>
<dbReference type="PDB" id="5J8M">
    <property type="method" value="X-ray"/>
    <property type="resolution" value="1.90 A"/>
    <property type="chains" value="A/B=9-233"/>
</dbReference>
<dbReference type="PDB" id="5J8U">
    <property type="method" value="X-ray"/>
    <property type="resolution" value="1.75 A"/>
    <property type="chains" value="A/B=9-233"/>
</dbReference>
<dbReference type="PDB" id="5J9X">
    <property type="method" value="X-ray"/>
    <property type="resolution" value="1.80 A"/>
    <property type="chains" value="A=9-233"/>
</dbReference>
<dbReference type="PDB" id="5LNY">
    <property type="method" value="X-ray"/>
    <property type="resolution" value="1.88 A"/>
    <property type="chains" value="A=9-236"/>
</dbReference>
<dbReference type="PDB" id="5LNZ">
    <property type="method" value="X-ray"/>
    <property type="resolution" value="1.54 A"/>
    <property type="chains" value="A=9-236"/>
</dbReference>
<dbReference type="PDB" id="5LO0">
    <property type="method" value="X-ray"/>
    <property type="resolution" value="2.30 A"/>
    <property type="chains" value="A=9-236"/>
</dbReference>
<dbReference type="PDB" id="5LO1">
    <property type="method" value="X-ray"/>
    <property type="resolution" value="2.70 A"/>
    <property type="chains" value="A=9-236"/>
</dbReference>
<dbReference type="PDB" id="5LO5">
    <property type="method" value="X-ray"/>
    <property type="resolution" value="1.44 A"/>
    <property type="chains" value="A=9-236"/>
</dbReference>
<dbReference type="PDB" id="5LO6">
    <property type="method" value="X-ray"/>
    <property type="resolution" value="2.40 A"/>
    <property type="chains" value="A=9-236"/>
</dbReference>
<dbReference type="PDB" id="5LQ9">
    <property type="method" value="X-ray"/>
    <property type="resolution" value="1.90 A"/>
    <property type="chains" value="A=17-223"/>
</dbReference>
<dbReference type="PDB" id="5LR1">
    <property type="method" value="X-ray"/>
    <property type="resolution" value="1.44 A"/>
    <property type="chains" value="A=18-223"/>
</dbReference>
<dbReference type="PDB" id="5LR7">
    <property type="method" value="X-ray"/>
    <property type="resolution" value="1.86 A"/>
    <property type="chains" value="A=18-223"/>
</dbReference>
<dbReference type="PDB" id="5LRL">
    <property type="method" value="X-ray"/>
    <property type="resolution" value="1.33 A"/>
    <property type="chains" value="A=18-223"/>
</dbReference>
<dbReference type="PDB" id="5LRZ">
    <property type="method" value="X-ray"/>
    <property type="resolution" value="2.00 A"/>
    <property type="chains" value="A=18-223"/>
</dbReference>
<dbReference type="PDB" id="5LS1">
    <property type="method" value="X-ray"/>
    <property type="resolution" value="1.85 A"/>
    <property type="chains" value="A=17-223"/>
</dbReference>
<dbReference type="PDB" id="5M4E">
    <property type="method" value="X-ray"/>
    <property type="resolution" value="1.90 A"/>
    <property type="chains" value="A=9-236"/>
</dbReference>
<dbReference type="PDB" id="5M4H">
    <property type="method" value="X-ray"/>
    <property type="resolution" value="2.00 A"/>
    <property type="chains" value="A=9-236"/>
</dbReference>
<dbReference type="PDB" id="5NYH">
    <property type="method" value="X-ray"/>
    <property type="resolution" value="1.65 A"/>
    <property type="chains" value="A=9-236"/>
</dbReference>
<dbReference type="PDB" id="5NYI">
    <property type="method" value="X-ray"/>
    <property type="resolution" value="1.44 A"/>
    <property type="chains" value="A=9-235"/>
</dbReference>
<dbReference type="PDB" id="5OCI">
    <property type="method" value="X-ray"/>
    <property type="resolution" value="1.62 A"/>
    <property type="chains" value="A=9-236"/>
</dbReference>
<dbReference type="PDB" id="5OD7">
    <property type="method" value="X-ray"/>
    <property type="resolution" value="2.00 A"/>
    <property type="chains" value="A=9-236"/>
</dbReference>
<dbReference type="PDB" id="5ODX">
    <property type="method" value="X-ray"/>
    <property type="resolution" value="1.82 A"/>
    <property type="chains" value="A=9-236"/>
</dbReference>
<dbReference type="PDB" id="5T21">
    <property type="method" value="X-ray"/>
    <property type="resolution" value="2.10 A"/>
    <property type="chains" value="A=18-223"/>
</dbReference>
<dbReference type="PDB" id="5VYY">
    <property type="method" value="X-ray"/>
    <property type="resolution" value="1.79 A"/>
    <property type="chains" value="A=1-236"/>
</dbReference>
<dbReference type="PDB" id="5XQD">
    <property type="method" value="X-ray"/>
    <property type="resolution" value="1.60 A"/>
    <property type="chains" value="A=9-236"/>
</dbReference>
<dbReference type="PDB" id="5XQE">
    <property type="method" value="X-ray"/>
    <property type="resolution" value="1.70 A"/>
    <property type="chains" value="A=9-236"/>
</dbReference>
<dbReference type="PDB" id="5XR5">
    <property type="method" value="X-ray"/>
    <property type="resolution" value="1.60 A"/>
    <property type="chains" value="A=9-236"/>
</dbReference>
<dbReference type="PDB" id="5XR9">
    <property type="method" value="X-ray"/>
    <property type="resolution" value="1.50 A"/>
    <property type="chains" value="A=9-236"/>
</dbReference>
<dbReference type="PDB" id="5XRB">
    <property type="method" value="X-ray"/>
    <property type="resolution" value="1.65 A"/>
    <property type="chains" value="A=9-236"/>
</dbReference>
<dbReference type="PDB" id="5XRD">
    <property type="method" value="X-ray"/>
    <property type="resolution" value="1.30 A"/>
    <property type="chains" value="A=9-236"/>
</dbReference>
<dbReference type="PDB" id="5XRE">
    <property type="method" value="X-ray"/>
    <property type="resolution" value="1.50 A"/>
    <property type="chains" value="A=9-236"/>
</dbReference>
<dbReference type="PDB" id="5ZR3">
    <property type="method" value="X-ray"/>
    <property type="resolution" value="2.50 A"/>
    <property type="chains" value="A/C/E/G=1-236"/>
</dbReference>
<dbReference type="PDB" id="6B99">
    <property type="method" value="X-ray"/>
    <property type="resolution" value="1.60 A"/>
    <property type="chains" value="A=1-236"/>
</dbReference>
<dbReference type="PDB" id="6B9A">
    <property type="method" value="X-ray"/>
    <property type="resolution" value="1.65 A"/>
    <property type="chains" value="A/B=1-236"/>
</dbReference>
<dbReference type="PDB" id="6CEO">
    <property type="method" value="X-ray"/>
    <property type="resolution" value="1.90 A"/>
    <property type="chains" value="A=1-236"/>
</dbReference>
<dbReference type="PDB" id="6CYG">
    <property type="method" value="X-ray"/>
    <property type="resolution" value="1.50 A"/>
    <property type="chains" value="A/B=1-236"/>
</dbReference>
<dbReference type="PDB" id="6CYH">
    <property type="method" value="X-ray"/>
    <property type="resolution" value="1.49 A"/>
    <property type="chains" value="A/B=1-236"/>
</dbReference>
<dbReference type="PDB" id="6EI5">
    <property type="method" value="X-ray"/>
    <property type="resolution" value="2.20 A"/>
    <property type="chains" value="A=15-223"/>
</dbReference>
<dbReference type="PDB" id="6EL5">
    <property type="method" value="X-ray"/>
    <property type="resolution" value="1.67 A"/>
    <property type="chains" value="A=1-236"/>
</dbReference>
<dbReference type="PDB" id="6ELN">
    <property type="method" value="X-ray"/>
    <property type="resolution" value="1.60 A"/>
    <property type="chains" value="A=17-223"/>
</dbReference>
<dbReference type="PDB" id="6ELO">
    <property type="method" value="X-ray"/>
    <property type="resolution" value="1.80 A"/>
    <property type="chains" value="A=1-236"/>
</dbReference>
<dbReference type="PDB" id="6ELP">
    <property type="method" value="X-ray"/>
    <property type="resolution" value="1.85 A"/>
    <property type="chains" value="A=1-236"/>
</dbReference>
<dbReference type="PDB" id="6EY8">
    <property type="method" value="X-ray"/>
    <property type="resolution" value="2.16 A"/>
    <property type="chains" value="A=1-236"/>
</dbReference>
<dbReference type="PDB" id="6EY9">
    <property type="method" value="X-ray"/>
    <property type="resolution" value="2.00 A"/>
    <property type="chains" value="A=1-236"/>
</dbReference>
<dbReference type="PDB" id="6EYA">
    <property type="method" value="X-ray"/>
    <property type="resolution" value="2.10 A"/>
    <property type="chains" value="A=1-236"/>
</dbReference>
<dbReference type="PDB" id="6EYB">
    <property type="method" value="X-ray"/>
    <property type="resolution" value="1.90 A"/>
    <property type="chains" value="A=1-236"/>
</dbReference>
<dbReference type="PDB" id="6F1N">
    <property type="method" value="X-ray"/>
    <property type="resolution" value="2.09 A"/>
    <property type="chains" value="A=1-236"/>
</dbReference>
<dbReference type="PDB" id="6FCJ">
    <property type="method" value="X-ray"/>
    <property type="resolution" value="2.49 A"/>
    <property type="chains" value="A=9-236"/>
</dbReference>
<dbReference type="PDB" id="6FDP">
    <property type="method" value="NMR"/>
    <property type="chains" value="B=724-732"/>
</dbReference>
<dbReference type="PDB" id="6GP4">
    <property type="method" value="X-ray"/>
    <property type="resolution" value="1.70 A"/>
    <property type="chains" value="A=1-236"/>
</dbReference>
<dbReference type="PDB" id="6GP8">
    <property type="method" value="X-ray"/>
    <property type="resolution" value="1.75 A"/>
    <property type="chains" value="A=1-236"/>
</dbReference>
<dbReference type="PDB" id="6GPF">
    <property type="method" value="X-ray"/>
    <property type="resolution" value="1.55 A"/>
    <property type="chains" value="A=1-236"/>
</dbReference>
<dbReference type="PDB" id="6GPH">
    <property type="method" value="X-ray"/>
    <property type="resolution" value="1.56 A"/>
    <property type="chains" value="A=1-236"/>
</dbReference>
<dbReference type="PDB" id="6GPO">
    <property type="method" value="X-ray"/>
    <property type="resolution" value="1.48 A"/>
    <property type="chains" value="A=1-236"/>
</dbReference>
<dbReference type="PDB" id="6GPP">
    <property type="method" value="X-ray"/>
    <property type="resolution" value="1.51 A"/>
    <property type="chains" value="A=1-236"/>
</dbReference>
<dbReference type="PDB" id="6GPR">
    <property type="method" value="X-ray"/>
    <property type="resolution" value="2.35 A"/>
    <property type="chains" value="A=1-236"/>
</dbReference>
<dbReference type="PDB" id="6GPT">
    <property type="method" value="X-ray"/>
    <property type="resolution" value="2.00 A"/>
    <property type="chains" value="A=1-236"/>
</dbReference>
<dbReference type="PDB" id="6GPW">
    <property type="method" value="X-ray"/>
    <property type="resolution" value="1.60 A"/>
    <property type="chains" value="A=1-236"/>
</dbReference>
<dbReference type="PDB" id="6GPY">
    <property type="method" value="X-ray"/>
    <property type="resolution" value="2.25 A"/>
    <property type="chains" value="A=1-236"/>
</dbReference>
<dbReference type="PDB" id="6GQ6">
    <property type="method" value="X-ray"/>
    <property type="resolution" value="2.25 A"/>
    <property type="chains" value="A=1-236"/>
</dbReference>
<dbReference type="PDB" id="6GQR">
    <property type="method" value="X-ray"/>
    <property type="resolution" value="2.05 A"/>
    <property type="chains" value="A=1-236"/>
</dbReference>
<dbReference type="PDB" id="6GQS">
    <property type="method" value="X-ray"/>
    <property type="resolution" value="1.43 A"/>
    <property type="chains" value="A=1-236"/>
</dbReference>
<dbReference type="PDB" id="6GQU">
    <property type="method" value="X-ray"/>
    <property type="resolution" value="1.72 A"/>
    <property type="chains" value="A=1-236"/>
</dbReference>
<dbReference type="PDB" id="6GR1">
    <property type="method" value="X-ray"/>
    <property type="resolution" value="2.05 A"/>
    <property type="chains" value="A=1-236"/>
</dbReference>
<dbReference type="PDB" id="6GR3">
    <property type="method" value="X-ray"/>
    <property type="resolution" value="1.88 A"/>
    <property type="chains" value="A=1-236"/>
</dbReference>
<dbReference type="PDB" id="6GR4">
    <property type="method" value="X-ray"/>
    <property type="resolution" value="1.50 A"/>
    <property type="chains" value="A=1-236"/>
</dbReference>
<dbReference type="PDB" id="6GR5">
    <property type="method" value="X-ray"/>
    <property type="resolution" value="1.34 A"/>
    <property type="chains" value="A=1-236"/>
</dbReference>
<dbReference type="PDB" id="6HHR">
    <property type="method" value="X-ray"/>
    <property type="resolution" value="2.00 A"/>
    <property type="chains" value="A=17-224"/>
</dbReference>
<dbReference type="PDB" id="6KSQ">
    <property type="method" value="X-ray"/>
    <property type="resolution" value="2.20 A"/>
    <property type="chains" value="A=293-554"/>
</dbReference>
<dbReference type="PDB" id="6LR9">
    <property type="method" value="X-ray"/>
    <property type="resolution" value="2.20 A"/>
    <property type="chains" value="A=9-236"/>
</dbReference>
<dbReference type="PDB" id="6LSZ">
    <property type="method" value="X-ray"/>
    <property type="resolution" value="1.99 A"/>
    <property type="chains" value="A=9-236"/>
</dbReference>
<dbReference type="PDB" id="6LT8">
    <property type="method" value="X-ray"/>
    <property type="resolution" value="1.59 A"/>
    <property type="chains" value="A=9-236"/>
</dbReference>
<dbReference type="PDB" id="6LTI">
    <property type="method" value="X-ray"/>
    <property type="resolution" value="1.59 A"/>
    <property type="chains" value="A=9-236"/>
</dbReference>
<dbReference type="PDB" id="6LTK">
    <property type="method" value="X-ray"/>
    <property type="resolution" value="2.14 A"/>
    <property type="chains" value="A=9-236"/>
</dbReference>
<dbReference type="PDB" id="6N8X">
    <property type="method" value="X-ray"/>
    <property type="resolution" value="1.49 A"/>
    <property type="chains" value="A=1-236"/>
</dbReference>
<dbReference type="PDB" id="6OLX">
    <property type="method" value="X-ray"/>
    <property type="resolution" value="1.44 A"/>
    <property type="chains" value="A=1-236"/>
</dbReference>
<dbReference type="PDB" id="6TN4">
    <property type="method" value="X-ray"/>
    <property type="resolution" value="1.27 A"/>
    <property type="chains" value="AAA=9-236"/>
</dbReference>
<dbReference type="PDB" id="6TN5">
    <property type="method" value="X-ray"/>
    <property type="resolution" value="1.17 A"/>
    <property type="chains" value="AAA=9-236"/>
</dbReference>
<dbReference type="PDB" id="6U98">
    <property type="method" value="X-ray"/>
    <property type="resolution" value="1.50 A"/>
    <property type="chains" value="A=2-236"/>
</dbReference>
<dbReference type="PDB" id="6U99">
    <property type="method" value="X-ray"/>
    <property type="resolution" value="1.60 A"/>
    <property type="chains" value="A=2-236"/>
</dbReference>
<dbReference type="PDB" id="6U9A">
    <property type="method" value="X-ray"/>
    <property type="resolution" value="1.65 A"/>
    <property type="chains" value="A=2-236"/>
</dbReference>
<dbReference type="PDB" id="6U9B">
    <property type="method" value="X-ray"/>
    <property type="resolution" value="1.75 A"/>
    <property type="chains" value="A=2-236"/>
</dbReference>
<dbReference type="PDB" id="7DMC">
    <property type="method" value="X-ray"/>
    <property type="resolution" value="2.34 A"/>
    <property type="chains" value="A=16-224"/>
</dbReference>
<dbReference type="PDB" id="7KRJ">
    <property type="method" value="EM"/>
    <property type="resolution" value="2.56 A"/>
    <property type="chains" value="A/B=1-732"/>
</dbReference>
<dbReference type="PDB" id="7KW7">
    <property type="method" value="EM"/>
    <property type="resolution" value="3.57 A"/>
    <property type="chains" value="A/B=1-732"/>
</dbReference>
<dbReference type="PDB" id="7L7I">
    <property type="method" value="EM"/>
    <property type="resolution" value="3.30 A"/>
    <property type="chains" value="A/B=1-732"/>
</dbReference>
<dbReference type="PDB" id="7L7J">
    <property type="method" value="EM"/>
    <property type="resolution" value="3.10 A"/>
    <property type="chains" value="A/B=1-732"/>
</dbReference>
<dbReference type="PDB" id="7LSZ">
    <property type="method" value="X-ray"/>
    <property type="resolution" value="1.70 A"/>
    <property type="chains" value="A=1-293"/>
</dbReference>
<dbReference type="PDB" id="7LT0">
    <property type="method" value="X-ray"/>
    <property type="resolution" value="1.70 A"/>
    <property type="chains" value="A=1-293"/>
</dbReference>
<dbReference type="PDB" id="7RXZ">
    <property type="method" value="X-ray"/>
    <property type="resolution" value="3.15 A"/>
    <property type="chains" value="A/B/C/D/E/F=293-714"/>
</dbReference>
<dbReference type="PDB" id="7RY0">
    <property type="method" value="X-ray"/>
    <property type="resolution" value="2.20 A"/>
    <property type="chains" value="A/B=293-714"/>
</dbReference>
<dbReference type="PDB" id="7RY1">
    <property type="method" value="X-ray"/>
    <property type="resolution" value="3.52 A"/>
    <property type="chains" value="A/B/C=293-714"/>
</dbReference>
<dbReference type="PDB" id="7S8Y">
    <property type="method" value="X-ray"/>
    <property type="resolution" value="1.59 A"/>
    <property type="chains" value="A=1-236"/>
</dbReference>
<dbReference type="PDB" id="7S8Z">
    <property type="method" value="X-ray"/>
    <property type="resolution" value="1.64 A"/>
    <property type="chains" value="A=1-236"/>
</dbReference>
<dbReference type="PDB" id="7S90">
    <property type="method" value="X-ray"/>
    <property type="resolution" value="1.79 A"/>
    <property type="chains" value="A=1-236"/>
</dbReference>
<dbReference type="PDB" id="7S95">
    <property type="method" value="X-ray"/>
    <property type="resolution" value="1.71 A"/>
    <property type="chains" value="A=1-236"/>
</dbReference>
<dbReference type="PDB" id="7S98">
    <property type="method" value="X-ray"/>
    <property type="resolution" value="1.90 A"/>
    <property type="chains" value="A=1-236"/>
</dbReference>
<dbReference type="PDB" id="7S99">
    <property type="method" value="X-ray"/>
    <property type="resolution" value="1.52 A"/>
    <property type="chains" value="A=1-236"/>
</dbReference>
<dbReference type="PDB" id="7S9F">
    <property type="method" value="X-ray"/>
    <property type="resolution" value="2.30 A"/>
    <property type="chains" value="A=1-236"/>
</dbReference>
<dbReference type="PDB" id="7S9G">
    <property type="method" value="X-ray"/>
    <property type="resolution" value="1.79 A"/>
    <property type="chains" value="A=1-236"/>
</dbReference>
<dbReference type="PDB" id="7S9H">
    <property type="method" value="X-ray"/>
    <property type="resolution" value="1.45 A"/>
    <property type="chains" value="A=1-236"/>
</dbReference>
<dbReference type="PDB" id="7S9I">
    <property type="method" value="X-ray"/>
    <property type="resolution" value="1.75 A"/>
    <property type="chains" value="A=1-236"/>
</dbReference>
<dbReference type="PDB" id="7UR3">
    <property type="method" value="X-ray"/>
    <property type="resolution" value="1.60 A"/>
    <property type="chains" value="A=1-293"/>
</dbReference>
<dbReference type="PDB" id="8AGI">
    <property type="method" value="X-ray"/>
    <property type="resolution" value="2.10 A"/>
    <property type="chains" value="A/B=1-236"/>
</dbReference>
<dbReference type="PDB" id="8AGJ">
    <property type="method" value="X-ray"/>
    <property type="resolution" value="2.32 A"/>
    <property type="chains" value="A/B=1-236"/>
</dbReference>
<dbReference type="PDB" id="8AGL">
    <property type="method" value="X-ray"/>
    <property type="resolution" value="2.20 A"/>
    <property type="chains" value="A/B=1-236"/>
</dbReference>
<dbReference type="PDB" id="8B7I">
    <property type="method" value="NMR"/>
    <property type="chains" value="A=9-236"/>
</dbReference>
<dbReference type="PDB" id="8B7J">
    <property type="method" value="NMR"/>
    <property type="chains" value="A=9-236"/>
</dbReference>
<dbReference type="PDB" id="8FFV">
    <property type="method" value="EM"/>
    <property type="resolution" value="3.01 A"/>
    <property type="chains" value="A/B=2-732"/>
</dbReference>
<dbReference type="PDB" id="8FFW">
    <property type="method" value="EM"/>
    <property type="resolution" value="3.23 A"/>
    <property type="chains" value="A/B=2-732"/>
</dbReference>
<dbReference type="PDB" id="8JR6">
    <property type="method" value="NMR"/>
    <property type="chains" value="A=1-237"/>
</dbReference>
<dbReference type="PDB" id="8JR7">
    <property type="method" value="NMR"/>
    <property type="chains" value="A=1-237"/>
</dbReference>
<dbReference type="PDB" id="8JRA">
    <property type="method" value="NMR"/>
    <property type="chains" value="A=1-237"/>
</dbReference>
<dbReference type="PDB" id="8KI4">
    <property type="method" value="X-ray"/>
    <property type="resolution" value="1.55 A"/>
    <property type="chains" value="A/B=9-236"/>
</dbReference>
<dbReference type="PDB" id="8SBT">
    <property type="method" value="X-ray"/>
    <property type="resolution" value="1.50 A"/>
    <property type="chains" value="A=1-236"/>
</dbReference>
<dbReference type="PDB" id="8W4V">
    <property type="method" value="X-ray"/>
    <property type="resolution" value="1.81 A"/>
    <property type="chains" value="A=9-236"/>
</dbReference>
<dbReference type="PDB" id="8W8K">
    <property type="method" value="X-ray"/>
    <property type="resolution" value="2.25 A"/>
    <property type="chains" value="A/B=9-236"/>
</dbReference>
<dbReference type="PDB" id="8X2R">
    <property type="method" value="X-ray"/>
    <property type="resolution" value="1.45 A"/>
    <property type="chains" value="A=1-236"/>
</dbReference>
<dbReference type="PDB" id="9AUU">
    <property type="method" value="X-ray"/>
    <property type="resolution" value="2.00 A"/>
    <property type="chains" value="A=2-236"/>
</dbReference>
<dbReference type="PDBsum" id="1BYQ"/>
<dbReference type="PDBsum" id="1OSF"/>
<dbReference type="PDBsum" id="1UY6"/>
<dbReference type="PDBsum" id="1UY7"/>
<dbReference type="PDBsum" id="1UY8"/>
<dbReference type="PDBsum" id="1UY9"/>
<dbReference type="PDBsum" id="1UYC"/>
<dbReference type="PDBsum" id="1UYD"/>
<dbReference type="PDBsum" id="1UYE"/>
<dbReference type="PDBsum" id="1UYF"/>
<dbReference type="PDBsum" id="1UYG"/>
<dbReference type="PDBsum" id="1UYH"/>
<dbReference type="PDBsum" id="1UYI"/>
<dbReference type="PDBsum" id="1UYK"/>
<dbReference type="PDBsum" id="1UYL"/>
<dbReference type="PDBsum" id="1YC1"/>
<dbReference type="PDBsum" id="1YC3"/>
<dbReference type="PDBsum" id="1YC4"/>
<dbReference type="PDBsum" id="1YER"/>
<dbReference type="PDBsum" id="1YES"/>
<dbReference type="PDBsum" id="1YET"/>
<dbReference type="PDBsum" id="2BSM"/>
<dbReference type="PDBsum" id="2BT0"/>
<dbReference type="PDBsum" id="2BUG"/>
<dbReference type="PDBsum" id="2BYH"/>
<dbReference type="PDBsum" id="2BYI"/>
<dbReference type="PDBsum" id="2BZ5"/>
<dbReference type="PDBsum" id="2C2L"/>
<dbReference type="PDBsum" id="2CCS"/>
<dbReference type="PDBsum" id="2CCT"/>
<dbReference type="PDBsum" id="2CCU"/>
<dbReference type="PDBsum" id="2FWY"/>
<dbReference type="PDBsum" id="2FWZ"/>
<dbReference type="PDBsum" id="2H55"/>
<dbReference type="PDBsum" id="2JJC"/>
<dbReference type="PDBsum" id="2K5B"/>
<dbReference type="PDBsum" id="2QF6"/>
<dbReference type="PDBsum" id="2QFO"/>
<dbReference type="PDBsum" id="2QG0"/>
<dbReference type="PDBsum" id="2QG2"/>
<dbReference type="PDBsum" id="2UWD"/>
<dbReference type="PDBsum" id="2VCI"/>
<dbReference type="PDBsum" id="2VCJ"/>
<dbReference type="PDBsum" id="2WI1"/>
<dbReference type="PDBsum" id="2WI2"/>
<dbReference type="PDBsum" id="2WI3"/>
<dbReference type="PDBsum" id="2WI4"/>
<dbReference type="PDBsum" id="2WI5"/>
<dbReference type="PDBsum" id="2WI6"/>
<dbReference type="PDBsum" id="2WI7"/>
<dbReference type="PDBsum" id="2XAB"/>
<dbReference type="PDBsum" id="2XDK"/>
<dbReference type="PDBsum" id="2XDL"/>
<dbReference type="PDBsum" id="2XDS"/>
<dbReference type="PDBsum" id="2XDU"/>
<dbReference type="PDBsum" id="2XDX"/>
<dbReference type="PDBsum" id="2XHR"/>
<dbReference type="PDBsum" id="2XHT"/>
<dbReference type="PDBsum" id="2XHX"/>
<dbReference type="PDBsum" id="2XJG"/>
<dbReference type="PDBsum" id="2XJJ"/>
<dbReference type="PDBsum" id="2XJX"/>
<dbReference type="PDBsum" id="2XK2"/>
<dbReference type="PDBsum" id="2YE2"/>
<dbReference type="PDBsum" id="2YE3"/>
<dbReference type="PDBsum" id="2YE4"/>
<dbReference type="PDBsum" id="2YE5"/>
<dbReference type="PDBsum" id="2YE6"/>
<dbReference type="PDBsum" id="2YE7"/>
<dbReference type="PDBsum" id="2YE8"/>
<dbReference type="PDBsum" id="2YE9"/>
<dbReference type="PDBsum" id="2YEA"/>
<dbReference type="PDBsum" id="2YEB"/>
<dbReference type="PDBsum" id="2YEC"/>
<dbReference type="PDBsum" id="2YED"/>
<dbReference type="PDBsum" id="2YEE"/>
<dbReference type="PDBsum" id="2YEF"/>
<dbReference type="PDBsum" id="2YEG"/>
<dbReference type="PDBsum" id="2YEH"/>
<dbReference type="PDBsum" id="2YEI"/>
<dbReference type="PDBsum" id="2YEJ"/>
<dbReference type="PDBsum" id="2YI0"/>
<dbReference type="PDBsum" id="2YI5"/>
<dbReference type="PDBsum" id="2YI6"/>
<dbReference type="PDBsum" id="2YI7"/>
<dbReference type="PDBsum" id="2YJW"/>
<dbReference type="PDBsum" id="2YJX"/>
<dbReference type="PDBsum" id="2YK2"/>
<dbReference type="PDBsum" id="2YK9"/>
<dbReference type="PDBsum" id="2YKB"/>
<dbReference type="PDBsum" id="2YKC"/>
<dbReference type="PDBsum" id="2YKE"/>
<dbReference type="PDBsum" id="2YKI"/>
<dbReference type="PDBsum" id="2YKJ"/>
<dbReference type="PDBsum" id="3B24"/>
<dbReference type="PDBsum" id="3B25"/>
<dbReference type="PDBsum" id="3B26"/>
<dbReference type="PDBsum" id="3B27"/>
<dbReference type="PDBsum" id="3B28"/>
<dbReference type="PDBsum" id="3BM9"/>
<dbReference type="PDBsum" id="3BMY"/>
<dbReference type="PDBsum" id="3D0B"/>
<dbReference type="PDBsum" id="3EKO"/>
<dbReference type="PDBsum" id="3EKR"/>
<dbReference type="PDBsum" id="3FT5"/>
<dbReference type="PDBsum" id="3FT8"/>
<dbReference type="PDBsum" id="3HEK"/>
<dbReference type="PDBsum" id="3HHU"/>
<dbReference type="PDBsum" id="3HYY"/>
<dbReference type="PDBsum" id="3HYZ"/>
<dbReference type="PDBsum" id="3HZ1"/>
<dbReference type="PDBsum" id="3HZ5"/>
<dbReference type="PDBsum" id="3INW"/>
<dbReference type="PDBsum" id="3INX"/>
<dbReference type="PDBsum" id="3K97"/>
<dbReference type="PDBsum" id="3K98"/>
<dbReference type="PDBsum" id="3K99"/>
<dbReference type="PDBsum" id="3MNR"/>
<dbReference type="PDBsum" id="3O0I"/>
<dbReference type="PDBsum" id="3OW6"/>
<dbReference type="PDBsum" id="3OWB"/>
<dbReference type="PDBsum" id="3OWD"/>
<dbReference type="PDBsum" id="3Q6M"/>
<dbReference type="PDBsum" id="3Q6N"/>
<dbReference type="PDBsum" id="3QDD"/>
<dbReference type="PDBsum" id="3QTF"/>
<dbReference type="PDBsum" id="3R4M"/>
<dbReference type="PDBsum" id="3R4N"/>
<dbReference type="PDBsum" id="3R4O"/>
<dbReference type="PDBsum" id="3R4P"/>
<dbReference type="PDBsum" id="3R91"/>
<dbReference type="PDBsum" id="3R92"/>
<dbReference type="PDBsum" id="3RKZ"/>
<dbReference type="PDBsum" id="3RLP"/>
<dbReference type="PDBsum" id="3RLQ"/>
<dbReference type="PDBsum" id="3RLR"/>
<dbReference type="PDBsum" id="3T0H"/>
<dbReference type="PDBsum" id="3T0Z"/>
<dbReference type="PDBsum" id="3T10"/>
<dbReference type="PDBsum" id="3T1K"/>
<dbReference type="PDBsum" id="3T2S"/>
<dbReference type="PDBsum" id="3TUH"/>
<dbReference type="PDBsum" id="3VHA"/>
<dbReference type="PDBsum" id="3VHC"/>
<dbReference type="PDBsum" id="3VHD"/>
<dbReference type="PDBsum" id="3WHA"/>
<dbReference type="PDBsum" id="3WQ9"/>
<dbReference type="PDBsum" id="4AIF"/>
<dbReference type="PDBsum" id="4AWO"/>
<dbReference type="PDBsum" id="4AWP"/>
<dbReference type="PDBsum" id="4AWQ"/>
<dbReference type="PDBsum" id="4B7P"/>
<dbReference type="PDBsum" id="4BQG"/>
<dbReference type="PDBsum" id="4BQJ"/>
<dbReference type="PDBsum" id="4CGQ"/>
<dbReference type="PDBsum" id="4CGU"/>
<dbReference type="PDBsum" id="4CGV"/>
<dbReference type="PDBsum" id="4CGW"/>
<dbReference type="PDBsum" id="4CWF"/>
<dbReference type="PDBsum" id="4CWN"/>
<dbReference type="PDBsum" id="4CWO"/>
<dbReference type="PDBsum" id="4CWP"/>
<dbReference type="PDBsum" id="4CWQ"/>
<dbReference type="PDBsum" id="4CWR"/>
<dbReference type="PDBsum" id="4CWS"/>
<dbReference type="PDBsum" id="4CWT"/>
<dbReference type="PDBsum" id="4EEH"/>
<dbReference type="PDBsum" id="4EFT"/>
<dbReference type="PDBsum" id="4EFU"/>
<dbReference type="PDBsum" id="4EGH"/>
<dbReference type="PDBsum" id="4EGI"/>
<dbReference type="PDBsum" id="4EGK"/>
<dbReference type="PDBsum" id="4FCP"/>
<dbReference type="PDBsum" id="4FCQ"/>
<dbReference type="PDBsum" id="4FCR"/>
<dbReference type="PDBsum" id="4HY6"/>
<dbReference type="PDBsum" id="4JQL"/>
<dbReference type="PDBsum" id="4L8Z"/>
<dbReference type="PDBsum" id="4L90"/>
<dbReference type="PDBsum" id="4L91"/>
<dbReference type="PDBsum" id="4L93"/>
<dbReference type="PDBsum" id="4L94"/>
<dbReference type="PDBsum" id="4LWE"/>
<dbReference type="PDBsum" id="4LWF"/>
<dbReference type="PDBsum" id="4LWG"/>
<dbReference type="PDBsum" id="4LWH"/>
<dbReference type="PDBsum" id="4LWI"/>
<dbReference type="PDBsum" id="4NH7"/>
<dbReference type="PDBsum" id="4NH8"/>
<dbReference type="PDBsum" id="4O04"/>
<dbReference type="PDBsum" id="4O05"/>
<dbReference type="PDBsum" id="4O07"/>
<dbReference type="PDBsum" id="4O09"/>
<dbReference type="PDBsum" id="4O0B"/>
<dbReference type="PDBsum" id="4R3M"/>
<dbReference type="PDBsum" id="4U93"/>
<dbReference type="PDBsum" id="4W7T"/>
<dbReference type="PDBsum" id="4XIP"/>
<dbReference type="PDBsum" id="4XIQ"/>
<dbReference type="PDBsum" id="4XIR"/>
<dbReference type="PDBsum" id="4XIT"/>
<dbReference type="PDBsum" id="4YKQ"/>
<dbReference type="PDBsum" id="4YKR"/>
<dbReference type="PDBsum" id="4YKT"/>
<dbReference type="PDBsum" id="4YKU"/>
<dbReference type="PDBsum" id="4YKW"/>
<dbReference type="PDBsum" id="4YKX"/>
<dbReference type="PDBsum" id="4YKY"/>
<dbReference type="PDBsum" id="4YKZ"/>
<dbReference type="PDBsum" id="5CF0"/>
<dbReference type="PDBsum" id="5FNC"/>
<dbReference type="PDBsum" id="5FND"/>
<dbReference type="PDBsum" id="5FNF"/>
<dbReference type="PDBsum" id="5GGZ"/>
<dbReference type="PDBsum" id="5J20"/>
<dbReference type="PDBsum" id="5J27"/>
<dbReference type="PDBsum" id="5J2V"/>
<dbReference type="PDBsum" id="5J2X"/>
<dbReference type="PDBsum" id="5J64"/>
<dbReference type="PDBsum" id="5J6L"/>
<dbReference type="PDBsum" id="5J6M"/>
<dbReference type="PDBsum" id="5J6N"/>
<dbReference type="PDBsum" id="5J80"/>
<dbReference type="PDBsum" id="5J82"/>
<dbReference type="PDBsum" id="5J86"/>
<dbReference type="PDBsum" id="5J8M"/>
<dbReference type="PDBsum" id="5J8U"/>
<dbReference type="PDBsum" id="5J9X"/>
<dbReference type="PDBsum" id="5LNY"/>
<dbReference type="PDBsum" id="5LNZ"/>
<dbReference type="PDBsum" id="5LO0"/>
<dbReference type="PDBsum" id="5LO1"/>
<dbReference type="PDBsum" id="5LO5"/>
<dbReference type="PDBsum" id="5LO6"/>
<dbReference type="PDBsum" id="5LQ9"/>
<dbReference type="PDBsum" id="5LR1"/>
<dbReference type="PDBsum" id="5LR7"/>
<dbReference type="PDBsum" id="5LRL"/>
<dbReference type="PDBsum" id="5LRZ"/>
<dbReference type="PDBsum" id="5LS1"/>
<dbReference type="PDBsum" id="5M4E"/>
<dbReference type="PDBsum" id="5M4H"/>
<dbReference type="PDBsum" id="5NYH"/>
<dbReference type="PDBsum" id="5NYI"/>
<dbReference type="PDBsum" id="5OCI"/>
<dbReference type="PDBsum" id="5OD7"/>
<dbReference type="PDBsum" id="5ODX"/>
<dbReference type="PDBsum" id="5T21"/>
<dbReference type="PDBsum" id="5VYY"/>
<dbReference type="PDBsum" id="5XQD"/>
<dbReference type="PDBsum" id="5XQE"/>
<dbReference type="PDBsum" id="5XR5"/>
<dbReference type="PDBsum" id="5XR9"/>
<dbReference type="PDBsum" id="5XRB"/>
<dbReference type="PDBsum" id="5XRD"/>
<dbReference type="PDBsum" id="5XRE"/>
<dbReference type="PDBsum" id="5ZR3"/>
<dbReference type="PDBsum" id="6B99"/>
<dbReference type="PDBsum" id="6B9A"/>
<dbReference type="PDBsum" id="6CEO"/>
<dbReference type="PDBsum" id="6CYG"/>
<dbReference type="PDBsum" id="6CYH"/>
<dbReference type="PDBsum" id="6EI5"/>
<dbReference type="PDBsum" id="6EL5"/>
<dbReference type="PDBsum" id="6ELN"/>
<dbReference type="PDBsum" id="6ELO"/>
<dbReference type="PDBsum" id="6ELP"/>
<dbReference type="PDBsum" id="6EY8"/>
<dbReference type="PDBsum" id="6EY9"/>
<dbReference type="PDBsum" id="6EYA"/>
<dbReference type="PDBsum" id="6EYB"/>
<dbReference type="PDBsum" id="6F1N"/>
<dbReference type="PDBsum" id="6FCJ"/>
<dbReference type="PDBsum" id="6FDP"/>
<dbReference type="PDBsum" id="6GP4"/>
<dbReference type="PDBsum" id="6GP8"/>
<dbReference type="PDBsum" id="6GPF"/>
<dbReference type="PDBsum" id="6GPH"/>
<dbReference type="PDBsum" id="6GPO"/>
<dbReference type="PDBsum" id="6GPP"/>
<dbReference type="PDBsum" id="6GPR"/>
<dbReference type="PDBsum" id="6GPT"/>
<dbReference type="PDBsum" id="6GPW"/>
<dbReference type="PDBsum" id="6GPY"/>
<dbReference type="PDBsum" id="6GQ6"/>
<dbReference type="PDBsum" id="6GQR"/>
<dbReference type="PDBsum" id="6GQS"/>
<dbReference type="PDBsum" id="6GQU"/>
<dbReference type="PDBsum" id="6GR1"/>
<dbReference type="PDBsum" id="6GR3"/>
<dbReference type="PDBsum" id="6GR4"/>
<dbReference type="PDBsum" id="6GR5"/>
<dbReference type="PDBsum" id="6HHR"/>
<dbReference type="PDBsum" id="6KSQ"/>
<dbReference type="PDBsum" id="6LR9"/>
<dbReference type="PDBsum" id="6LSZ"/>
<dbReference type="PDBsum" id="6LT8"/>
<dbReference type="PDBsum" id="6LTI"/>
<dbReference type="PDBsum" id="6LTK"/>
<dbReference type="PDBsum" id="6N8X"/>
<dbReference type="PDBsum" id="6OLX"/>
<dbReference type="PDBsum" id="6TN4"/>
<dbReference type="PDBsum" id="6TN5"/>
<dbReference type="PDBsum" id="6U98"/>
<dbReference type="PDBsum" id="6U99"/>
<dbReference type="PDBsum" id="6U9A"/>
<dbReference type="PDBsum" id="6U9B"/>
<dbReference type="PDBsum" id="7DMC"/>
<dbReference type="PDBsum" id="7KRJ"/>
<dbReference type="PDBsum" id="7KW7"/>
<dbReference type="PDBsum" id="7L7I"/>
<dbReference type="PDBsum" id="7L7J"/>
<dbReference type="PDBsum" id="7LSZ"/>
<dbReference type="PDBsum" id="7LT0"/>
<dbReference type="PDBsum" id="7RXZ"/>
<dbReference type="PDBsum" id="7RY0"/>
<dbReference type="PDBsum" id="7RY1"/>
<dbReference type="PDBsum" id="7S8Y"/>
<dbReference type="PDBsum" id="7S8Z"/>
<dbReference type="PDBsum" id="7S90"/>
<dbReference type="PDBsum" id="7S95"/>
<dbReference type="PDBsum" id="7S98"/>
<dbReference type="PDBsum" id="7S99"/>
<dbReference type="PDBsum" id="7S9F"/>
<dbReference type="PDBsum" id="7S9G"/>
<dbReference type="PDBsum" id="7S9H"/>
<dbReference type="PDBsum" id="7S9I"/>
<dbReference type="PDBsum" id="7UR3"/>
<dbReference type="PDBsum" id="8AGI"/>
<dbReference type="PDBsum" id="8AGJ"/>
<dbReference type="PDBsum" id="8AGL"/>
<dbReference type="PDBsum" id="8B7I"/>
<dbReference type="PDBsum" id="8B7J"/>
<dbReference type="PDBsum" id="8FFV"/>
<dbReference type="PDBsum" id="8FFW"/>
<dbReference type="PDBsum" id="8JR6"/>
<dbReference type="PDBsum" id="8JR7"/>
<dbReference type="PDBsum" id="8JRA"/>
<dbReference type="PDBsum" id="8KI4"/>
<dbReference type="PDBsum" id="8SBT"/>
<dbReference type="PDBsum" id="8W4V"/>
<dbReference type="PDBsum" id="8W8K"/>
<dbReference type="PDBsum" id="8X2R"/>
<dbReference type="PDBsum" id="9AUU"/>
<dbReference type="BMRB" id="P07900"/>
<dbReference type="EMDB" id="EMD-23004"/>
<dbReference type="EMDB" id="EMD-23005"/>
<dbReference type="EMDB" id="EMD-23006"/>
<dbReference type="EMDB" id="EMD-23050"/>
<dbReference type="EMDB" id="EMD-23213"/>
<dbReference type="EMDB" id="EMD-23214"/>
<dbReference type="EMDB" id="EMD-29068"/>
<dbReference type="EMDB" id="EMD-29069"/>
<dbReference type="EMDB" id="EMD-29949"/>
<dbReference type="EMDB" id="EMD-29957"/>
<dbReference type="EMDB" id="EMD-29973"/>
<dbReference type="EMDB" id="EMD-29976"/>
<dbReference type="EMDB" id="EMD-5981"/>
<dbReference type="SMR" id="P07900"/>
<dbReference type="BioGRID" id="109552">
    <property type="interactions" value="1311"/>
</dbReference>
<dbReference type="ComplexPortal" id="CPX-3288">
    <property type="entry name" value="HSP90A-CDC37 chaperone complex"/>
</dbReference>
<dbReference type="CORUM" id="P07900"/>
<dbReference type="DIP" id="DIP-27595N"/>
<dbReference type="FunCoup" id="P07900">
    <property type="interactions" value="2774"/>
</dbReference>
<dbReference type="IntAct" id="P07900">
    <property type="interactions" value="439"/>
</dbReference>
<dbReference type="MINT" id="P07900"/>
<dbReference type="STRING" id="9606.ENSP00000335153"/>
<dbReference type="BindingDB" id="P07900"/>
<dbReference type="ChEMBL" id="CHEMBL3880"/>
<dbReference type="DrugBank" id="DB07317">
    <property type="generic name" value="(3E)-3-[(phenylamino)methylidene]dihydrofuran-2(3H)-one"/>
</dbReference>
<dbReference type="DrugBank" id="DB08197">
    <property type="generic name" value="(5E,7S)-2-amino-7-(4-fluoro-2-pyridin-3-ylphenyl)-4-methyl-7,8-dihydroquinazolin-5(6H)-one oxime"/>
</dbReference>
<dbReference type="DrugBank" id="DB08443">
    <property type="generic name" value="2-(1H-pyrrol-1-ylcarbonyl)benzene-1,3,5-triol"/>
</dbReference>
<dbReference type="DrugBank" id="DB08557">
    <property type="generic name" value="2-[(2-methoxyethyl)amino]-4-(4-oxo-1,2,3,4-tetrahydro-9H-carbazol-9-yl)benzamide"/>
</dbReference>
<dbReference type="DrugBank" id="DB08789">
    <property type="generic name" value="2-AMINO-4-(2,4-DICHLOROPHENYL)-N-ETHYLTHIENO[2,3-D]PYRIMIDINE-6-CARBOXAMIDE"/>
</dbReference>
<dbReference type="DrugBank" id="DB06969">
    <property type="generic name" value="2-amino-4-[2,4-dichloro-5-(2-pyrrolidin-1-ylethoxy)phenyl]-N-ethylthieno[2,3-d]pyrimidine-6-carboxamide"/>
</dbReference>
<dbReference type="DrugBank" id="DB08788">
    <property type="generic name" value="3,6-DIAMINO-5-CYANO-4-(4-ETHOXYPHENYL)THIENO[2,3-B]PYRIDINE-2-CARBOXAMIDE"/>
</dbReference>
<dbReference type="DrugBank" id="DB07324">
    <property type="generic name" value="3-({2-[(2-AMINO-6-METHYLPYRIMIDIN-4-YL)ETHYNYL]BENZYL}AMINO)-1,3-OXAZOL-2(3H)-ONE"/>
</dbReference>
<dbReference type="DrugBank" id="DB02840">
    <property type="generic name" value="4-(1,3-Benzodioxol-5-Yl)-5-(5-Ethyl-2,4-Dihydroxyphenyl)-2h-Pyrazole-3-Carboxylic Acid"/>
</dbReference>
<dbReference type="DrugBank" id="DB03749">
    <property type="generic name" value="4-(1h-Imidazol-4-Yl)-3-(5-Ethyl-2,4-Dihydroxy-Phenyl)-1h-Pyrazole"/>
</dbReference>
<dbReference type="DrugBank" id="DB08787">
    <property type="generic name" value="4-(2,4-dichlorophenyl)-5-phenyldiazenyl-pyrimidin-2-amine"/>
</dbReference>
<dbReference type="DrugBank" id="DB08786">
    <property type="generic name" value="4-(2-methoxyethoxy)-6-methylpyrimidin-2-amine"/>
</dbReference>
<dbReference type="DrugBank" id="DB07502">
    <property type="generic name" value="4-bromo-6-(6-hydroxy-1,2-benzisoxazol-3-yl)benzene-1,3-diol"/>
</dbReference>
<dbReference type="DrugBank" id="DB07100">
    <property type="generic name" value="4-CHLORO-6-(4-PIPERAZIN-1-YL-1H-PYRAZOL-5-YL)BENZENE-1,3-DIOL"/>
</dbReference>
<dbReference type="DrugBank" id="DB06957">
    <property type="generic name" value="4-CHLORO-6-(4-{4-[4-(METHYLSULFONYL)BENZYL]PIPERAZIN-1-YL}-1H-PYRAZOL-5-YL)BENZENE-1,3-DIOL"/>
</dbReference>
<dbReference type="DrugBank" id="DB07601">
    <property type="generic name" value="4-chloro-6-{5-[(2-morpholin-4-ylethyl)amino]-1,2-benzisoxazol-3-yl}benzene-1,3-diol"/>
</dbReference>
<dbReference type="DrugBank" id="DB08194">
    <property type="generic name" value="4-methyl-7,8-dihydro-5H-thiopyrano[4,3-d]pyrimidin-2-amine"/>
</dbReference>
<dbReference type="DrugBank" id="DB08442">
    <property type="generic name" value="4-{[(2R)-2-(2-methylphenyl)pyrrolidin-1-yl]carbonyl}benzene-1,3-diol"/>
</dbReference>
<dbReference type="DrugBank" id="DB07495">
    <property type="generic name" value="5-(5-CHLORO-2,4-DIHYDROXYPHENYL)-N-ETHYL-4-(4-METHOXYPHENYL)-1H-PYRAZOLE-3-CARBOXAMIDE"/>
</dbReference>
<dbReference type="DrugBank" id="DB06964">
    <property type="generic name" value="5-(5-CHLORO-2,4-DIHYDROXYPHENYL)-N-ETHYL-4-(4-METHOXYPHENYL)ISOXAZOLE-3-CARBOXAMIDE"/>
</dbReference>
<dbReference type="DrugBank" id="DB06961">
    <property type="generic name" value="5-(5-chloro-2,4-dihydroxyphenyl)-N-ethyl-4-[4-(morpholin-4-ylmethyl)phenyl]isoxazole-3-carboxamide"/>
</dbReference>
<dbReference type="DrugBank" id="DB06958">
    <property type="generic name" value="5-(5-CHLORO-2,4-DIHYDROXYPHENYL)-N-ETHYL-4-PIPERAZIN-1-YL-1H-PYRAZOLE-3-CARBOXAMIDE"/>
</dbReference>
<dbReference type="DrugBank" id="DB07319">
    <property type="generic name" value="6-(3-BROMO-2-NAPHTHYL)-1,3,5-TRIAZINE-2,4-DIAMINE"/>
</dbReference>
<dbReference type="DrugBank" id="DB03137">
    <property type="generic name" value="8-(2,5-Dimethoxy-Benzyl)-2-Fluoro-9-Pent-9h-Purin-6-Ylamine"/>
</dbReference>
<dbReference type="DrugBank" id="DB03093">
    <property type="generic name" value="8-(2,5-Dimethoxy-Benzyl)-2-Fluoro-9h-Purin-6-Ylamine"/>
</dbReference>
<dbReference type="DrugBank" id="DB02550">
    <property type="generic name" value="8-(2-Chloro-3,4,5-Trimethoxy-Benzyl)-2-Fluoro-9-Pent-4-Ylnyl-9h-Purin-6-Ylamine"/>
</dbReference>
<dbReference type="DrugBank" id="DB04505">
    <property type="generic name" value="8-(2-Chloro-3,4,5-Trimethoxy-Benzyl)-9-Pent-4-Ylnyl-9h-Purin-6-Ylamine"/>
</dbReference>
<dbReference type="DrugBank" id="DB07877">
    <property type="generic name" value="8-(6-BROMO-BENZO[1,3]DIOXOL-5-YLSULFANYL)-9-(3-ISOPROPYLAMINO-PROPYL)-ADENINE"/>
</dbReference>
<dbReference type="DrugBank" id="DB04254">
    <property type="generic name" value="8-Benzo[1,3]Dioxol-,5-Ylmethyl-9-Butyl-2-Fluoro-9h-Purin-6-Ylamine"/>
</dbReference>
<dbReference type="DrugBank" id="DB08436">
    <property type="generic name" value="8-BENZO[1,3]DIOXOL-,5-YLMETHYL-9-BUTYL-9H"/>
</dbReference>
<dbReference type="DrugBank" id="DB04054">
    <property type="generic name" value="9-Butyl-8-(2,5-Dimethoxy-Benzyl)-2-Fluoro-9h-Purin-6-Ylamine"/>
</dbReference>
<dbReference type="DrugBank" id="DB02359">
    <property type="generic name" value="9-Butyl-8-(2,5-Dimethoxy-Benzyl)-9h-Purin-6-Ylamine"/>
</dbReference>
<dbReference type="DrugBank" id="DB03504">
    <property type="generic name" value="9-Butyl-8-(2-Chloro-3,4,5-Trimethoxy-Benzyl)-9h-Purin-6-Ylamine"/>
</dbReference>
<dbReference type="DrugBank" id="DB02754">
    <property type="generic name" value="9-Butyl-8-(3,4,5-Trimethoxybenzyl)-9h-Purin-6-Amine"/>
</dbReference>
<dbReference type="DrugBank" id="DB03809">
    <property type="generic name" value="9-Butyl-8-(3-Methoxybenzyl)-9h-Purin-6-Amine"/>
</dbReference>
<dbReference type="DrugBank" id="DB03899">
    <property type="generic name" value="9-Butyl-8-(4-Methoxybenzyl)-9h-Purin-6-Amine"/>
</dbReference>
<dbReference type="DrugBank" id="DB12442">
    <property type="generic name" value="Alvespimycin"/>
</dbReference>
<dbReference type="DrugBank" id="DB01025">
    <property type="generic name" value="Amlexanox"/>
</dbReference>
<dbReference type="DrugBank" id="DB12359">
    <property type="generic name" value="BIIB021"/>
</dbReference>
<dbReference type="DrugBank" id="DB07594">
    <property type="generic name" value="CCT-018159"/>
</dbReference>
<dbReference type="DrugBank" id="DB09130">
    <property type="generic name" value="Copper"/>
</dbReference>
<dbReference type="DrugBank" id="DB01003">
    <property type="generic name" value="Cromoglicic acid"/>
</dbReference>
<dbReference type="DrugBank" id="DB02424">
    <property type="generic name" value="Geldanamycin"/>
</dbReference>
<dbReference type="DrugBank" id="DB13023">
    <property type="generic name" value="IPI-493"/>
</dbReference>
<dbReference type="DrugBank" id="DB06956">
    <property type="generic name" value="N-(4-ACETYLPHENYL)-5-(5-CHLORO-2,4-DIHYDROXYPHENYL)-1H-PYRAZOLE-4-CARBOXAMIDE"/>
</dbReference>
<dbReference type="DrugBank" id="DB07325">
    <property type="generic name" value="N-[(2-AMINO-6-METHYLPYRIMIDIN-4-YL)METHYL]-3-{[(E)-(2-OXODIHYDROFURAN-3(2H)-YLIDENE)METHYL]AMINO}BENZENESULFONAMIDE"/>
</dbReference>
<dbReference type="DrugBank" id="DB04588">
    <property type="generic name" value="N-[4-(AMINOSULFONYL)BENZYL]-5-(5-CHLORO-2,4-DIHYDROXYPHENYL)-1H-PYRAZOLE-4-CARBOXAMIDE"/>
</dbReference>
<dbReference type="DrugBank" id="DB00716">
    <property type="generic name" value="Nedocromil"/>
</dbReference>
<dbReference type="DrugBank" id="DB06306">
    <property type="generic name" value="Onalespib"/>
</dbReference>
<dbReference type="DrugBank" id="DB09221">
    <property type="generic name" value="Polaprezinc"/>
</dbReference>
<dbReference type="DrugBank" id="DB04216">
    <property type="generic name" value="Quercetin"/>
</dbReference>
<dbReference type="DrugBank" id="DB03758">
    <property type="generic name" value="Radicicol"/>
</dbReference>
<dbReference type="DrugBank" id="DB13174">
    <property type="generic name" value="Rhein"/>
</dbReference>
<dbReference type="DrugBank" id="DB00615">
    <property type="generic name" value="Rifabutin"/>
</dbReference>
<dbReference type="DrugBank" id="DB17055">
    <property type="generic name" value="SNX-2112"/>
</dbReference>
<dbReference type="DrugBank" id="DB06070">
    <property type="generic name" value="SNX-5422"/>
</dbReference>
<dbReference type="DrugBank" id="DB05134">
    <property type="generic name" value="Tanespimycin"/>
</dbReference>
<dbReference type="DrugCentral" id="P07900"/>
<dbReference type="GuidetoPHARMACOLOGY" id="2905"/>
<dbReference type="MoonDB" id="P07900">
    <property type="type" value="Predicted"/>
</dbReference>
<dbReference type="CarbonylDB" id="P07900"/>
<dbReference type="GlyConnect" id="1301">
    <property type="glycosylation" value="1 N-Linked glycan (1 site)"/>
</dbReference>
<dbReference type="GlyCosmos" id="P07900">
    <property type="glycosylation" value="1 site, 1 glycan"/>
</dbReference>
<dbReference type="GlyGen" id="P07900">
    <property type="glycosylation" value="3 sites, 3 N-linked glycans (2 sites), 1 O-linked glycan (1 site)"/>
</dbReference>
<dbReference type="iPTMnet" id="P07900"/>
<dbReference type="MetOSite" id="P07900"/>
<dbReference type="PhosphoSitePlus" id="P07900"/>
<dbReference type="SwissPalm" id="P07900"/>
<dbReference type="BioMuta" id="HSP90AA1"/>
<dbReference type="DMDM" id="92090606"/>
<dbReference type="OGP" id="P07900"/>
<dbReference type="REPRODUCTION-2DPAGE" id="IPI00784295"/>
<dbReference type="jPOST" id="P07900"/>
<dbReference type="MassIVE" id="P07900"/>
<dbReference type="PaxDb" id="9606-ENSP00000335153"/>
<dbReference type="PeptideAtlas" id="P07900"/>
<dbReference type="PRIDE" id="P07900"/>
<dbReference type="ProteomicsDB" id="52031">
    <molecule id="P07900-1"/>
</dbReference>
<dbReference type="ProteomicsDB" id="52032">
    <molecule id="P07900-2"/>
</dbReference>
<dbReference type="Pumba" id="P07900"/>
<dbReference type="TopDownProteomics" id="P07900-1">
    <molecule id="P07900-1"/>
</dbReference>
<dbReference type="Antibodypedia" id="3676">
    <property type="antibodies" value="1723 antibodies from 45 providers"/>
</dbReference>
<dbReference type="DNASU" id="3320"/>
<dbReference type="Ensembl" id="ENST00000216281.13">
    <molecule id="P07900-1"/>
    <property type="protein sequence ID" value="ENSP00000216281.8"/>
    <property type="gene ID" value="ENSG00000080824.19"/>
</dbReference>
<dbReference type="Ensembl" id="ENST00000334701.11">
    <molecule id="P07900-2"/>
    <property type="protein sequence ID" value="ENSP00000335153.7"/>
    <property type="gene ID" value="ENSG00000080824.19"/>
</dbReference>
<dbReference type="GeneID" id="3320"/>
<dbReference type="KEGG" id="hsa:3320"/>
<dbReference type="MANE-Select" id="ENST00000216281.13">
    <property type="protein sequence ID" value="ENSP00000216281.8"/>
    <property type="RefSeq nucleotide sequence ID" value="NM_005348.4"/>
    <property type="RefSeq protein sequence ID" value="NP_005339.3"/>
</dbReference>
<dbReference type="UCSC" id="uc001yku.5">
    <molecule id="P07900-1"/>
    <property type="organism name" value="human"/>
</dbReference>
<dbReference type="AGR" id="HGNC:5253"/>
<dbReference type="CTD" id="3320"/>
<dbReference type="DisGeNET" id="3320"/>
<dbReference type="GeneCards" id="HSP90AA1"/>
<dbReference type="HGNC" id="HGNC:5253">
    <property type="gene designation" value="HSP90AA1"/>
</dbReference>
<dbReference type="HPA" id="ENSG00000080824">
    <property type="expression patterns" value="Low tissue specificity"/>
</dbReference>
<dbReference type="MalaCards" id="HSP90AA1"/>
<dbReference type="MIM" id="140571">
    <property type="type" value="gene"/>
</dbReference>
<dbReference type="neXtProt" id="NX_P07900"/>
<dbReference type="OpenTargets" id="ENSG00000080824"/>
<dbReference type="PharmGKB" id="PA29519"/>
<dbReference type="VEuPathDB" id="HostDB:ENSG00000080824"/>
<dbReference type="eggNOG" id="KOG0019">
    <property type="taxonomic scope" value="Eukaryota"/>
</dbReference>
<dbReference type="GeneTree" id="ENSGT01020000230401"/>
<dbReference type="HOGENOM" id="CLU_006684_1_3_1"/>
<dbReference type="InParanoid" id="P07900"/>
<dbReference type="OMA" id="MRRMKEM"/>
<dbReference type="OrthoDB" id="5426351at2759"/>
<dbReference type="PAN-GO" id="P07900">
    <property type="GO annotations" value="13 GO annotations based on evolutionary models"/>
</dbReference>
<dbReference type="PhylomeDB" id="P07900"/>
<dbReference type="TreeFam" id="TF300686"/>
<dbReference type="BRENDA" id="3.6.4.10">
    <property type="organism ID" value="2681"/>
</dbReference>
<dbReference type="PathwayCommons" id="P07900"/>
<dbReference type="Reactome" id="R-HSA-1227986">
    <property type="pathway name" value="Signaling by ERBB2"/>
</dbReference>
<dbReference type="Reactome" id="R-HSA-1236382">
    <property type="pathway name" value="Constitutive Signaling by Ligand-Responsive EGFR Cancer Variants"/>
</dbReference>
<dbReference type="Reactome" id="R-HSA-1474151">
    <property type="pathway name" value="Tetrahydrobiopterin (BH4) synthesis, recycling, salvage and regulation"/>
</dbReference>
<dbReference type="Reactome" id="R-HSA-168928">
    <property type="pathway name" value="DDX58/IFIH1-mediated induction of interferon-alpha/beta"/>
</dbReference>
<dbReference type="Reactome" id="R-HSA-192905">
    <property type="pathway name" value="vRNP Assembly"/>
</dbReference>
<dbReference type="Reactome" id="R-HSA-2029482">
    <property type="pathway name" value="Regulation of actin dynamics for phagocytic cup formation"/>
</dbReference>
<dbReference type="Reactome" id="R-HSA-203615">
    <property type="pathway name" value="eNOS activation"/>
</dbReference>
<dbReference type="Reactome" id="R-HSA-2565942">
    <property type="pathway name" value="Regulation of PLK1 Activity at G2/M Transition"/>
</dbReference>
<dbReference type="Reactome" id="R-HSA-3000484">
    <property type="pathway name" value="Scavenging by Class F Receptors"/>
</dbReference>
<dbReference type="Reactome" id="R-HSA-3371497">
    <property type="pathway name" value="HSP90 chaperone cycle for steroid hormone receptors (SHR) in the presence of ligand"/>
</dbReference>
<dbReference type="Reactome" id="R-HSA-3371511">
    <property type="pathway name" value="HSF1 activation"/>
</dbReference>
<dbReference type="Reactome" id="R-HSA-3371568">
    <property type="pathway name" value="Attenuation phase"/>
</dbReference>
<dbReference type="Reactome" id="R-HSA-3371571">
    <property type="pathway name" value="HSF1-dependent transactivation"/>
</dbReference>
<dbReference type="Reactome" id="R-HSA-380259">
    <property type="pathway name" value="Loss of Nlp from mitotic centrosomes"/>
</dbReference>
<dbReference type="Reactome" id="R-HSA-380270">
    <property type="pathway name" value="Recruitment of mitotic centrosome proteins and complexes"/>
</dbReference>
<dbReference type="Reactome" id="R-HSA-380284">
    <property type="pathway name" value="Loss of proteins required for interphase microtubule organization from the centrosome"/>
</dbReference>
<dbReference type="Reactome" id="R-HSA-380320">
    <property type="pathway name" value="Recruitment of NuMA to mitotic centrosomes"/>
</dbReference>
<dbReference type="Reactome" id="R-HSA-399954">
    <property type="pathway name" value="Sema3A PAK dependent Axon repulsion"/>
</dbReference>
<dbReference type="Reactome" id="R-HSA-4420097">
    <property type="pathway name" value="VEGFA-VEGFR2 Pathway"/>
</dbReference>
<dbReference type="Reactome" id="R-HSA-5218920">
    <property type="pathway name" value="VEGFR2 mediated vascular permeability"/>
</dbReference>
<dbReference type="Reactome" id="R-HSA-5336415">
    <property type="pathway name" value="Uptake and function of diphtheria toxin"/>
</dbReference>
<dbReference type="Reactome" id="R-HSA-5601884">
    <property type="pathway name" value="PIWI-interacting RNA (piRNA) biogenesis"/>
</dbReference>
<dbReference type="Reactome" id="R-HSA-5620912">
    <property type="pathway name" value="Anchoring of the basal body to the plasma membrane"/>
</dbReference>
<dbReference type="Reactome" id="R-HSA-5637810">
    <property type="pathway name" value="Constitutive Signaling by EGFRvIII"/>
</dbReference>
<dbReference type="Reactome" id="R-HSA-5675482">
    <property type="pathway name" value="Regulation of necroptotic cell death"/>
</dbReference>
<dbReference type="Reactome" id="R-HSA-6785807">
    <property type="pathway name" value="Interleukin-4 and Interleukin-13 signaling"/>
</dbReference>
<dbReference type="Reactome" id="R-HSA-6798695">
    <property type="pathway name" value="Neutrophil degranulation"/>
</dbReference>
<dbReference type="Reactome" id="R-HSA-8852276">
    <property type="pathway name" value="The role of GTSE1 in G2/M progression after G2 checkpoint"/>
</dbReference>
<dbReference type="Reactome" id="R-HSA-8854518">
    <property type="pathway name" value="AURKA Activation by TPX2"/>
</dbReference>
<dbReference type="Reactome" id="R-HSA-8863795">
    <property type="pathway name" value="Downregulation of ERBB2 signaling"/>
</dbReference>
<dbReference type="Reactome" id="R-HSA-8939211">
    <property type="pathway name" value="ESR-mediated signaling"/>
</dbReference>
<dbReference type="Reactome" id="R-HSA-9009391">
    <property type="pathway name" value="Extra-nuclear estrogen signaling"/>
</dbReference>
<dbReference type="Reactome" id="R-HSA-9013418">
    <property type="pathway name" value="RHOBTB2 GTPase cycle"/>
</dbReference>
<dbReference type="Reactome" id="R-HSA-9018519">
    <property type="pathway name" value="Estrogen-dependent gene expression"/>
</dbReference>
<dbReference type="Reactome" id="R-HSA-9613829">
    <property type="pathway name" value="Chaperone Mediated Autophagy"/>
</dbReference>
<dbReference type="Reactome" id="R-HSA-9634285">
    <property type="pathway name" value="Constitutive Signaling by Overexpressed ERBB2"/>
</dbReference>
<dbReference type="Reactome" id="R-HSA-9646399">
    <property type="pathway name" value="Aggrephagy"/>
</dbReference>
<dbReference type="Reactome" id="R-HSA-9652282">
    <property type="pathway name" value="Drug-mediated inhibition of ERBB2 signaling"/>
</dbReference>
<dbReference type="Reactome" id="R-HSA-9664565">
    <property type="pathway name" value="Signaling by ERBB2 KD Mutants"/>
</dbReference>
<dbReference type="Reactome" id="R-HSA-9665233">
    <property type="pathway name" value="Resistance of ERBB2 KD mutants to trastuzumab"/>
</dbReference>
<dbReference type="Reactome" id="R-HSA-9665244">
    <property type="pathway name" value="Resistance of ERBB2 KD mutants to sapitinib"/>
</dbReference>
<dbReference type="Reactome" id="R-HSA-9665245">
    <property type="pathway name" value="Resistance of ERBB2 KD mutants to tesevatinib"/>
</dbReference>
<dbReference type="Reactome" id="R-HSA-9665246">
    <property type="pathway name" value="Resistance of ERBB2 KD mutants to neratinib"/>
</dbReference>
<dbReference type="Reactome" id="R-HSA-9665247">
    <property type="pathway name" value="Resistance of ERBB2 KD mutants to osimertinib"/>
</dbReference>
<dbReference type="Reactome" id="R-HSA-9665249">
    <property type="pathway name" value="Resistance of ERBB2 KD mutants to afatinib"/>
</dbReference>
<dbReference type="Reactome" id="R-HSA-9665250">
    <property type="pathway name" value="Resistance of ERBB2 KD mutants to AEE788"/>
</dbReference>
<dbReference type="Reactome" id="R-HSA-9665251">
    <property type="pathway name" value="Resistance of ERBB2 KD mutants to lapatinib"/>
</dbReference>
<dbReference type="Reactome" id="R-HSA-9665348">
    <property type="pathway name" value="Signaling by ERBB2 ECD mutants"/>
</dbReference>
<dbReference type="Reactome" id="R-HSA-9665686">
    <property type="pathway name" value="Signaling by ERBB2 TMD/JMD mutants"/>
</dbReference>
<dbReference type="Reactome" id="R-HSA-9665737">
    <property type="pathway name" value="Drug resistance in ERBB2 TMD/JMD mutants"/>
</dbReference>
<dbReference type="Reactome" id="R-HSA-9679191">
    <property type="pathway name" value="Potential therapeutics for SARS"/>
</dbReference>
<dbReference type="Reactome" id="R-HSA-9705671">
    <property type="pathway name" value="SARS-CoV-2 activates/modulates innate and adaptive immune responses"/>
</dbReference>
<dbReference type="Reactome" id="R-HSA-9820962">
    <property type="pathway name" value="Assembly and release of respiratory syncytial virus (RSV) virions"/>
</dbReference>
<dbReference type="Reactome" id="R-HSA-9834752">
    <property type="pathway name" value="Respiratory syncytial virus genome replication"/>
</dbReference>
<dbReference type="SignaLink" id="P07900"/>
<dbReference type="SIGNOR" id="P07900"/>
<dbReference type="BioGRID-ORCS" id="3320">
    <property type="hits" value="39 hits in 1173 CRISPR screens"/>
</dbReference>
<dbReference type="CD-CODE" id="8C2F96ED">
    <property type="entry name" value="Centrosome"/>
</dbReference>
<dbReference type="CD-CODE" id="91857CE7">
    <property type="entry name" value="Nucleolus"/>
</dbReference>
<dbReference type="CD-CODE" id="DEE660B4">
    <property type="entry name" value="Stress granule"/>
</dbReference>
<dbReference type="CD-CODE" id="FB4E32DD">
    <property type="entry name" value="Presynaptic clusters and postsynaptic densities"/>
</dbReference>
<dbReference type="ChiTaRS" id="HSP90AA1">
    <property type="organism name" value="human"/>
</dbReference>
<dbReference type="EvolutionaryTrace" id="P07900"/>
<dbReference type="GenomeRNAi" id="3320"/>
<dbReference type="Pharos" id="P07900">
    <property type="development level" value="Tchem"/>
</dbReference>
<dbReference type="PRO" id="PR:P07900"/>
<dbReference type="Proteomes" id="UP000005640">
    <property type="component" value="Chromosome 14"/>
</dbReference>
<dbReference type="RNAct" id="P07900">
    <property type="molecule type" value="protein"/>
</dbReference>
<dbReference type="Bgee" id="ENSG00000080824">
    <property type="expression patterns" value="Expressed in Brodmann (1909) area 23 and 218 other cell types or tissues"/>
</dbReference>
<dbReference type="ExpressionAtlas" id="P07900">
    <property type="expression patterns" value="baseline and differential"/>
</dbReference>
<dbReference type="GO" id="GO:0016324">
    <property type="term" value="C:apical plasma membrane"/>
    <property type="evidence" value="ECO:0007669"/>
    <property type="project" value="Ensembl"/>
</dbReference>
<dbReference type="GO" id="GO:0044295">
    <property type="term" value="C:axonal growth cone"/>
    <property type="evidence" value="ECO:0000250"/>
    <property type="project" value="ARUK-UCL"/>
</dbReference>
<dbReference type="GO" id="GO:0016323">
    <property type="term" value="C:basolateral plasma membrane"/>
    <property type="evidence" value="ECO:0007669"/>
    <property type="project" value="Ensembl"/>
</dbReference>
<dbReference type="GO" id="GO:0031526">
    <property type="term" value="C:brush border membrane"/>
    <property type="evidence" value="ECO:0007669"/>
    <property type="project" value="Ensembl"/>
</dbReference>
<dbReference type="GO" id="GO:0009986">
    <property type="term" value="C:cell surface"/>
    <property type="evidence" value="ECO:0007669"/>
    <property type="project" value="Ensembl"/>
</dbReference>
<dbReference type="GO" id="GO:0005737">
    <property type="term" value="C:cytoplasm"/>
    <property type="evidence" value="ECO:0000314"/>
    <property type="project" value="CAFA"/>
</dbReference>
<dbReference type="GO" id="GO:0005829">
    <property type="term" value="C:cytosol"/>
    <property type="evidence" value="ECO:0000314"/>
    <property type="project" value="HPA"/>
</dbReference>
<dbReference type="GO" id="GO:0044294">
    <property type="term" value="C:dendritic growth cone"/>
    <property type="evidence" value="ECO:0000250"/>
    <property type="project" value="ARUK-UCL"/>
</dbReference>
<dbReference type="GO" id="GO:0071682">
    <property type="term" value="C:endocytic vesicle lumen"/>
    <property type="evidence" value="ECO:0000304"/>
    <property type="project" value="Reactome"/>
</dbReference>
<dbReference type="GO" id="GO:0070062">
    <property type="term" value="C:extracellular exosome"/>
    <property type="evidence" value="ECO:0007005"/>
    <property type="project" value="UniProtKB"/>
</dbReference>
<dbReference type="GO" id="GO:0005576">
    <property type="term" value="C:extracellular region"/>
    <property type="evidence" value="ECO:0000304"/>
    <property type="project" value="Reactome"/>
</dbReference>
<dbReference type="GO" id="GO:1904813">
    <property type="term" value="C:ficolin-1-rich granule lumen"/>
    <property type="evidence" value="ECO:0000304"/>
    <property type="project" value="Reactome"/>
</dbReference>
<dbReference type="GO" id="GO:0043202">
    <property type="term" value="C:lysosomal lumen"/>
    <property type="evidence" value="ECO:0000304"/>
    <property type="project" value="ParkinsonsUK-UCL"/>
</dbReference>
<dbReference type="GO" id="GO:0042470">
    <property type="term" value="C:melanosome"/>
    <property type="evidence" value="ECO:0007669"/>
    <property type="project" value="UniProtKB-SubCell"/>
</dbReference>
<dbReference type="GO" id="GO:0016020">
    <property type="term" value="C:membrane"/>
    <property type="evidence" value="ECO:0007005"/>
    <property type="project" value="UniProtKB"/>
</dbReference>
<dbReference type="GO" id="GO:0005739">
    <property type="term" value="C:mitochondrion"/>
    <property type="evidence" value="ECO:0000314"/>
    <property type="project" value="UniProtKB"/>
</dbReference>
<dbReference type="GO" id="GO:0043209">
    <property type="term" value="C:myelin sheath"/>
    <property type="evidence" value="ECO:0000318"/>
    <property type="project" value="GO_Central"/>
</dbReference>
<dbReference type="GO" id="GO:0043025">
    <property type="term" value="C:neuronal cell body"/>
    <property type="evidence" value="ECO:0000250"/>
    <property type="project" value="ARUK-UCL"/>
</dbReference>
<dbReference type="GO" id="GO:0005654">
    <property type="term" value="C:nucleoplasm"/>
    <property type="evidence" value="ECO:0000314"/>
    <property type="project" value="HPA"/>
</dbReference>
<dbReference type="GO" id="GO:0005634">
    <property type="term" value="C:nucleus"/>
    <property type="evidence" value="ECO:0007005"/>
    <property type="project" value="UniProtKB"/>
</dbReference>
<dbReference type="GO" id="GO:0048471">
    <property type="term" value="C:perinuclear region of cytoplasm"/>
    <property type="evidence" value="ECO:0000250"/>
    <property type="project" value="ARUK-UCL"/>
</dbReference>
<dbReference type="GO" id="GO:0005886">
    <property type="term" value="C:plasma membrane"/>
    <property type="evidence" value="ECO:0000318"/>
    <property type="project" value="GO_Central"/>
</dbReference>
<dbReference type="GO" id="GO:0032991">
    <property type="term" value="C:protein-containing complex"/>
    <property type="evidence" value="ECO:0000314"/>
    <property type="project" value="UniProtKB"/>
</dbReference>
<dbReference type="GO" id="GO:0034774">
    <property type="term" value="C:secretory granule lumen"/>
    <property type="evidence" value="ECO:0000304"/>
    <property type="project" value="Reactome"/>
</dbReference>
<dbReference type="GO" id="GO:0097226">
    <property type="term" value="C:sperm mitochondrial sheath"/>
    <property type="evidence" value="ECO:0007669"/>
    <property type="project" value="Ensembl"/>
</dbReference>
<dbReference type="GO" id="GO:0097524">
    <property type="term" value="C:sperm plasma membrane"/>
    <property type="evidence" value="ECO:0007669"/>
    <property type="project" value="Ensembl"/>
</dbReference>
<dbReference type="GO" id="GO:0005524">
    <property type="term" value="F:ATP binding"/>
    <property type="evidence" value="ECO:0000314"/>
    <property type="project" value="UniProtKB"/>
</dbReference>
<dbReference type="GO" id="GO:0016887">
    <property type="term" value="F:ATP hydrolysis activity"/>
    <property type="evidence" value="ECO:0000314"/>
    <property type="project" value="UniProtKB"/>
</dbReference>
<dbReference type="GO" id="GO:0140662">
    <property type="term" value="F:ATP-dependent protein folding chaperone"/>
    <property type="evidence" value="ECO:0007669"/>
    <property type="project" value="InterPro"/>
</dbReference>
<dbReference type="GO" id="GO:0002135">
    <property type="term" value="F:CTP binding"/>
    <property type="evidence" value="ECO:0007669"/>
    <property type="project" value="Ensembl"/>
</dbReference>
<dbReference type="GO" id="GO:0032564">
    <property type="term" value="F:dATP binding"/>
    <property type="evidence" value="ECO:0007669"/>
    <property type="project" value="Ensembl"/>
</dbReference>
<dbReference type="GO" id="GO:0097718">
    <property type="term" value="F:disordered domain specific binding"/>
    <property type="evidence" value="ECO:0000353"/>
    <property type="project" value="CAFA"/>
</dbReference>
<dbReference type="GO" id="GO:0070182">
    <property type="term" value="F:DNA polymerase binding"/>
    <property type="evidence" value="ECO:0000353"/>
    <property type="project" value="BHF-UCL"/>
</dbReference>
<dbReference type="GO" id="GO:0140767">
    <property type="term" value="F:enzyme-substrate adaptor activity"/>
    <property type="evidence" value="ECO:0000269"/>
    <property type="project" value="Reactome"/>
</dbReference>
<dbReference type="GO" id="GO:0005525">
    <property type="term" value="F:GTP binding"/>
    <property type="evidence" value="ECO:0007669"/>
    <property type="project" value="Ensembl"/>
</dbReference>
<dbReference type="GO" id="GO:0051020">
    <property type="term" value="F:GTPase binding"/>
    <property type="evidence" value="ECO:0000353"/>
    <property type="project" value="UniProtKB"/>
</dbReference>
<dbReference type="GO" id="GO:0042826">
    <property type="term" value="F:histone deacetylase binding"/>
    <property type="evidence" value="ECO:0000353"/>
    <property type="project" value="BHF-UCL"/>
</dbReference>
<dbReference type="GO" id="GO:0042802">
    <property type="term" value="F:identical protein binding"/>
    <property type="evidence" value="ECO:0000314"/>
    <property type="project" value="UniProtKB"/>
</dbReference>
<dbReference type="GO" id="GO:0023026">
    <property type="term" value="F:MHC class II protein complex binding"/>
    <property type="evidence" value="ECO:0007005"/>
    <property type="project" value="UniProtKB"/>
</dbReference>
<dbReference type="GO" id="GO:0003729">
    <property type="term" value="F:mRNA binding"/>
    <property type="evidence" value="ECO:0007669"/>
    <property type="project" value="Ensembl"/>
</dbReference>
<dbReference type="GO" id="GO:0030235">
    <property type="term" value="F:nitric-oxide synthase regulator activity"/>
    <property type="evidence" value="ECO:0000314"/>
    <property type="project" value="UniProtKB"/>
</dbReference>
<dbReference type="GO" id="GO:0042803">
    <property type="term" value="F:protein homodimerization activity"/>
    <property type="evidence" value="ECO:0000314"/>
    <property type="project" value="UniProtKB"/>
</dbReference>
<dbReference type="GO" id="GO:0019903">
    <property type="term" value="F:protein phosphatase binding"/>
    <property type="evidence" value="ECO:0007669"/>
    <property type="project" value="Ensembl"/>
</dbReference>
<dbReference type="GO" id="GO:1990782">
    <property type="term" value="F:protein tyrosine kinase binding"/>
    <property type="evidence" value="ECO:0000353"/>
    <property type="project" value="UniProtKB"/>
</dbReference>
<dbReference type="GO" id="GO:0051022">
    <property type="term" value="F:Rho GDP-dissociation inhibitor binding"/>
    <property type="evidence" value="ECO:0007669"/>
    <property type="project" value="Ensembl"/>
</dbReference>
<dbReference type="GO" id="GO:0003723">
    <property type="term" value="F:RNA binding"/>
    <property type="evidence" value="ECO:0007005"/>
    <property type="project" value="UniProtKB"/>
</dbReference>
<dbReference type="GO" id="GO:0097110">
    <property type="term" value="F:scaffold protein binding"/>
    <property type="evidence" value="ECO:0000353"/>
    <property type="project" value="UniProtKB"/>
</dbReference>
<dbReference type="GO" id="GO:0017098">
    <property type="term" value="F:sulfonylurea receptor binding"/>
    <property type="evidence" value="ECO:0007669"/>
    <property type="project" value="Ensembl"/>
</dbReference>
<dbReference type="GO" id="GO:0048156">
    <property type="term" value="F:tau protein binding"/>
    <property type="evidence" value="ECO:0000353"/>
    <property type="project" value="ARUK-UCL"/>
</dbReference>
<dbReference type="GO" id="GO:0030911">
    <property type="term" value="F:TPR domain binding"/>
    <property type="evidence" value="ECO:0000314"/>
    <property type="project" value="UniProtKB"/>
</dbReference>
<dbReference type="GO" id="GO:0044325">
    <property type="term" value="F:transmembrane transporter binding"/>
    <property type="evidence" value="ECO:0007669"/>
    <property type="project" value="Ensembl"/>
</dbReference>
<dbReference type="GO" id="GO:0031625">
    <property type="term" value="F:ubiquitin protein ligase binding"/>
    <property type="evidence" value="ECO:0000353"/>
    <property type="project" value="ARUK-UCL"/>
</dbReference>
<dbReference type="GO" id="GO:0051082">
    <property type="term" value="F:unfolded protein binding"/>
    <property type="evidence" value="ECO:0000318"/>
    <property type="project" value="GO_Central"/>
</dbReference>
<dbReference type="GO" id="GO:0002134">
    <property type="term" value="F:UTP binding"/>
    <property type="evidence" value="ECO:0007669"/>
    <property type="project" value="Ensembl"/>
</dbReference>
<dbReference type="GO" id="GO:0002218">
    <property type="term" value="P:activation of innate immune response"/>
    <property type="evidence" value="ECO:0000314"/>
    <property type="project" value="UniProtKB"/>
</dbReference>
<dbReference type="GO" id="GO:0010659">
    <property type="term" value="P:cardiac muscle cell apoptotic process"/>
    <property type="evidence" value="ECO:0007669"/>
    <property type="project" value="Ensembl"/>
</dbReference>
<dbReference type="GO" id="GO:0034605">
    <property type="term" value="P:cellular response to heat"/>
    <property type="evidence" value="ECO:0000318"/>
    <property type="project" value="GO_Central"/>
</dbReference>
<dbReference type="GO" id="GO:0098586">
    <property type="term" value="P:cellular response to virus"/>
    <property type="evidence" value="ECO:0000314"/>
    <property type="project" value="UniProtKB"/>
</dbReference>
<dbReference type="GO" id="GO:0061684">
    <property type="term" value="P:chaperone-mediated autophagy"/>
    <property type="evidence" value="ECO:0000304"/>
    <property type="project" value="ParkinsonsUK-UCL"/>
</dbReference>
<dbReference type="GO" id="GO:0051131">
    <property type="term" value="P:chaperone-mediated protein complex assembly"/>
    <property type="evidence" value="ECO:0000314"/>
    <property type="project" value="BHF-UCL"/>
</dbReference>
<dbReference type="GO" id="GO:0006839">
    <property type="term" value="P:mitochondrial transport"/>
    <property type="evidence" value="ECO:0000304"/>
    <property type="project" value="UniProtKB"/>
</dbReference>
<dbReference type="GO" id="GO:1902988">
    <property type="term" value="P:neurofibrillary tangle assembly"/>
    <property type="evidence" value="ECO:0000314"/>
    <property type="project" value="ARUK-UCL"/>
</dbReference>
<dbReference type="GO" id="GO:0001764">
    <property type="term" value="P:neuron migration"/>
    <property type="evidence" value="ECO:0007669"/>
    <property type="project" value="Ensembl"/>
</dbReference>
<dbReference type="GO" id="GO:0046209">
    <property type="term" value="P:nitric oxide metabolic process"/>
    <property type="evidence" value="ECO:0000304"/>
    <property type="project" value="Reactome"/>
</dbReference>
<dbReference type="GO" id="GO:0060452">
    <property type="term" value="P:positive regulation of cardiac muscle contraction"/>
    <property type="evidence" value="ECO:0007669"/>
    <property type="project" value="Ensembl"/>
</dbReference>
<dbReference type="GO" id="GO:0045793">
    <property type="term" value="P:positive regulation of cell size"/>
    <property type="evidence" value="ECO:0007669"/>
    <property type="project" value="Ensembl"/>
</dbReference>
<dbReference type="GO" id="GO:0002230">
    <property type="term" value="P:positive regulation of defense response to virus by host"/>
    <property type="evidence" value="ECO:0000314"/>
    <property type="project" value="UniProtKB"/>
</dbReference>
<dbReference type="GO" id="GO:0032728">
    <property type="term" value="P:positive regulation of interferon-beta production"/>
    <property type="evidence" value="ECO:0000314"/>
    <property type="project" value="UniProtKB"/>
</dbReference>
<dbReference type="GO" id="GO:0010592">
    <property type="term" value="P:positive regulation of lamellipodium assembly"/>
    <property type="evidence" value="ECO:0007669"/>
    <property type="project" value="Ensembl"/>
</dbReference>
<dbReference type="GO" id="GO:0045429">
    <property type="term" value="P:positive regulation of nitric oxide biosynthetic process"/>
    <property type="evidence" value="ECO:0000250"/>
    <property type="project" value="UniProtKB"/>
</dbReference>
<dbReference type="GO" id="GO:0045732">
    <property type="term" value="P:positive regulation of protein catabolic process"/>
    <property type="evidence" value="ECO:0000316"/>
    <property type="project" value="ARUK-UCL"/>
</dbReference>
<dbReference type="GO" id="GO:0042307">
    <property type="term" value="P:positive regulation of protein import into nucleus"/>
    <property type="evidence" value="ECO:0007669"/>
    <property type="project" value="Ensembl"/>
</dbReference>
<dbReference type="GO" id="GO:0032273">
    <property type="term" value="P:positive regulation of protein polymerization"/>
    <property type="evidence" value="ECO:0000314"/>
    <property type="project" value="ARUK-UCL"/>
</dbReference>
<dbReference type="GO" id="GO:0032212">
    <property type="term" value="P:positive regulation of telomere maintenance via telomerase"/>
    <property type="evidence" value="ECO:0000304"/>
    <property type="project" value="BHF-UCL"/>
</dbReference>
<dbReference type="GO" id="GO:0006457">
    <property type="term" value="P:protein folding"/>
    <property type="evidence" value="ECO:0000318"/>
    <property type="project" value="GO_Central"/>
</dbReference>
<dbReference type="GO" id="GO:0030150">
    <property type="term" value="P:protein import into mitochondrial matrix"/>
    <property type="evidence" value="ECO:0000314"/>
    <property type="project" value="BHF-UCL"/>
</dbReference>
<dbReference type="GO" id="GO:0042026">
    <property type="term" value="P:protein refolding"/>
    <property type="evidence" value="ECO:0000304"/>
    <property type="project" value="UniProtKB"/>
</dbReference>
<dbReference type="GO" id="GO:0050821">
    <property type="term" value="P:protein stabilization"/>
    <property type="evidence" value="ECO:0000315"/>
    <property type="project" value="UniProtKB"/>
</dbReference>
<dbReference type="GO" id="GO:0043335">
    <property type="term" value="P:protein unfolding"/>
    <property type="evidence" value="ECO:0000303"/>
    <property type="project" value="ParkinsonsUK-UCL"/>
</dbReference>
<dbReference type="GO" id="GO:0042981">
    <property type="term" value="P:regulation of apoptotic process"/>
    <property type="evidence" value="ECO:0000314"/>
    <property type="project" value="UniProtKB"/>
</dbReference>
<dbReference type="GO" id="GO:0099072">
    <property type="term" value="P:regulation of postsynaptic membrane neurotransmitter receptor levels"/>
    <property type="evidence" value="ECO:0007669"/>
    <property type="project" value="Ensembl"/>
</dbReference>
<dbReference type="GO" id="GO:0032880">
    <property type="term" value="P:regulation of protein localization"/>
    <property type="evidence" value="ECO:0000250"/>
    <property type="project" value="ARUK-UCL"/>
</dbReference>
<dbReference type="GO" id="GO:0031396">
    <property type="term" value="P:regulation of protein ubiquitination"/>
    <property type="evidence" value="ECO:0000314"/>
    <property type="project" value="BHF-UCL"/>
</dbReference>
<dbReference type="GO" id="GO:0043254">
    <property type="term" value="P:regulation of protein-containing complex assembly"/>
    <property type="evidence" value="ECO:0000303"/>
    <property type="project" value="ParkinsonsUK-UCL"/>
</dbReference>
<dbReference type="GO" id="GO:0046677">
    <property type="term" value="P:response to antibiotic"/>
    <property type="evidence" value="ECO:0000250"/>
    <property type="project" value="AgBase"/>
</dbReference>
<dbReference type="GO" id="GO:0042220">
    <property type="term" value="P:response to cocaine"/>
    <property type="evidence" value="ECO:0007669"/>
    <property type="project" value="Ensembl"/>
</dbReference>
<dbReference type="GO" id="GO:0009409">
    <property type="term" value="P:response to cold"/>
    <property type="evidence" value="ECO:0000250"/>
    <property type="project" value="AgBase"/>
</dbReference>
<dbReference type="GO" id="GO:0043627">
    <property type="term" value="P:response to estrogen"/>
    <property type="evidence" value="ECO:0007669"/>
    <property type="project" value="Ensembl"/>
</dbReference>
<dbReference type="GO" id="GO:0009408">
    <property type="term" value="P:response to heat"/>
    <property type="evidence" value="ECO:0000250"/>
    <property type="project" value="AgBase"/>
</dbReference>
<dbReference type="GO" id="GO:0009651">
    <property type="term" value="P:response to salt stress"/>
    <property type="evidence" value="ECO:0007669"/>
    <property type="project" value="Ensembl"/>
</dbReference>
<dbReference type="GO" id="GO:0006986">
    <property type="term" value="P:response to unfolded protein"/>
    <property type="evidence" value="ECO:0000303"/>
    <property type="project" value="UniProtKB"/>
</dbReference>
<dbReference type="GO" id="GO:0009410">
    <property type="term" value="P:response to xenobiotic stimulus"/>
    <property type="evidence" value="ECO:0007669"/>
    <property type="project" value="Ensembl"/>
</dbReference>
<dbReference type="GO" id="GO:0003009">
    <property type="term" value="P:skeletal muscle contraction"/>
    <property type="evidence" value="ECO:0007669"/>
    <property type="project" value="Ensembl"/>
</dbReference>
<dbReference type="GO" id="GO:1905323">
    <property type="term" value="P:telomerase holoenzyme complex assembly"/>
    <property type="evidence" value="ECO:0000314"/>
    <property type="project" value="BHF-UCL"/>
</dbReference>
<dbReference type="GO" id="GO:0007004">
    <property type="term" value="P:telomere maintenance via telomerase"/>
    <property type="evidence" value="ECO:0000314"/>
    <property type="project" value="BHF-UCL"/>
</dbReference>
<dbReference type="CDD" id="cd16927">
    <property type="entry name" value="HATPase_Hsp90-like"/>
    <property type="match status" value="1"/>
</dbReference>
<dbReference type="FunFam" id="1.20.120.790:FF:000001">
    <property type="entry name" value="Heat shock protein 90 alpha"/>
    <property type="match status" value="1"/>
</dbReference>
<dbReference type="FunFam" id="3.30.230.80:FF:000001">
    <property type="entry name" value="Heat shock protein 90 alpha"/>
    <property type="match status" value="1"/>
</dbReference>
<dbReference type="FunFam" id="3.40.50.11260:FF:000001">
    <property type="entry name" value="Heat shock protein 90 alpha"/>
    <property type="match status" value="1"/>
</dbReference>
<dbReference type="FunFam" id="3.30.565.10:FF:000204">
    <property type="entry name" value="Heat shock protein HSP 90-beta"/>
    <property type="match status" value="1"/>
</dbReference>
<dbReference type="Gene3D" id="3.30.230.80">
    <property type="match status" value="1"/>
</dbReference>
<dbReference type="Gene3D" id="3.40.50.11260">
    <property type="match status" value="1"/>
</dbReference>
<dbReference type="Gene3D" id="1.20.120.790">
    <property type="entry name" value="Heat shock protein 90, C-terminal domain"/>
    <property type="match status" value="1"/>
</dbReference>
<dbReference type="Gene3D" id="3.30.565.10">
    <property type="entry name" value="Histidine kinase-like ATPase, C-terminal domain"/>
    <property type="match status" value="1"/>
</dbReference>
<dbReference type="HAMAP" id="MF_00505">
    <property type="entry name" value="HSP90"/>
    <property type="match status" value="1"/>
</dbReference>
<dbReference type="InterPro" id="IPR036890">
    <property type="entry name" value="HATPase_C_sf"/>
</dbReference>
<dbReference type="InterPro" id="IPR019805">
    <property type="entry name" value="Heat_shock_protein_90_CS"/>
</dbReference>
<dbReference type="InterPro" id="IPR037196">
    <property type="entry name" value="HSP90_C"/>
</dbReference>
<dbReference type="InterPro" id="IPR001404">
    <property type="entry name" value="Hsp90_fam"/>
</dbReference>
<dbReference type="InterPro" id="IPR020575">
    <property type="entry name" value="Hsp90_N"/>
</dbReference>
<dbReference type="InterPro" id="IPR020568">
    <property type="entry name" value="Ribosomal_Su5_D2-typ_SF"/>
</dbReference>
<dbReference type="NCBIfam" id="NF003555">
    <property type="entry name" value="PRK05218.1"/>
    <property type="match status" value="1"/>
</dbReference>
<dbReference type="PANTHER" id="PTHR11528">
    <property type="entry name" value="HEAT SHOCK PROTEIN 90 FAMILY MEMBER"/>
    <property type="match status" value="1"/>
</dbReference>
<dbReference type="Pfam" id="PF13589">
    <property type="entry name" value="HATPase_c_3"/>
    <property type="match status" value="1"/>
</dbReference>
<dbReference type="Pfam" id="PF00183">
    <property type="entry name" value="HSP90"/>
    <property type="match status" value="1"/>
</dbReference>
<dbReference type="PIRSF" id="PIRSF002583">
    <property type="entry name" value="Hsp90"/>
    <property type="match status" value="1"/>
</dbReference>
<dbReference type="PRINTS" id="PR00775">
    <property type="entry name" value="HEATSHOCK90"/>
</dbReference>
<dbReference type="SMART" id="SM00387">
    <property type="entry name" value="HATPase_c"/>
    <property type="match status" value="1"/>
</dbReference>
<dbReference type="SUPFAM" id="SSF55874">
    <property type="entry name" value="ATPase domain of HSP90 chaperone/DNA topoisomerase II/histidine kinase"/>
    <property type="match status" value="1"/>
</dbReference>
<dbReference type="SUPFAM" id="SSF110942">
    <property type="entry name" value="HSP90 C-terminal domain"/>
    <property type="match status" value="1"/>
</dbReference>
<dbReference type="SUPFAM" id="SSF54211">
    <property type="entry name" value="Ribosomal protein S5 domain 2-like"/>
    <property type="match status" value="1"/>
</dbReference>
<dbReference type="PROSITE" id="PS00298">
    <property type="entry name" value="HSP90"/>
    <property type="match status" value="1"/>
</dbReference>
<reference key="1">
    <citation type="journal article" date="1989" name="Nucleic Acids Res.">
        <title>Nucleotide sequence of a full-length cDNA for 90 kDa heat-shock protein from human peripheral blood lymphocytes.</title>
        <authorList>
            <person name="Soeda E."/>
            <person name="Yokoyama K."/>
            <person name="Yamazaki M."/>
            <person name="Akaogi K."/>
            <person name="Miwa T."/>
            <person name="Imai T."/>
        </authorList>
    </citation>
    <scope>NUCLEOTIDE SEQUENCE [MRNA] (ISOFORM 1)</scope>
    <source>
        <tissue>Peripheral blood lymphocyte</tissue>
    </source>
</reference>
<reference key="2">
    <citation type="journal article" date="1990" name="Agric. Biol. Chem.">
        <title>Molecular cloning of cDNA encoding a human heat-shock protein whose expression is induced by adenovirus type 12 E1A in HeLa cells.</title>
        <authorList>
            <person name="Yamazaki M."/>
            <person name="Tashiro H."/>
            <person name="Yokoyama K."/>
            <person name="Soeda E."/>
        </authorList>
    </citation>
    <scope>NUCLEOTIDE SEQUENCE [MRNA] (ISOFORM 1)</scope>
</reference>
<reference key="3">
    <citation type="journal article" date="1989" name="Mol. Cell. Biol.">
        <title>Sequence and regulation of a gene encoding a human 89-kilodalton heat shock protein.</title>
        <authorList>
            <person name="Hickey E."/>
            <person name="Brandon S.E."/>
            <person name="Smale G."/>
            <person name="Lloyd D."/>
            <person name="Weber L.A."/>
        </authorList>
    </citation>
    <scope>NUCLEOTIDE SEQUENCE [GENOMIC DNA]</scope>
    <source>
        <tissue>Placenta</tissue>
    </source>
</reference>
<reference key="4">
    <citation type="journal article" date="2005" name="Genomics">
        <title>The HSP90 family of genes in the human genome: insights into their divergence and evolution.</title>
        <authorList>
            <person name="Chen B."/>
            <person name="Piel W.H."/>
            <person name="Gui L."/>
            <person name="Bruford E."/>
            <person name="Monteiro A."/>
        </authorList>
    </citation>
    <scope>NUCLEOTIDE SEQUENCE [MRNA] (ISOFORMS 1 AND 2)</scope>
    <scope>NOMENCLATURE</scope>
</reference>
<reference key="5">
    <citation type="submission" date="2005-12" db="EMBL/GenBank/DDBJ databases">
        <authorList>
            <consortium name="NHLBI resequencing and genotyping service (RS&amp;G)"/>
        </authorList>
    </citation>
    <scope>NUCLEOTIDE SEQUENCE [GENOMIC DNA]</scope>
</reference>
<reference key="6">
    <citation type="journal article" date="2004" name="Nat. Genet.">
        <title>Complete sequencing and characterization of 21,243 full-length human cDNAs.</title>
        <authorList>
            <person name="Ota T."/>
            <person name="Suzuki Y."/>
            <person name="Nishikawa T."/>
            <person name="Otsuki T."/>
            <person name="Sugiyama T."/>
            <person name="Irie R."/>
            <person name="Wakamatsu A."/>
            <person name="Hayashi K."/>
            <person name="Sato H."/>
            <person name="Nagai K."/>
            <person name="Kimura K."/>
            <person name="Makita H."/>
            <person name="Sekine M."/>
            <person name="Obayashi M."/>
            <person name="Nishi T."/>
            <person name="Shibahara T."/>
            <person name="Tanaka T."/>
            <person name="Ishii S."/>
            <person name="Yamamoto J."/>
            <person name="Saito K."/>
            <person name="Kawai Y."/>
            <person name="Isono Y."/>
            <person name="Nakamura Y."/>
            <person name="Nagahari K."/>
            <person name="Murakami K."/>
            <person name="Yasuda T."/>
            <person name="Iwayanagi T."/>
            <person name="Wagatsuma M."/>
            <person name="Shiratori A."/>
            <person name="Sudo H."/>
            <person name="Hosoiri T."/>
            <person name="Kaku Y."/>
            <person name="Kodaira H."/>
            <person name="Kondo H."/>
            <person name="Sugawara M."/>
            <person name="Takahashi M."/>
            <person name="Kanda K."/>
            <person name="Yokoi T."/>
            <person name="Furuya T."/>
            <person name="Kikkawa E."/>
            <person name="Omura Y."/>
            <person name="Abe K."/>
            <person name="Kamihara K."/>
            <person name="Katsuta N."/>
            <person name="Sato K."/>
            <person name="Tanikawa M."/>
            <person name="Yamazaki M."/>
            <person name="Ninomiya K."/>
            <person name="Ishibashi T."/>
            <person name="Yamashita H."/>
            <person name="Murakawa K."/>
            <person name="Fujimori K."/>
            <person name="Tanai H."/>
            <person name="Kimata M."/>
            <person name="Watanabe M."/>
            <person name="Hiraoka S."/>
            <person name="Chiba Y."/>
            <person name="Ishida S."/>
            <person name="Ono Y."/>
            <person name="Takiguchi S."/>
            <person name="Watanabe S."/>
            <person name="Yosida M."/>
            <person name="Hotuta T."/>
            <person name="Kusano J."/>
            <person name="Kanehori K."/>
            <person name="Takahashi-Fujii A."/>
            <person name="Hara H."/>
            <person name="Tanase T.-O."/>
            <person name="Nomura Y."/>
            <person name="Togiya S."/>
            <person name="Komai F."/>
            <person name="Hara R."/>
            <person name="Takeuchi K."/>
            <person name="Arita M."/>
            <person name="Imose N."/>
            <person name="Musashino K."/>
            <person name="Yuuki H."/>
            <person name="Oshima A."/>
            <person name="Sasaki N."/>
            <person name="Aotsuka S."/>
            <person name="Yoshikawa Y."/>
            <person name="Matsunawa H."/>
            <person name="Ichihara T."/>
            <person name="Shiohata N."/>
            <person name="Sano S."/>
            <person name="Moriya S."/>
            <person name="Momiyama H."/>
            <person name="Satoh N."/>
            <person name="Takami S."/>
            <person name="Terashima Y."/>
            <person name="Suzuki O."/>
            <person name="Nakagawa S."/>
            <person name="Senoh A."/>
            <person name="Mizoguchi H."/>
            <person name="Goto Y."/>
            <person name="Shimizu F."/>
            <person name="Wakebe H."/>
            <person name="Hishigaki H."/>
            <person name="Watanabe T."/>
            <person name="Sugiyama A."/>
            <person name="Takemoto M."/>
            <person name="Kawakami B."/>
            <person name="Yamazaki M."/>
            <person name="Watanabe K."/>
            <person name="Kumagai A."/>
            <person name="Itakura S."/>
            <person name="Fukuzumi Y."/>
            <person name="Fujimori Y."/>
            <person name="Komiyama M."/>
            <person name="Tashiro H."/>
            <person name="Tanigami A."/>
            <person name="Fujiwara T."/>
            <person name="Ono T."/>
            <person name="Yamada K."/>
            <person name="Fujii Y."/>
            <person name="Ozaki K."/>
            <person name="Hirao M."/>
            <person name="Ohmori Y."/>
            <person name="Kawabata A."/>
            <person name="Hikiji T."/>
            <person name="Kobatake N."/>
            <person name="Inagaki H."/>
            <person name="Ikema Y."/>
            <person name="Okamoto S."/>
            <person name="Okitani R."/>
            <person name="Kawakami T."/>
            <person name="Noguchi S."/>
            <person name="Itoh T."/>
            <person name="Shigeta K."/>
            <person name="Senba T."/>
            <person name="Matsumura K."/>
            <person name="Nakajima Y."/>
            <person name="Mizuno T."/>
            <person name="Morinaga M."/>
            <person name="Sasaki M."/>
            <person name="Togashi T."/>
            <person name="Oyama M."/>
            <person name="Hata H."/>
            <person name="Watanabe M."/>
            <person name="Komatsu T."/>
            <person name="Mizushima-Sugano J."/>
            <person name="Satoh T."/>
            <person name="Shirai Y."/>
            <person name="Takahashi Y."/>
            <person name="Nakagawa K."/>
            <person name="Okumura K."/>
            <person name="Nagase T."/>
            <person name="Nomura N."/>
            <person name="Kikuchi H."/>
            <person name="Masuho Y."/>
            <person name="Yamashita R."/>
            <person name="Nakai K."/>
            <person name="Yada T."/>
            <person name="Nakamura Y."/>
            <person name="Ohara O."/>
            <person name="Isogai T."/>
            <person name="Sugano S."/>
        </authorList>
    </citation>
    <scope>NUCLEOTIDE SEQUENCE [LARGE SCALE MRNA] (ISOFORMS 1 AND 2)</scope>
    <source>
        <tissue>Placenta</tissue>
        <tissue>Teratocarcinoma</tissue>
    </source>
</reference>
<reference key="7">
    <citation type="journal article" date="2003" name="Nature">
        <title>The DNA sequence and analysis of human chromosome 14.</title>
        <authorList>
            <person name="Heilig R."/>
            <person name="Eckenberg R."/>
            <person name="Petit J.-L."/>
            <person name="Fonknechten N."/>
            <person name="Da Silva C."/>
            <person name="Cattolico L."/>
            <person name="Levy M."/>
            <person name="Barbe V."/>
            <person name="De Berardinis V."/>
            <person name="Ureta-Vidal A."/>
            <person name="Pelletier E."/>
            <person name="Vico V."/>
            <person name="Anthouard V."/>
            <person name="Rowen L."/>
            <person name="Madan A."/>
            <person name="Qin S."/>
            <person name="Sun H."/>
            <person name="Du H."/>
            <person name="Pepin K."/>
            <person name="Artiguenave F."/>
            <person name="Robert C."/>
            <person name="Cruaud C."/>
            <person name="Bruels T."/>
            <person name="Jaillon O."/>
            <person name="Friedlander L."/>
            <person name="Samson G."/>
            <person name="Brottier P."/>
            <person name="Cure S."/>
            <person name="Segurens B."/>
            <person name="Aniere F."/>
            <person name="Samain S."/>
            <person name="Crespeau H."/>
            <person name="Abbasi N."/>
            <person name="Aiach N."/>
            <person name="Boscus D."/>
            <person name="Dickhoff R."/>
            <person name="Dors M."/>
            <person name="Dubois I."/>
            <person name="Friedman C."/>
            <person name="Gouyvenoux M."/>
            <person name="James R."/>
            <person name="Madan A."/>
            <person name="Mairey-Estrada B."/>
            <person name="Mangenot S."/>
            <person name="Martins N."/>
            <person name="Menard M."/>
            <person name="Oztas S."/>
            <person name="Ratcliffe A."/>
            <person name="Shaffer T."/>
            <person name="Trask B."/>
            <person name="Vacherie B."/>
            <person name="Bellemere C."/>
            <person name="Belser C."/>
            <person name="Besnard-Gonnet M."/>
            <person name="Bartol-Mavel D."/>
            <person name="Boutard M."/>
            <person name="Briez-Silla S."/>
            <person name="Combette S."/>
            <person name="Dufosse-Laurent V."/>
            <person name="Ferron C."/>
            <person name="Lechaplais C."/>
            <person name="Louesse C."/>
            <person name="Muselet D."/>
            <person name="Magdelenat G."/>
            <person name="Pateau E."/>
            <person name="Petit E."/>
            <person name="Sirvain-Trukniewicz P."/>
            <person name="Trybou A."/>
            <person name="Vega-Czarny N."/>
            <person name="Bataille E."/>
            <person name="Bluet E."/>
            <person name="Bordelais I."/>
            <person name="Dubois M."/>
            <person name="Dumont C."/>
            <person name="Guerin T."/>
            <person name="Haffray S."/>
            <person name="Hammadi R."/>
            <person name="Muanga J."/>
            <person name="Pellouin V."/>
            <person name="Robert D."/>
            <person name="Wunderle E."/>
            <person name="Gauguet G."/>
            <person name="Roy A."/>
            <person name="Sainte-Marthe L."/>
            <person name="Verdier J."/>
            <person name="Verdier-Discala C."/>
            <person name="Hillier L.W."/>
            <person name="Fulton L."/>
            <person name="McPherson J."/>
            <person name="Matsuda F."/>
            <person name="Wilson R."/>
            <person name="Scarpelli C."/>
            <person name="Gyapay G."/>
            <person name="Wincker P."/>
            <person name="Saurin W."/>
            <person name="Quetier F."/>
            <person name="Waterston R."/>
            <person name="Hood L."/>
            <person name="Weissenbach J."/>
        </authorList>
    </citation>
    <scope>NUCLEOTIDE SEQUENCE [LARGE SCALE GENOMIC DNA]</scope>
</reference>
<reference key="8">
    <citation type="submission" date="2005-07" db="EMBL/GenBank/DDBJ databases">
        <authorList>
            <person name="Mural R.J."/>
            <person name="Istrail S."/>
            <person name="Sutton G.G."/>
            <person name="Florea L."/>
            <person name="Halpern A.L."/>
            <person name="Mobarry C.M."/>
            <person name="Lippert R."/>
            <person name="Walenz B."/>
            <person name="Shatkay H."/>
            <person name="Dew I."/>
            <person name="Miller J.R."/>
            <person name="Flanigan M.J."/>
            <person name="Edwards N.J."/>
            <person name="Bolanos R."/>
            <person name="Fasulo D."/>
            <person name="Halldorsson B.V."/>
            <person name="Hannenhalli S."/>
            <person name="Turner R."/>
            <person name="Yooseph S."/>
            <person name="Lu F."/>
            <person name="Nusskern D.R."/>
            <person name="Shue B.C."/>
            <person name="Zheng X.H."/>
            <person name="Zhong F."/>
            <person name="Delcher A.L."/>
            <person name="Huson D.H."/>
            <person name="Kravitz S.A."/>
            <person name="Mouchard L."/>
            <person name="Reinert K."/>
            <person name="Remington K.A."/>
            <person name="Clark A.G."/>
            <person name="Waterman M.S."/>
            <person name="Eichler E.E."/>
            <person name="Adams M.D."/>
            <person name="Hunkapiller M.W."/>
            <person name="Myers E.W."/>
            <person name="Venter J.C."/>
        </authorList>
    </citation>
    <scope>NUCLEOTIDE SEQUENCE [LARGE SCALE GENOMIC DNA]</scope>
</reference>
<reference key="9">
    <citation type="journal article" date="1988" name="Gene">
        <title>Heat-shock proteins, Hsp84 and Hsp86, of mice and men: two related genes encode formerly identified tumour-specific transplantation antigens.</title>
        <authorList>
            <person name="Hoffmann T."/>
            <person name="Hovemann B."/>
        </authorList>
    </citation>
    <scope>NUCLEOTIDE SEQUENCE [MRNA] OF 1-312</scope>
</reference>
<reference key="10">
    <citation type="journal article" date="1989" name="Gene">
        <title>Cloning and analysis of a human 86-kDa heat-shock-protein-encoding gene.</title>
        <authorList>
            <person name="Walter T."/>
            <person name="Drabent B."/>
            <person name="Krebs H."/>
            <person name="Tomalak M."/>
            <person name="Heiss S."/>
            <person name="Benecke B.J.J."/>
        </authorList>
    </citation>
    <scope>NUCLEOTIDE SEQUENCE [GENOMIC DNA] OF 1-312</scope>
</reference>
<reference key="11">
    <citation type="submission" date="2008-12" db="UniProtKB">
        <authorList>
            <person name="Lubec G."/>
            <person name="Vishwanath V."/>
            <person name="Chen W.-Q."/>
            <person name="Sun Y."/>
        </authorList>
    </citation>
    <scope>PROTEIN SEQUENCE OF 101-112; 210-224; 300-314; 328-338; 346-355; 387-400; 465-478 AND 633-647</scope>
    <scope>IDENTIFICATION BY MASS SPECTROMETRY</scope>
    <source>
        <tissue>Brain</tissue>
        <tissue>Cajal-Retzius cell</tissue>
        <tissue>Fetal brain cortex</tissue>
    </source>
</reference>
<reference key="12">
    <citation type="journal article" date="2004" name="Genome Res.">
        <title>The status, quality, and expansion of the NIH full-length cDNA project: the Mammalian Gene Collection (MGC).</title>
        <authorList>
            <consortium name="The MGC Project Team"/>
        </authorList>
    </citation>
    <scope>NUCLEOTIDE SEQUENCE [LARGE SCALE MRNA] OF 185-732</scope>
    <source>
        <tissue>Placenta</tissue>
    </source>
</reference>
<reference key="13">
    <citation type="submission" date="1996-09" db="EMBL/GenBank/DDBJ databases">
        <title>The analysis of the genes reactive to monoclonal antibody, CE5.</title>
        <authorList>
            <person name="Tanaka M."/>
            <person name="Tanaka T."/>
            <person name="Mitsui Y."/>
            <person name="Yamamoto M."/>
            <person name="Wood J.N."/>
        </authorList>
    </citation>
    <scope>NUCLEOTIDE SEQUENCE [MRNA] OF 539-732</scope>
    <source>
        <tissue>Heart</tissue>
    </source>
</reference>
<reference key="14">
    <citation type="journal article" date="1989" name="J. Biol. Chem.">
        <title>Two human 90-kDa heat shock proteins are phosphorylated in vivo at conserved serines that are phosphorylated in vitro by casein kinase II.</title>
        <authorList>
            <person name="Lees-Miller S.P."/>
            <person name="Anderson C.W."/>
        </authorList>
    </citation>
    <scope>PROTEIN SEQUENCE OF 2-21</scope>
    <scope>PHOSPHORYLATION AT SER-231 AND SER-263</scope>
</reference>
<reference key="15">
    <citation type="journal article" date="1999" name="Mol. Cell. Biol.">
        <title>Kinase suppressor of Ras forms a multiprotein signaling complex and modulates MEK localization.</title>
        <authorList>
            <person name="Stewart S."/>
            <person name="Sundaram M."/>
            <person name="Zhang Y."/>
            <person name="Lee J."/>
            <person name="Han M."/>
            <person name="Guan K.L."/>
        </authorList>
    </citation>
    <scope>PROTEIN SEQUENCE OF 154-163 AND 186-191</scope>
    <scope>INTERACTION WITH KSR1</scope>
</reference>
<reference key="16">
    <citation type="journal article" date="2005" name="Proc. Natl. Acad. Sci. U.S.A.">
        <title>S-nitrosylation of Hsp90 promotes the inhibition of its ATPase and endothelial nitric oxide synthase regulatory activities.</title>
        <authorList>
            <person name="Martinez-Ruiz A."/>
            <person name="Villanueva L."/>
            <person name="Gonzalez de Orduna C."/>
            <person name="Lopez-Ferrer D."/>
            <person name="Higueras M.A."/>
            <person name="Tarin C."/>
            <person name="Rodriguez-Crespo I."/>
            <person name="Vazquez J."/>
            <person name="Lamas S."/>
        </authorList>
    </citation>
    <scope>PROTEIN SEQUENCE OF 592-612</scope>
    <scope>FUNCTION</scope>
    <scope>CATALYTIC ACTIVITY</scope>
    <scope>MUTAGENESIS OF CYS-598</scope>
    <scope>S-NITROSYLATION AT CYS-598</scope>
</reference>
<reference key="17">
    <citation type="journal article" date="1989" name="J. Biol. Chem.">
        <title>The human double-stranded DNA-activated protein kinase phosphorylates the 90-kDa heat-shock protein, hsp90 alpha at two NH2-terminal threonine residues.</title>
        <authorList>
            <person name="Lees-Miller S.P."/>
            <person name="Anderson C.W."/>
        </authorList>
    </citation>
    <scope>PHOSPHORYLATION AT THR-5 AND THR-7</scope>
</reference>
<reference key="18">
    <citation type="journal article" date="1994" name="Mol. Cell. Biol.">
        <title>The carboxy-terminal region of mammalian HSP90 is required for its dimerization and function in vivo.</title>
        <authorList>
            <person name="Minami Y."/>
            <person name="Kimura Y."/>
            <person name="Kawasaki H."/>
            <person name="Suzuki K."/>
            <person name="Yahara I."/>
        </authorList>
    </citation>
    <scope>HOMODIMERIZATION</scope>
</reference>
<reference key="19">
    <citation type="journal article" date="1995" name="Eur. J. Biochem.">
        <title>Mechanism of dimer formation of the 90-kDa heat-shock protein.</title>
        <authorList>
            <person name="Nemoto T."/>
            <person name="Ohara-Nemoto Y."/>
            <person name="Ota M."/>
            <person name="Takagi T."/>
            <person name="Yokoyama K."/>
        </authorList>
    </citation>
    <scope>SUBUNIT</scope>
</reference>
<reference key="20">
    <citation type="journal article" date="1997" name="J. Biol. Chem.">
        <title>Protein phosphatase 5 is a major component of glucocorticoid receptor.hsp90 complexes with properties of an FK506-binding immunophilin.</title>
        <authorList>
            <person name="Silverstein A.M."/>
            <person name="Galigniana M.D."/>
            <person name="Chen M.S."/>
            <person name="Owens-Grillo J.K."/>
            <person name="Chinkers M."/>
            <person name="Pratt W.B."/>
        </authorList>
    </citation>
    <scope>IDENTIFICATION IN A COMPLEX WITH NR3C1 AND FKBP4; PPID; PPP5C OR STIP1</scope>
</reference>
<reference key="21">
    <citation type="journal article" date="1998" name="J. Biol. Chem.">
        <title>Specific binding of tetratricopeptide repeat proteins to the C-terminal 12-kDa domain of hsp90.</title>
        <authorList>
            <person name="Young J.C."/>
            <person name="Obermann W.M."/>
            <person name="Hartl F.U."/>
        </authorList>
    </citation>
    <scope>INTERACTION WITH TOM34</scope>
</reference>
<reference key="22">
    <citation type="journal article" date="1999" name="Int. J. Cancer">
        <title>Antigens recognized by autologous antibody in patients with renal-cell carcinoma.</title>
        <authorList>
            <person name="Scanlan M.J."/>
            <person name="Gordan J.D."/>
            <person name="Williamson B."/>
            <person name="Stockert E."/>
            <person name="Bander N.H."/>
            <person name="Jongeneel C.V."/>
            <person name="Gure A.O."/>
            <person name="Jaeger D."/>
            <person name="Jaeger E."/>
            <person name="Knuth A."/>
            <person name="Chen Y.-T."/>
            <person name="Old L.J."/>
        </authorList>
    </citation>
    <scope>IDENTIFICATION AS A RENAL CANCER ANTIGEN</scope>
    <source>
        <tissue>Renal cell carcinoma</tissue>
    </source>
</reference>
<reference key="23">
    <citation type="journal article" date="2001" name="J. Biol. Chem.">
        <title>Stable association of hsp90 and p23, but Not hsp70, with active human telomerase.</title>
        <authorList>
            <person name="Forsythe H.L."/>
            <person name="Jarvis J.L."/>
            <person name="Turner J.W."/>
            <person name="Elmore L.W."/>
            <person name="Holt S.E."/>
        </authorList>
    </citation>
    <scope>INTERACTION WITH TERT</scope>
    <scope>FUNCTION AS A CO-CHAPERONE IN TELOMERASE HOLOENZYME ASSEMBLY</scope>
</reference>
<reference key="24">
    <citation type="journal article" date="2001" name="J. Biol. Chem.">
        <title>Evidence for a mechanism of repression of heat shock factor 1 transcriptional activity by a multichaperone complex.</title>
        <authorList>
            <person name="Guo Y."/>
            <person name="Guettouche T."/>
            <person name="Fenna M."/>
            <person name="Boellmann F."/>
            <person name="Pratt W.B."/>
            <person name="Toft D.O."/>
            <person name="Smith D.F."/>
            <person name="Voellmy R."/>
        </authorList>
    </citation>
    <scope>INTERACTION WITH HSF1</scope>
</reference>
<reference key="25">
    <citation type="journal article" date="2001" name="Nat. Immunol.">
        <title>A CD14-independent LPS receptor cluster.</title>
        <authorList>
            <person name="Triantafilou K."/>
            <person name="Triantafilou M."/>
            <person name="Dedrick R.L."/>
        </authorList>
    </citation>
    <scope>FUNCTION</scope>
    <scope>IDENTIFICATION AS LPS RECEPTOR</scope>
    <scope>INTERACTION WITH CXCR4; GDF5 AND HSPA8</scope>
    <scope>SUBCELLULAR LOCATION</scope>
    <scope>TISSUE SPECIFICITY</scope>
</reference>
<reference key="26">
    <citation type="journal article" date="2003" name="Cell">
        <title>Molecular chaperones Hsp90 and Hsp70 deliver preproteins to the mitochondrial import receptor Tom70.</title>
        <authorList>
            <person name="Young J.C."/>
            <person name="Hoogenraad N.J."/>
            <person name="Hartl F.U."/>
        </authorList>
    </citation>
    <scope>FUNCTION</scope>
    <scope>INTERACTION WITH TOMM70</scope>
    <scope>CATALYTIC ACTIVITY</scope>
</reference>
<reference key="27">
    <citation type="journal article" date="2003" name="EMBO J.">
        <title>Cofactor Tpr2 combines two TPR domains and a J domain to regulate the Hsp70/Hsp90 chaperone system.</title>
        <authorList>
            <person name="Brychzy A."/>
            <person name="Rein T."/>
            <person name="Winklhofer K.F."/>
            <person name="Hartl F.U."/>
            <person name="Young J.C."/>
            <person name="Obermann W.M."/>
        </authorList>
    </citation>
    <scope>INTERACTION WITH DNAJC7</scope>
</reference>
<reference key="28">
    <citation type="journal article" date="2003" name="J. Biol. Chem.">
        <title>Aha1 binds to the middle domain of Hsp90, contributes to client protein activation, and stimulates the ATPase activity of the molecular chaperone.</title>
        <authorList>
            <person name="Lotz G.P."/>
            <person name="Lin H."/>
            <person name="Harst A."/>
            <person name="Obermann W.M.J."/>
        </authorList>
    </citation>
    <scope>INTERACTION WITH AHSA1</scope>
</reference>
<reference key="29">
    <citation type="journal article" date="2003" name="Nature">
        <title>Proteomic characterization of the human centrosome by protein correlation profiling.</title>
        <authorList>
            <person name="Andersen J.S."/>
            <person name="Wilkinson C.J."/>
            <person name="Mayor T."/>
            <person name="Mortensen P."/>
            <person name="Nigg E.A."/>
            <person name="Mann M."/>
        </authorList>
    </citation>
    <scope>IDENTIFICATION BY MASS SPECTROMETRY</scope>
    <source>
        <tissue>Lymphoblast</tissue>
    </source>
</reference>
<reference key="30">
    <citation type="journal article" date="2004" name="Nat. Cell Biol.">
        <title>SMYD3 encodes a histone methyltransferase involved in the proliferation of cancer cells.</title>
        <authorList>
            <person name="Hamamoto R."/>
            <person name="Furukawa Y."/>
            <person name="Morita M."/>
            <person name="Iimura Y."/>
            <person name="Silva F.P."/>
            <person name="Li M."/>
            <person name="Yagyu R."/>
            <person name="Nakamura Y."/>
        </authorList>
    </citation>
    <scope>INTERACTION WITH SMYD3</scope>
</reference>
<reference key="31">
    <citation type="journal article" date="2005" name="Arch. Biochem. Biophys.">
        <title>Small glutamine-rich tetratricopeptide repeat-containing protein is composed of three structural units with distinct functions.</title>
        <authorList>
            <person name="Liou S.T."/>
            <person name="Wang C."/>
        </authorList>
    </citation>
    <scope>INTERACTION WITH SGTA AND TTC1</scope>
</reference>
<reference key="32">
    <citation type="journal article" date="2005" name="Biochem. J.">
        <title>Human protein phosphatase 5 dissociates from heat-shock proteins and is proteolytically activated in response to arachidonic acid and the microtubule-depolymerizing drug nocodazole.</title>
        <authorList>
            <person name="Zeke T."/>
            <person name="Morrice N."/>
            <person name="Vazquez-Martin C."/>
            <person name="Cohen P.T."/>
        </authorList>
    </citation>
    <scope>INTERACTION WITH PPP5C</scope>
    <scope>IDENTIFICATION BY MASS SPECTROMETRY</scope>
</reference>
<reference key="33">
    <citation type="journal article" date="2005" name="EMBO J.">
        <title>Molecular basis for TPR domain-mediated regulation of protein phosphatase 5.</title>
        <authorList>
            <person name="Yang J."/>
            <person name="Roe S.M."/>
            <person name="Cliff M.J."/>
            <person name="Williams M.A."/>
            <person name="Ladbury J.E."/>
            <person name="Cohen P.T."/>
            <person name="Barford D."/>
        </authorList>
    </citation>
    <scope>FUNCTION</scope>
    <scope>INTERACTION WITH PPP5C</scope>
</reference>
<reference key="34">
    <citation type="journal article" date="2006" name="Cell">
        <title>Global, in vivo, and site-specific phosphorylation dynamics in signaling networks.</title>
        <authorList>
            <person name="Olsen J.V."/>
            <person name="Blagoev B."/>
            <person name="Gnad F."/>
            <person name="Macek B."/>
            <person name="Kumar C."/>
            <person name="Mortensen P."/>
            <person name="Mann M."/>
        </authorList>
    </citation>
    <scope>PHOSPHORYLATION [LARGE SCALE ANALYSIS] AT SER-231 AND SER-263</scope>
    <scope>IDENTIFICATION BY MASS SPECTROMETRY [LARGE SCALE ANALYSIS]</scope>
    <source>
        <tissue>Cervix carcinoma</tissue>
    </source>
</reference>
<reference key="35">
    <citation type="journal article" date="2006" name="Pituitary">
        <title>Phosphoproteomic analysis of the human pituitary.</title>
        <authorList>
            <person name="Beranova-Giorgianni S."/>
            <person name="Zhao Y."/>
            <person name="Desiderio D.M."/>
            <person name="Giorgianni F."/>
        </authorList>
    </citation>
    <scope>PHOSPHORYLATION [LARGE SCALE ANALYSIS] AT SER-263</scope>
    <scope>IDENTIFICATION BY MASS SPECTROMETRY [LARGE SCALE ANALYSIS]</scope>
    <source>
        <tissue>Pituitary</tissue>
    </source>
</reference>
<reference key="36">
    <citation type="journal article" date="2006" name="Structure">
        <title>Conformational diversity in the TPR domain-mediated interaction of protein phosphatase 5 with Hsp90.</title>
        <authorList>
            <person name="Cliff M.J."/>
            <person name="Harris R."/>
            <person name="Barford D."/>
            <person name="Ladbury J.E."/>
            <person name="Williams M.A."/>
        </authorList>
    </citation>
    <scope>INTERACTION WITH PPP5C</scope>
</reference>
<reference key="37">
    <citation type="journal article" date="2007" name="J. Immunol.">
        <title>Heat shock protein 90 associates with monarch-1 and regulates its ability to promote degradation of NF-kappaB-inducing kinase.</title>
        <authorList>
            <person name="Arthur J.C."/>
            <person name="Lich J.D."/>
            <person name="Aziz R.K."/>
            <person name="Kotb M."/>
            <person name="Ting J.P."/>
        </authorList>
    </citation>
    <scope>INTERACTION WITH NLRP12</scope>
</reference>
<reference key="38">
    <citation type="journal article" date="2008" name="J. Biol. Chem.">
        <title>Conserved conformational changes in the ATPase cycle of human Hsp90.</title>
        <authorList>
            <person name="Richter K."/>
            <person name="Soroka J."/>
            <person name="Skalniak L."/>
            <person name="Leskovar A."/>
            <person name="Hessling M."/>
            <person name="Reinstein J."/>
            <person name="Buchner J."/>
        </authorList>
    </citation>
    <scope>SUBUNIT</scope>
    <scope>ACTIVITY REGULATION</scope>
    <scope>BIOPHYSICOCHEMICAL PROPERTIES</scope>
</reference>
<reference key="39">
    <citation type="journal article" date="2008" name="J. Proteome Res.">
        <title>Phosphorylation analysis of primary human T lymphocytes using sequential IMAC and titanium oxide enrichment.</title>
        <authorList>
            <person name="Carrascal M."/>
            <person name="Ovelleiro D."/>
            <person name="Casas V."/>
            <person name="Gay M."/>
            <person name="Abian J."/>
        </authorList>
    </citation>
    <scope>PHOSPHORYLATION [LARGE SCALE ANALYSIS] AT SER-263</scope>
    <scope>IDENTIFICATION BY MASS SPECTROMETRY [LARGE SCALE ANALYSIS]</scope>
    <source>
        <tissue>T-cell</tissue>
    </source>
</reference>
<reference key="40">
    <citation type="journal article" date="2008" name="J. Proteome Res.">
        <title>Phosphoproteome of resting human platelets.</title>
        <authorList>
            <person name="Zahedi R.P."/>
            <person name="Lewandrowski U."/>
            <person name="Wiesner J."/>
            <person name="Wortelkamp S."/>
            <person name="Moebius J."/>
            <person name="Schuetz C."/>
            <person name="Walter U."/>
            <person name="Gambaryan S."/>
            <person name="Sickmann A."/>
        </authorList>
    </citation>
    <scope>PHOSPHORYLATION [LARGE SCALE ANALYSIS] AT SER-252 AND SER-263</scope>
    <scope>IDENTIFICATION BY MASS SPECTROMETRY [LARGE SCALE ANALYSIS]</scope>
    <source>
        <tissue>Platelet</tissue>
    </source>
</reference>
<reference key="41">
    <citation type="journal article" date="2008" name="Mol. Cell">
        <title>Kinase-selective enrichment enables quantitative phosphoproteomics of the kinome across the cell cycle.</title>
        <authorList>
            <person name="Daub H."/>
            <person name="Olsen J.V."/>
            <person name="Bairlein M."/>
            <person name="Gnad F."/>
            <person name="Oppermann F.S."/>
            <person name="Korner R."/>
            <person name="Greff Z."/>
            <person name="Keri G."/>
            <person name="Stemmann O."/>
            <person name="Mann M."/>
        </authorList>
    </citation>
    <scope>PHOSPHORYLATION [LARGE SCALE ANALYSIS] AT SER-263</scope>
    <scope>IDENTIFICATION BY MASS SPECTROMETRY [LARGE SCALE ANALYSIS]</scope>
    <source>
        <tissue>Cervix carcinoma</tissue>
    </source>
</reference>
<reference key="42">
    <citation type="journal article" date="2008" name="Proc. Natl. Acad. Sci. U.S.A.">
        <title>A quantitative atlas of mitotic phosphorylation.</title>
        <authorList>
            <person name="Dephoure N."/>
            <person name="Zhou C."/>
            <person name="Villen J."/>
            <person name="Beausoleil S.A."/>
            <person name="Bakalarski C.E."/>
            <person name="Elledge S.J."/>
            <person name="Gygi S.P."/>
        </authorList>
    </citation>
    <scope>PHOSPHORYLATION [LARGE SCALE ANALYSIS] AT SER-263</scope>
    <scope>IDENTIFICATION BY MASS SPECTROMETRY [LARGE SCALE ANALYSIS]</scope>
    <source>
        <tissue>Cervix carcinoma</tissue>
    </source>
</reference>
<reference key="43">
    <citation type="journal article" date="2008" name="Proteomics">
        <title>Large-scale phosphoproteome analysis of human liver tissue by enrichment and fractionation of phosphopeptides with strong anion exchange chromatography.</title>
        <authorList>
            <person name="Han G."/>
            <person name="Ye M."/>
            <person name="Zhou H."/>
            <person name="Jiang X."/>
            <person name="Feng S."/>
            <person name="Jiang X."/>
            <person name="Tian R."/>
            <person name="Wan D."/>
            <person name="Zou H."/>
            <person name="Gu J."/>
        </authorList>
    </citation>
    <scope>PHOSPHORYLATION [LARGE SCALE ANALYSIS] AT SER-231 AND SER-263</scope>
    <scope>IDENTIFICATION BY MASS SPECTROMETRY [LARGE SCALE ANALYSIS]</scope>
    <source>
        <tissue>Liver</tissue>
    </source>
</reference>
<reference key="44">
    <citation type="journal article" date="2009" name="Anal. Chem.">
        <title>Lys-N and trypsin cover complementary parts of the phosphoproteome in a refined SCX-based approach.</title>
        <authorList>
            <person name="Gauci S."/>
            <person name="Helbig A.O."/>
            <person name="Slijper M."/>
            <person name="Krijgsveld J."/>
            <person name="Heck A.J."/>
            <person name="Mohammed S."/>
        </authorList>
    </citation>
    <scope>IDENTIFICATION BY MASS SPECTROMETRY [LARGE SCALE ANALYSIS]</scope>
</reference>
<reference key="45">
    <citation type="journal article" date="2009" name="Sci. Signal.">
        <title>Quantitative phosphoproteomic analysis of T cell receptor signaling reveals system-wide modulation of protein-protein interactions.</title>
        <authorList>
            <person name="Mayya V."/>
            <person name="Lundgren D.H."/>
            <person name="Hwang S.-I."/>
            <person name="Rezaul K."/>
            <person name="Wu L."/>
            <person name="Eng J.K."/>
            <person name="Rodionov V."/>
            <person name="Han D.K."/>
        </authorList>
    </citation>
    <scope>IDENTIFICATION BY MASS SPECTROMETRY [LARGE SCALE ANALYSIS]</scope>
    <source>
        <tissue>Leukemic T-cell</tissue>
    </source>
</reference>
<reference key="46">
    <citation type="journal article" date="2009" name="Science">
        <title>Lysine acetylation targets protein complexes and co-regulates major cellular functions.</title>
        <authorList>
            <person name="Choudhary C."/>
            <person name="Kumar C."/>
            <person name="Gnad F."/>
            <person name="Nielsen M.L."/>
            <person name="Rehman M."/>
            <person name="Walther T.C."/>
            <person name="Olsen J.V."/>
            <person name="Mann M."/>
        </authorList>
    </citation>
    <scope>ACETYLATION [LARGE SCALE ANALYSIS] AT LYS-443; LYS-458; LYS-489 AND LYS-585</scope>
    <scope>IDENTIFICATION BY MASS SPECTROMETRY [LARGE SCALE ANALYSIS]</scope>
</reference>
<reference key="47">
    <citation type="journal article" date="2010" name="Mol. Cell. Proteomics">
        <title>A proteomic investigation of ligand-dependent HSP90 complexes reveals CHORDC1 as a novel ADP-dependent HSP90-interacting protein.</title>
        <authorList>
            <person name="Gano J.J."/>
            <person name="Simon J.A."/>
        </authorList>
    </citation>
    <scope>INTERACTION WITH CHORDC1</scope>
</reference>
<reference key="48">
    <citation type="journal article" date="2005" name="Biochem. Biophys. Res. Commun.">
        <title>Proteomic identification of proteins conjugated to ISG15 in mouse and human cells.</title>
        <authorList>
            <person name="Giannakopoulos N.V."/>
            <person name="Luo J.K."/>
            <person name="Papov V."/>
            <person name="Zou W."/>
            <person name="Lenschow D.J."/>
            <person name="Jacobs B.S."/>
            <person name="Borden E.C."/>
            <person name="Li J."/>
            <person name="Virgin H.W."/>
            <person name="Zhang D.E."/>
        </authorList>
    </citation>
    <scope>ISGYLATION</scope>
</reference>
<reference key="49">
    <citation type="journal article" date="2006" name="J. Proteome Res.">
        <title>Proteomic and bioinformatic characterization of the biogenesis and function of melanosomes.</title>
        <authorList>
            <person name="Chi A."/>
            <person name="Valencia J.C."/>
            <person name="Hu Z.-Z."/>
            <person name="Watabe H."/>
            <person name="Yamaguchi H."/>
            <person name="Mangini N.J."/>
            <person name="Huang H."/>
            <person name="Canfield V.A."/>
            <person name="Cheng K.C."/>
            <person name="Yang F."/>
            <person name="Abe R."/>
            <person name="Yamagishi S."/>
            <person name="Shabanowitz J."/>
            <person name="Hearing V.J."/>
            <person name="Wu C."/>
            <person name="Appella E."/>
            <person name="Hunt D.F."/>
        </authorList>
    </citation>
    <scope>SUBCELLULAR LOCATION [LARGE SCALE ANALYSIS]</scope>
    <source>
        <tissue>Melanoma</tissue>
    </source>
</reference>
<reference key="50">
    <citation type="journal article" date="2006" name="Proc. Natl. Acad. Sci. U.S.A.">
        <title>Folliculin encoded by the BHD gene interacts with a binding protein, FNIP1, and AMPK, and is involved in AMPK and mTOR signaling.</title>
        <authorList>
            <person name="Baba M."/>
            <person name="Hong S.-B."/>
            <person name="Sharma N."/>
            <person name="Warren M.B."/>
            <person name="Nickerson M.L."/>
            <person name="Iwamatsu A."/>
            <person name="Esposito D."/>
            <person name="Gillette W.K."/>
            <person name="Hopkins R.F. III"/>
            <person name="Hartley J.L."/>
            <person name="Furihata M."/>
            <person name="Oishi S."/>
            <person name="Zhen W."/>
            <person name="Burke T.R. Jr."/>
            <person name="Linehan W.M."/>
            <person name="Schmidt L.S."/>
            <person name="Zbar B."/>
        </authorList>
    </citation>
    <scope>INTERACTION WITH FNIP1</scope>
    <scope>IDENTIFICATION BY MASS SPECTROMETRY</scope>
</reference>
<reference key="51">
    <citation type="journal article" date="2008" name="Development">
        <title>The ATPase-dependent chaperoning activity of Hsp90a regulates thick filament formation and integration during skeletal muscle myofibrillogenesis.</title>
        <authorList>
            <person name="Hawkins T.A."/>
            <person name="Haramis A.P."/>
            <person name="Etard C."/>
            <person name="Prodromou C."/>
            <person name="Vaughan C.K."/>
            <person name="Ashworth R."/>
            <person name="Ray S."/>
            <person name="Behra M."/>
            <person name="Holder N."/>
            <person name="Talbot W.S."/>
            <person name="Pearl L.H."/>
            <person name="Strahle U."/>
            <person name="Wilson S.W."/>
        </authorList>
    </citation>
    <scope>MUTAGENESIS OF GLY-97</scope>
</reference>
<reference key="52">
    <citation type="journal article" date="2009" name="EMBO Rep.">
        <title>Hsp90 is regulated by a switch point in the C-terminal domain.</title>
        <authorList>
            <person name="Retzlaff M."/>
            <person name="Stahl M."/>
            <person name="Eberl H.C."/>
            <person name="Lagleder S."/>
            <person name="Beck J."/>
            <person name="Kessler H."/>
            <person name="Buchner J."/>
        </authorList>
    </citation>
    <scope>MUTAGENESIS OF CYS-598</scope>
</reference>
<reference key="53">
    <citation type="journal article" date="2010" name="Cell Res.">
        <title>Tom70 mediates activation of interferon regulatory factor 3 on mitochondria.</title>
        <authorList>
            <person name="Liu X.Y."/>
            <person name="Wei B."/>
            <person name="Shi H.X."/>
            <person name="Shan Y.F."/>
            <person name="Wang C."/>
        </authorList>
    </citation>
    <scope>FUNCTION</scope>
    <scope>INTERACTION WITH TOMM70; IRF3 AND TBK1</scope>
    <scope>MUTAGENESIS OF 729-GLU--ASP-732</scope>
</reference>
<reference key="54">
    <citation type="journal article" date="2010" name="Cell. Signal.">
        <title>Stat1 mediates an auto-regulation of hsp90beta gene in heat shock response.</title>
        <authorList>
            <person name="Cheng M.B."/>
            <person name="Zhang Y."/>
            <person name="Zhong X."/>
            <person name="Sutter B."/>
            <person name="Cao C.Y."/>
            <person name="Chen X.S."/>
            <person name="Cheng X.K."/>
            <person name="Zhang Y."/>
            <person name="Xiao L."/>
            <person name="Shen Y.F."/>
        </authorList>
    </citation>
    <scope>INTERACTION WITH HSP90AB1</scope>
</reference>
<reference key="55">
    <citation type="journal article" date="2010" name="Sci. Signal.">
        <title>Quantitative phosphoproteomics reveals widespread full phosphorylation site occupancy during mitosis.</title>
        <authorList>
            <person name="Olsen J.V."/>
            <person name="Vermeulen M."/>
            <person name="Santamaria A."/>
            <person name="Kumar C."/>
            <person name="Miller M.L."/>
            <person name="Jensen L.J."/>
            <person name="Gnad F."/>
            <person name="Cox J."/>
            <person name="Jensen T.S."/>
            <person name="Nigg E.A."/>
            <person name="Brunak S."/>
            <person name="Mann M."/>
        </authorList>
    </citation>
    <scope>IDENTIFICATION BY MASS SPECTROMETRY [LARGE SCALE ANALYSIS]</scope>
    <source>
        <tissue>Cervix carcinoma</tissue>
    </source>
</reference>
<reference key="56">
    <citation type="journal article" date="2011" name="BMC Syst. Biol.">
        <title>Initial characterization of the human central proteome.</title>
        <authorList>
            <person name="Burkard T.R."/>
            <person name="Planyavsky M."/>
            <person name="Kaupe I."/>
            <person name="Breitwieser F.P."/>
            <person name="Buerckstuemmer T."/>
            <person name="Bennett K.L."/>
            <person name="Superti-Furga G."/>
            <person name="Colinge J."/>
        </authorList>
    </citation>
    <scope>IDENTIFICATION BY MASS SPECTROMETRY [LARGE SCALE ANALYSIS]</scope>
</reference>
<reference key="57">
    <citation type="journal article" date="2011" name="Sci. Signal.">
        <title>System-wide temporal characterization of the proteome and phosphoproteome of human embryonic stem cell differentiation.</title>
        <authorList>
            <person name="Rigbolt K.T."/>
            <person name="Prokhorova T.A."/>
            <person name="Akimov V."/>
            <person name="Henningsen J."/>
            <person name="Johansen P.T."/>
            <person name="Kratchmarova I."/>
            <person name="Kassem M."/>
            <person name="Mann M."/>
            <person name="Olsen J.V."/>
            <person name="Blagoev B."/>
        </authorList>
    </citation>
    <scope>PHOSPHORYLATION [LARGE SCALE ANALYSIS] AT SER-252</scope>
    <scope>IDENTIFICATION BY MASS SPECTROMETRY [LARGE SCALE ANALYSIS]</scope>
</reference>
<reference key="58">
    <citation type="journal article" date="2012" name="Cell. Microbiol.">
        <title>Human heat shock protein (Hsp) 90 interferes with Neisseria meningitidis adhesin A (NadA)-mediated adhesion and invasion.</title>
        <authorList>
            <person name="Montanari P."/>
            <person name="Bozza G."/>
            <person name="Capecchi B."/>
            <person name="Caproni E."/>
            <person name="Barrile R."/>
            <person name="Norais N."/>
            <person name="Capitani M."/>
            <person name="Sallese M."/>
            <person name="Cecchini P."/>
            <person name="Ciucchi L."/>
            <person name="Gao Z."/>
            <person name="Rappuoli R."/>
            <person name="Pizza M."/>
            <person name="Arico B."/>
            <person name="Merola M."/>
        </authorList>
    </citation>
    <scope>FUNCTION (MICROBIAL INFECTION)</scope>
    <scope>INTERACTION WITH N.MENINGITIDIS ADHESIN A (MICROBIAL INFECTION)</scope>
</reference>
<reference key="59">
    <citation type="journal article" date="2013" name="J. Biol. Chem.">
        <title>Cdc37 (cell division cycle 37) restricts Hsp90 (heat shock protein 90) motility by interaction with N-terminal and middle domain binding sites.</title>
        <authorList>
            <person name="Eckl J.M."/>
            <person name="Rutz D.A."/>
            <person name="Haslbeck V."/>
            <person name="Zierer B.K."/>
            <person name="Reinstein J."/>
            <person name="Richter K."/>
        </authorList>
    </citation>
    <scope>INTERACTION WITH CDC37</scope>
</reference>
<reference key="60">
    <citation type="journal article" date="2013" name="J. Proteome Res.">
        <title>Toward a comprehensive characterization of a human cancer cell phosphoproteome.</title>
        <authorList>
            <person name="Zhou H."/>
            <person name="Di Palma S."/>
            <person name="Preisinger C."/>
            <person name="Peng M."/>
            <person name="Polat A.N."/>
            <person name="Heck A.J."/>
            <person name="Mohammed S."/>
        </authorList>
    </citation>
    <scope>PHOSPHORYLATION [LARGE SCALE ANALYSIS] AT SER-231; SER-252; SER-263; SER-476 AND SER-641</scope>
    <scope>IDENTIFICATION BY MASS SPECTROMETRY [LARGE SCALE ANALYSIS]</scope>
    <source>
        <tissue>Cervix carcinoma</tissue>
        <tissue>Erythroleukemia</tissue>
    </source>
</reference>
<reference key="61">
    <citation type="journal article" date="2014" name="Biochem. Biophys. Res. Commun.">
        <title>Hsp70 and Hsp90 oppositely regulate TGF-beta signaling through CHIP/Stub1.</title>
        <authorList>
            <person name="Shang Y."/>
            <person name="Xu X."/>
            <person name="Duan X."/>
            <person name="Guo J."/>
            <person name="Wang Y."/>
            <person name="Ren F."/>
            <person name="He D."/>
            <person name="Chang Z."/>
        </authorList>
    </citation>
    <scope>FUNCTION</scope>
    <scope>INTERACTION WITH STUB1 AND SMAD3</scope>
</reference>
<reference key="62">
    <citation type="journal article" date="2014" name="J. Proteomics">
        <title>An enzyme assisted RP-RPLC approach for in-depth analysis of human liver phosphoproteome.</title>
        <authorList>
            <person name="Bian Y."/>
            <person name="Song C."/>
            <person name="Cheng K."/>
            <person name="Dong M."/>
            <person name="Wang F."/>
            <person name="Huang J."/>
            <person name="Sun D."/>
            <person name="Wang L."/>
            <person name="Ye M."/>
            <person name="Zou H."/>
        </authorList>
    </citation>
    <scope>PHOSPHORYLATION [LARGE SCALE ANALYSIS] AT SER-231</scope>
    <scope>IDENTIFICATION BY MASS SPECTROMETRY [LARGE SCALE ANALYSIS]</scope>
    <source>
        <tissue>Liver</tissue>
    </source>
</reference>
<reference key="63">
    <citation type="journal article" date="2014" name="Oncotarget">
        <title>The NLR-related protein NWD1 is associated with prostate cancer and modulates androgen receptor signaling.</title>
        <authorList>
            <person name="Correa R.G."/>
            <person name="Krajewska M."/>
            <person name="Ware C.F."/>
            <person name="Gerlic M."/>
            <person name="Reed J.C."/>
        </authorList>
    </citation>
    <scope>INTERACTION WITH NWD1</scope>
</reference>
<reference key="64">
    <citation type="journal article" date="2015" name="Front. Oncol.">
        <title>Hsp90, the concertmaster: tuning transcription.</title>
        <authorList>
            <person name="Khurana N."/>
            <person name="Bhattacharyya S."/>
        </authorList>
    </citation>
    <scope>REVIEW</scope>
</reference>
<reference key="65">
    <citation type="journal article" date="2015" name="J. Virol.">
        <title>Tom70 mediates Sendai virus-induced apoptosis on mitochondria.</title>
        <authorList>
            <person name="Wei B."/>
            <person name="Cui Y."/>
            <person name="Huang Y."/>
            <person name="Liu H."/>
            <person name="Li L."/>
            <person name="Li M."/>
            <person name="Ruan K.C."/>
            <person name="Zhou Q."/>
            <person name="Wang C."/>
        </authorList>
    </citation>
    <scope>FUNCTION</scope>
    <scope>INTERACTION WITH TOMM70 AND IRF3</scope>
    <scope>SUBCELLULAR LOCATION</scope>
    <scope>MUTAGENESIS OF 728-MET--ASP-732</scope>
</reference>
<reference key="66">
    <citation type="journal article" date="2015" name="Oncotarget">
        <title>C-terminal domain of SMYD3 serves as a unique HSP90-regulated motif in oncogenesis.</title>
        <authorList>
            <person name="Brown M.A."/>
            <person name="Foreman K."/>
            <person name="Harriss J."/>
            <person name="Das C."/>
            <person name="Zhu L."/>
            <person name="Edwards M."/>
            <person name="Shaaban S."/>
            <person name="Tucker H."/>
        </authorList>
    </citation>
    <scope>INTERACTION WITH SMYD3</scope>
</reference>
<reference key="67">
    <citation type="journal article" date="2015" name="PLoS ONE">
        <title>Client proteins and small molecule inhibitors display distinct binding preferences for constitutive and stress-induced HSP90 isoforms and their conformationally restricted mutants.</title>
        <authorList>
            <person name="Prince T.L."/>
            <person name="Kijima T."/>
            <person name="Tatokoro M."/>
            <person name="Lee S."/>
            <person name="Tsutsumi S."/>
            <person name="Yim K."/>
            <person name="Rivas C."/>
            <person name="Alarcon S."/>
            <person name="Schwartz H."/>
            <person name="Khamit-Kush K."/>
            <person name="Scroggins B.T."/>
            <person name="Beebe K."/>
            <person name="Trepel J.B."/>
            <person name="Neckers L."/>
        </authorList>
    </citation>
    <scope>INTERACTION WITH HSF1; HIF1A; ERBB2; MET; KEAP1 AND RHOBTB2</scope>
    <scope>MUTAGENESIS OF GLU-47 AND ASP-93</scope>
</reference>
<reference key="68">
    <citation type="journal article" date="2015" name="Proteomics">
        <title>N-terminome analysis of the human mitochondrial proteome.</title>
        <authorList>
            <person name="Vaca Jacome A.S."/>
            <person name="Rabilloud T."/>
            <person name="Schaeffer-Reiss C."/>
            <person name="Rompais M."/>
            <person name="Ayoub D."/>
            <person name="Lane L."/>
            <person name="Bairoch A."/>
            <person name="Van Dorsselaer A."/>
            <person name="Carapito C."/>
        </authorList>
    </citation>
    <scope>IDENTIFICATION BY MASS SPECTROMETRY [LARGE SCALE ANALYSIS]</scope>
</reference>
<reference key="69">
    <citation type="journal article" date="2016" name="Biochimie">
        <title>Hsp90: Friends, clients and natural foes.</title>
        <authorList>
            <person name="Verma S."/>
            <person name="Goyal S."/>
            <person name="Jamal S."/>
            <person name="Singh A."/>
            <person name="Grover A."/>
        </authorList>
    </citation>
    <scope>REVIEW</scope>
</reference>
<reference key="70">
    <citation type="journal article" date="2016" name="Biopolymers">
        <title>Review: The HSP90 molecular chaperone-an enigmatic ATPase.</title>
        <authorList>
            <person name="Pearl L.H."/>
        </authorList>
    </citation>
    <scope>REVIEW</scope>
</reference>
<reference key="71">
    <citation type="journal article" date="2016" name="Nat. Commun.">
        <title>The FNIP co-chaperones decelerate the Hsp90 chaperone cycle and enhance drug binding.</title>
        <authorList>
            <person name="Woodford M.R."/>
            <person name="Dunn D.M."/>
            <person name="Blanden A.R."/>
            <person name="Capriotti D."/>
            <person name="Loiselle D."/>
            <person name="Prodromou C."/>
            <person name="Panaretou B."/>
            <person name="Hughes P.F."/>
            <person name="Smith A."/>
            <person name="Ackerman W."/>
            <person name="Haystead T.A."/>
            <person name="Loh S.N."/>
            <person name="Bourboulia D."/>
            <person name="Schmidt L.S."/>
            <person name="Marston Linehan W."/>
            <person name="Bratslavsky G."/>
            <person name="Mollapour M."/>
        </authorList>
    </citation>
    <scope>FUNCTION</scope>
    <scope>INTERACTION WITH FLCN; AHSA1; HSP70; CDC37; FNIP1; FNIP2; STUB1; STIP1; PTGES3 AND PPP5C</scope>
</reference>
<reference key="72">
    <citation type="journal article" date="2016" name="Sci. Rep.">
        <title>IER5 generates a novel hypo-phosphorylated active form of HSF1 and contributes to tumorigenesis.</title>
        <authorList>
            <person name="Asano Y."/>
            <person name="Kawase T."/>
            <person name="Okabe A."/>
            <person name="Tsutsumi S."/>
            <person name="Ichikawa H."/>
            <person name="Tatebe S."/>
            <person name="Kitabayashi I."/>
            <person name="Tashiro F."/>
            <person name="Namiki H."/>
            <person name="Kondo T."/>
            <person name="Semba K."/>
            <person name="Aburatani H."/>
            <person name="Taya Y."/>
            <person name="Nakagama H."/>
            <person name="Ohki R."/>
        </authorList>
    </citation>
    <scope>INTERACTION WITH HSF1</scope>
</reference>
<reference key="73">
    <citation type="journal article" date="2017" name="EMBO J.">
        <title>Tumor suppressor Tsc1 is a new Hsp90 co-chaperone that facilitates folding of kinase and non-kinase clients.</title>
        <authorList>
            <person name="Woodford M.R."/>
            <person name="Sager R.A."/>
            <person name="Marris E."/>
            <person name="Dunn D.M."/>
            <person name="Blanden A.R."/>
            <person name="Murphy R.L."/>
            <person name="Rensing N."/>
            <person name="Shapiro O."/>
            <person name="Panaretou B."/>
            <person name="Prodromou C."/>
            <person name="Loh S.N."/>
            <person name="Gutmann D.H."/>
            <person name="Bourboulia D."/>
            <person name="Bratslavsky G."/>
            <person name="Wong M."/>
            <person name="Mollapour M."/>
        </authorList>
    </citation>
    <scope>FUNCTION</scope>
    <scope>ACTIVITY REGULATION</scope>
    <scope>IDENTIFICATION IN A COMPLEX WITH TSC1 AND TSC2</scope>
    <scope>INTERACTION WITH TSC1 AND AHSA1</scope>
    <scope>SUBUNIT</scope>
    <scope>MUTAGENESIS OF GLU-47; ASP-93; TYR-313 AND 728-MET--ASP-732</scope>
</reference>
<reference key="74">
    <citation type="journal article" date="2018" name="Nat. Commun.">
        <title>Proteasomal degradation of NOD2 by NLRP12 in monocytes promotes bacterial tolerance and colonization by enteropathogens.</title>
        <authorList>
            <person name="Normand S."/>
            <person name="Waldschmitt N."/>
            <person name="Neerincx A."/>
            <person name="Martinez-Torres R.J."/>
            <person name="Chauvin C."/>
            <person name="Couturier-Maillard A."/>
            <person name="Boulard O."/>
            <person name="Cobret L."/>
            <person name="Awad F."/>
            <person name="Huot L."/>
            <person name="Ribeiro-Ribeiro A."/>
            <person name="Lautz K."/>
            <person name="Ruez R."/>
            <person name="Delacre M."/>
            <person name="Bondu C."/>
            <person name="Guilliams M."/>
            <person name="Scott C."/>
            <person name="Segal A."/>
            <person name="Amselem S."/>
            <person name="Hot D."/>
            <person name="Karabina S."/>
            <person name="Bohn E."/>
            <person name="Ryffel B."/>
            <person name="Poulin L.F."/>
            <person name="Kufer T.A."/>
            <person name="Chamaillard M."/>
        </authorList>
    </citation>
    <scope>INTERACTION WITH NLRP12</scope>
</reference>
<reference key="75">
    <citation type="journal article" date="2018" name="J. Virol.">
        <title>Herpes Simplex Virus 1 Inhibits TANK-Binding Kinase 1 through Formation of the Us11-Hsp90 Complex.</title>
        <authorList>
            <person name="Liu X."/>
            <person name="Main D."/>
            <person name="Ma Y."/>
            <person name="He B."/>
        </authorList>
    </citation>
    <scope>INTERACTION WITH HERPES SIMPLEX VIRUS 1 PROTEIN US11 (MICROBIAL INFECTION)</scope>
</reference>
<reference key="76">
    <citation type="journal article" date="1997" name="Cell">
        <title>Crystal structure of an Hsp90-geldanamycin complex: targeting of a protein chaperone by an antitumor agent.</title>
        <authorList>
            <person name="Stebbins C.E."/>
            <person name="Russo A.A."/>
            <person name="Schneider C."/>
            <person name="Rosen N."/>
            <person name="Hartl F.U."/>
            <person name="Pavletich N.P."/>
        </authorList>
    </citation>
    <scope>X-RAY CRYSTALLOGRAPHY (1.9 ANGSTROMS) OF 11-223 IN COMPLEX WITH GELDANAMYCIN</scope>
</reference>
<reference key="77">
    <citation type="journal article" date="1998" name="J. Cell Biol.">
        <title>In vivo function of Hsp90 is dependent on ATP binding and ATP hydrolysis.</title>
        <authorList>
            <person name="Obermann W.M."/>
            <person name="Sondermann H."/>
            <person name="Russo A.A."/>
            <person name="Pavletich N.P."/>
            <person name="Hartl F.U."/>
        </authorList>
    </citation>
    <scope>X-RAY CRYSTALLOGRAPHY (1.5 ANGSTROMS) OF 11-223 IN COMPLEX WITH ADP</scope>
    <scope>CATALYTIC ACTIVITY</scope>
    <scope>INTERACTION WITH PTGES3</scope>
</reference>
<reference key="78">
    <citation type="journal article" date="2005" name="Mol. Cell">
        <title>Chaperoned ubiquitylation -- crystal structures of the CHIP U box E3 ubiquitin ligase and a CHIP-Ubc13-Uev1a complex.</title>
        <authorList>
            <person name="Zhang M."/>
            <person name="Windheim M."/>
            <person name="Roe S.M."/>
            <person name="Peggie M."/>
            <person name="Cohen P."/>
            <person name="Prodromou C."/>
            <person name="Pearl L.H."/>
        </authorList>
    </citation>
    <scope>X-RAY CRYSTALLOGRAPHY (3.30 ANGSTROMS) OF 724-732 IN COMPLEX WITH STUB1</scope>
    <scope>INTERACTION WITH STUB1 AND UBE2N</scope>
    <scope>MOTIF TPR REPEAT-BINDING</scope>
</reference>
<sequence>MPEETQTQDQPMEEEEVETFAFQAEIAQLMSLIINTFYSNKEIFLRELISNSSDALDKIRYESLTDPSKLDSGKELHINLIPNKQDRTLTIVDTGIGMTKADLINNLGTIAKSGTKAFMEALQAGADISMIGQFGVGFYSAYLVAEKVTVITKHNDDEQYAWESSAGGSFTVRTDTGEPMGRGTKVILHLKEDQTEYLEERRIKEIVKKHSQFIGYPITLFVEKERDKEVSDDEAEEKEDKEEEKEKEEKESEDKPEIEDVGSDEEEEKKDGDKKKKKKIKEKYIDQEELNKTKPIWTRNPDDITNEEYGEFYKSLTNDWEDHLAVKHFSVEGQLEFRALLFVPRRAPFDLFENRKKKNNIKLYVRRVFIMDNCEELIPEYLNFIRGVVDSEDLPLNISREMLQQSKILKVIRKNLVKKCLELFTELAEDKENYKKFYEQFSKNIKLGIHEDSQNRKKLSELLRYYTSASGDEMVSLKDYCTRMKENQKHIYYITGETKDQVANSAFVERLRKHGLEVIYMIEPIDEYCVQQLKEFEGKTLVSVTKEGLELPEDEEEKKKQEEKKTKFENLCKIMKDILEKKVEKVVVSNRLVTSPCCIVTSTYGWTANMERIMKAQALRDNSTMGYMAAKKHLEINPDHSIIETLRQKAEADKNDKSVKDLVILLYETALLSSGFSLEDPQTHANRIYRMIKLGLGIDEDDPTADDTSAAVTEEMPPLEGDDDTSRMEEVD</sequence>
<accession>P07900</accession>
<accession>A8K500</accession>
<accession>B3KPJ9</accession>
<accession>Q2PP14</accession>
<accession>Q5CAQ6</accession>
<accession>Q5CAQ7</accession>
<accession>Q9BVQ5</accession>
<comment type="function">
    <text evidence="6 7 9 14 16 28 31 35 39 40 50 51 52">Molecular chaperone that promotes the maturation, structural maintenance and proper regulation of specific target proteins involved for instance in cell cycle control and signal transduction. Undergoes a functional cycle that is linked to its ATPase activity which is essential for its chaperone activity. This cycle probably induces conformational changes in the client proteins, thereby causing their activation. Interacts dynamically with various co-chaperones that modulate its substrate recognition, ATPase cycle and chaperone function (PubMed:11274138, PubMed:12526792, PubMed:15577939, PubMed:15937123, PubMed:27353360, PubMed:29127155). Engages with a range of client protein classes via its interaction with various co-chaperone proteins or complexes, that act as adapters, simultaneously able to interact with the specific client and the central chaperone itself (PubMed:29127155). Recruitment of ATP and co-chaperone followed by client protein forms a functional chaperone. After the completion of the chaperoning process, properly folded client protein and co-chaperone leave HSP90 in an ADP-bound partially open conformation and finally, ADP is released from HSP90 which acquires an open conformation for the next cycle (PubMed:26991466, PubMed:27295069). Plays a critical role in mitochondrial import, delivers preproteins to the mitochondrial import receptor TOMM70 (PubMed:12526792). Apart from its chaperone activity, it also plays a role in the regulation of the transcription machinery. HSP90 and its co-chaperones modulate transcription at least at three different levels (PubMed:25973397). In the first place, they alter the steady-state levels of certain transcription factors in response to various physiological cues (PubMed:25973397). Second, they modulate the activity of certain epigenetic modifiers, such as histone deacetylases or DNA methyl transferases, and thereby respond to the change in the environment (PubMed:25973397). Third, they participate in the eviction of histones from the promoter region of certain genes and thereby turn on gene expression (PubMed:25973397). Binds bacterial lipopolysaccharide (LPS) and mediates LPS-induced inflammatory response, including TNF secretion by monocytes (PubMed:11276205). Antagonizes STUB1-mediated inhibition of TGF-beta signaling via inhibition of STUB1-mediated SMAD3 ubiquitination and degradation (PubMed:24613385). Mediates the association of TOMM70 with IRF3 or TBK1 in mitochondrial outer membrane which promotes host antiviral response (PubMed:20628368, PubMed:25609812).</text>
</comment>
<comment type="function">
    <text evidence="54">(Microbial infection) Seems to interfere with N.meningitidis NadA-mediated invasion of human cells. Decreasing HSP90 levels increases adhesion and entry of E.coli expressing NadA into human Chang cells; increasing its levels leads to decreased adhesion and invasion.</text>
</comment>
<comment type="catalytic activity">
    <reaction evidence="9">
        <text>ATP + H2O = ADP + phosphate + H(+)</text>
        <dbReference type="Rhea" id="RHEA:13065"/>
        <dbReference type="ChEBI" id="CHEBI:15377"/>
        <dbReference type="ChEBI" id="CHEBI:15378"/>
        <dbReference type="ChEBI" id="CHEBI:30616"/>
        <dbReference type="ChEBI" id="CHEBI:43474"/>
        <dbReference type="ChEBI" id="CHEBI:456216"/>
        <dbReference type="EC" id="3.6.4.10"/>
    </reaction>
</comment>
<comment type="activity regulation">
    <text evidence="24 40">In the resting state, through the dimerization of its C-terminal domain, HSP90 forms a homodimer which is defined as the open conformation (PubMed:18400751). Upon ATP-binding, the N-terminal domain undergoes significant conformational changes and comes in contact to form an active closed conformation (PubMed:18400751). After HSP90 finishes its chaperoning tasks of assisting the proper folding, stabilization and activation of client proteins under the active state, ATP molecule is hydrolyzed to ADP which then dissociates from HSP90 and directs the protein back to the resting state (PubMed:18400751). Co-chaperone TSC1 promotes ATP binding and inhibits HSP90AA1 ATPase activity (PubMed:29127155). Binding to phosphorylated AHSA1 promotes HSP90AA1 ATPase activity (PubMed:29127155). Inhibited by geldanamycin, Ganetespib (STA-9090) and SNX-2112 (PubMed:12526792, PubMed:29127155).</text>
</comment>
<comment type="biophysicochemical properties">
    <kinetics>
        <KM evidence="24">300 uM for ATP</KM>
    </kinetics>
</comment>
<comment type="subunit">
    <text evidence="2 3 5 6 7 8 9 10 11 12 13 14 15 18 19 20 22 24 26 27 28 30 31 32 36 37 38 39 40 42 43 44 45 46 47">Homodimer (PubMed:18400751, PubMed:29127155, PubMed:7588731, PubMed:8289821). Identified in NR3C1/GCR steroid receptor-chaperone complexes formed at least by NR3C1, HSP90AA1 and a variety of proteins containing TPR repeats such as FKBP4, FKBP5, PPID, PPP5C or STIP1 (PubMed:15383005, PubMed:9195923). Forms a complex containing HSP90AA1, TSC1 and TSC2; TSC1 is required to recruit TCS2 to the complex (PubMed:29127155). The closed form interacts (via the middle domain and TPR repeat-binding motif) with co-chaperone TSC1 (via C-terminus) (PubMed:29127155). Interacts with TOM34 (PubMed:9660753). Interacts with TERT; the interaction, together with PTGES3, is required for correct assembly and stabilization of the TERT holoenzyme complex (PubMed:11274138, PubMed:9817749). Interacts with CHORDC1 and DNAJC7 (PubMed:12853476, PubMed:19875381). Interacts with STUB1 and UBE2N; may couple the chaperone and ubiquitination systems (PubMed:16307917, PubMed:27353360). Interacts (via TPR repeat-binding motif) with PPP5C (via TPR repeats); the interaction is direct and activates PPP5C phosphatase activity (PubMed:15383005, PubMed:15577939, PubMed:16531226, PubMed:27353360). Following LPS binding, may form a complex with CXCR4, GDF5 and HSPA8 (PubMed:11276205). Interacts with KSR1 (PubMed:10409742). Interacts with co-chaperone CDC37 (via C-terminus); the interaction inhibits HSP90AA1 ATPase activity (PubMed:23569206, PubMed:27353360). May interact with NWD1 (PubMed:24681825). Interacts with FNIP1 and FNIP2; the interaction inhibits HSP90AA1 ATPase activity (PubMed:17028174, PubMed:27353360). Interacts with co-chaperone AHSA1 (phosphorylated on 'Tyr-223'); the interaction activates HSP90AA1 ATPase activity and results in the dissociation of TSC1 from HSP90AA1 (PubMed:12604615, PubMed:27353360, PubMed:29127155). Interacts with FLCN in the presence of FNIP1 (PubMed:27353360). Interacts with HSP70, STIP1 and PTGES3 (PubMed:27353360). Interacts with SMYD3; this interaction enhances SMYD3 histone-lysine N-methyltransferase (PubMed:15235609, PubMed:25738358). Interacts with SGTA (via TPR repeats) (PubMed:15708368). Interacts with TTC1 (via TPR repeats) (PubMed:15708368). Interacts with HSF1 in an ATP-dependent manner (PubMed:11583998, PubMed:26517842). Interacts with MET; the interaction suppresses MET kinase activity (PubMed:26517842). Interacts with ERBB2 in an ATP-dependent manner; the interaction suppresses ERBB2 kinase activity (PubMed:26517842). Interacts with HIF1A, KEAP1 and RHOBTB2 (PubMed:26517842). Interacts with HSF1; this interaction is decreased in a IER5-dependent manner, promoting HSF1 accumulation in the nucleus, homotrimerization and DNA-binding activities (PubMed:26754925). Interacts with STUB1 and SMAD3 (PubMed:24613385). Interacts with HSP90AB1; interaction is constitutive (PubMed:20353823). Interacts with HECTD1 (via N-terminus) (By similarity). Interacts with NR3C1 (via domain NR LBD) and NR1D1 (via domain NR LBD) (By similarity). Interacts with NLPR12 (PubMed:17947705, PubMed:30559449). Interacts with PDCL3 (By similarity). Interacts with TOMM70; the interaction is required for preprotein mitochondrial import (PubMed:12526792). Interacts with TOMM70, IRF3 and TBK1; the interactions are direct and mediate the association of TOMM70 with IRF3 and TBK1 (PubMed:20628368). Forms a complex with ASL, ASS1 and NOS2; the complex regulates cell-autonomous L-arginine synthesis and citrulline recycling while channeling extracellular L-arginine to nitric oxide synthesis pathway.</text>
</comment>
<comment type="subunit">
    <text evidence="41">(Microbial infection) Interacts with herpes simplex virus 1 protein US11; this interaction inhibits TBK1-induced interferon production.</text>
</comment>
<comment type="subunit">
    <text evidence="29">(Microbial infection) Interacts with N.meningitidis serogroup B adhesin A (nadA). Interaction is stabilized by ADP and 17-AAG (17-N-allylamino-17-demethoxygeldanamycin) and inhibited by ATP. Decreasing HSP90 levels increases adhesion and entry of bacterial into human Chang cells; increasing its levels leads to decreased adhseion and invasion.</text>
</comment>
<comment type="interaction">
    <interactant intactId="EBI-296047">
        <id>P07900</id>
    </interactant>
    <interactant intactId="EBI-10173507">
        <id>Q6UY14-3</id>
        <label>ADAMTSL4</label>
    </interactant>
    <organismsDiffer>false</organismsDiffer>
    <experiments>3</experiments>
</comment>
<comment type="interaction">
    <interactant intactId="EBI-296047">
        <id>P07900</id>
    </interactant>
    <interactant intactId="EBI-448610">
        <id>O95433</id>
        <label>AHSA1</label>
    </interactant>
    <organismsDiffer>false</organismsDiffer>
    <experiments>6</experiments>
</comment>
<comment type="interaction">
    <interactant intactId="EBI-296047">
        <id>P07900</id>
    </interactant>
    <interactant intactId="EBI-296115">
        <id>Q9Y243</id>
        <label>AKT3</label>
    </interactant>
    <organismsDiffer>false</organismsDiffer>
    <experiments>4</experiments>
</comment>
<comment type="interaction">
    <interactant intactId="EBI-296047">
        <id>P07900</id>
    </interactant>
    <interactant intactId="EBI-6423788">
        <id>Q16671</id>
        <label>AMHR2</label>
    </interactant>
    <organismsDiffer>false</organismsDiffer>
    <experiments>3</experiments>
</comment>
<comment type="interaction">
    <interactant intactId="EBI-296047">
        <id>P07900</id>
    </interactant>
    <interactant intactId="EBI-77613">
        <id>P05067</id>
        <label>APP</label>
    </interactant>
    <organismsDiffer>false</organismsDiffer>
    <experiments>5</experiments>
</comment>
<comment type="interaction">
    <interactant intactId="EBI-296047">
        <id>P07900</id>
    </interactant>
    <interactant intactId="EBI-935503">
        <id>Q9H0C5</id>
        <label>BTBD1</label>
    </interactant>
    <organismsDiffer>false</organismsDiffer>
    <experiments>4</experiments>
</comment>
<comment type="interaction">
    <interactant intactId="EBI-296047">
        <id>P07900</id>
    </interactant>
    <interactant intactId="EBI-1383687">
        <id>Q9UQM7</id>
        <label>CAMK2A</label>
    </interactant>
    <organismsDiffer>false</organismsDiffer>
    <experiments>5</experiments>
</comment>
<comment type="interaction">
    <interactant intactId="EBI-296047">
        <id>P07900</id>
    </interactant>
    <interactant intactId="EBI-3387963">
        <id>Q8IWD4</id>
        <label>CCDC117</label>
    </interactant>
    <organismsDiffer>false</organismsDiffer>
    <experiments>7</experiments>
</comment>
<comment type="interaction">
    <interactant intactId="EBI-296047">
        <id>P07900</id>
    </interactant>
    <interactant intactId="EBI-2874058">
        <id>Q9BV29</id>
        <label>CCDC32</label>
    </interactant>
    <organismsDiffer>false</organismsDiffer>
    <experiments>3</experiments>
</comment>
<comment type="interaction">
    <interactant intactId="EBI-296047">
        <id>P07900</id>
    </interactant>
    <interactant intactId="EBI-295634">
        <id>Q16543</id>
        <label>CDC37</label>
    </interactant>
    <organismsDiffer>false</organismsDiffer>
    <experiments>17</experiments>
</comment>
<comment type="interaction">
    <interactant intactId="EBI-296047">
        <id>P07900</id>
    </interactant>
    <interactant intactId="EBI-2841876">
        <id>Q7L3B6</id>
        <label>CDC37L1</label>
    </interactant>
    <organismsDiffer>false</organismsDiffer>
    <experiments>3</experiments>
</comment>
<comment type="interaction">
    <interactant intactId="EBI-296047">
        <id>P07900</id>
    </interactant>
    <interactant intactId="EBI-1051975">
        <id>Q96Q40</id>
        <label>CDK15</label>
    </interactant>
    <organismsDiffer>false</organismsDiffer>
    <experiments>3</experiments>
</comment>
<comment type="interaction">
    <interactant intactId="EBI-296047">
        <id>P07900</id>
    </interactant>
    <interactant intactId="EBI-1383449">
        <id>P50750</id>
        <label>CDK9</label>
    </interactant>
    <organismsDiffer>false</organismsDiffer>
    <experiments>6</experiments>
</comment>
<comment type="interaction">
    <interactant intactId="EBI-296047">
        <id>P07900</id>
    </interactant>
    <interactant intactId="EBI-1057080">
        <id>Q96G23</id>
        <label>CERS2</label>
    </interactant>
    <organismsDiffer>false</organismsDiffer>
    <experiments>2</experiments>
</comment>
<comment type="interaction">
    <interactant intactId="EBI-296047">
        <id>P07900</id>
    </interactant>
    <interactant intactId="EBI-2550959">
        <id>Q9UHD1</id>
        <label>CHORDC1</label>
    </interactant>
    <organismsDiffer>false</organismsDiffer>
    <experiments>8</experiments>
</comment>
<comment type="interaction">
    <interactant intactId="EBI-296047">
        <id>P07900</id>
    </interactant>
    <interactant intactId="EBI-81249">
        <id>O15111</id>
        <label>CHUK</label>
    </interactant>
    <organismsDiffer>false</organismsDiffer>
    <experiments>4</experiments>
</comment>
<comment type="interaction">
    <interactant intactId="EBI-296047">
        <id>P07900</id>
    </interactant>
    <interactant intactId="EBI-10699285">
        <id>Q6QEF8-4</id>
        <label>CORO6</label>
    </interactant>
    <organismsDiffer>false</organismsDiffer>
    <experiments>3</experiments>
</comment>
<comment type="interaction">
    <interactant intactId="EBI-296047">
        <id>P07900</id>
    </interactant>
    <interactant intactId="EBI-473101">
        <id>Q14194</id>
        <label>CRMP1</label>
    </interactant>
    <organismsDiffer>false</organismsDiffer>
    <experiments>3</experiments>
</comment>
<comment type="interaction">
    <interactant intactId="EBI-296047">
        <id>P07900</id>
    </interactant>
    <interactant intactId="EBI-491549">
        <id>P35222</id>
        <label>CTNNB1</label>
    </interactant>
    <organismsDiffer>false</organismsDiffer>
    <experiments>3</experiments>
</comment>
<comment type="interaction">
    <interactant intactId="EBI-296047">
        <id>P07900</id>
    </interactant>
    <interactant intactId="EBI-997830">
        <id>Q15438</id>
        <label>CYTH1</label>
    </interactant>
    <organismsDiffer>false</organismsDiffer>
    <experiments>3</experiments>
</comment>
<comment type="interaction">
    <interactant intactId="EBI-296047">
        <id>P07900</id>
    </interactant>
    <interactant intactId="EBI-3914009">
        <id>Q9NR20</id>
        <label>DYRK4</label>
    </interactant>
    <organismsDiffer>false</organismsDiffer>
    <experiments>2</experiments>
</comment>
<comment type="interaction">
    <interactant intactId="EBI-296047">
        <id>P07900</id>
    </interactant>
    <interactant intactId="EBI-297353">
        <id>P00533</id>
        <label>EGFR</label>
    </interactant>
    <organismsDiffer>false</organismsDiffer>
    <experiments>7</experiments>
</comment>
<comment type="interaction">
    <interactant intactId="EBI-296047">
        <id>P07900</id>
    </interactant>
    <interactant intactId="EBI-641062">
        <id>P04626</id>
        <label>ERBB2</label>
    </interactant>
    <organismsDiffer>false</organismsDiffer>
    <experiments>6</experiments>
</comment>
<comment type="interaction">
    <interactant intactId="EBI-296047">
        <id>P07900</id>
    </interactant>
    <interactant intactId="EBI-1047444">
        <id>Q02790</id>
        <label>FKBP4</label>
    </interactant>
    <organismsDiffer>false</organismsDiffer>
    <experiments>9</experiments>
</comment>
<comment type="interaction">
    <interactant intactId="EBI-296047">
        <id>P07900</id>
    </interactant>
    <interactant intactId="EBI-306914">
        <id>Q13451</id>
        <label>FKBP5</label>
    </interactant>
    <organismsDiffer>false</organismsDiffer>
    <experiments>9</experiments>
</comment>
<comment type="interaction">
    <interactant intactId="EBI-296047">
        <id>P07900</id>
    </interactant>
    <interactant intactId="EBI-724839">
        <id>Q14318</id>
        <label>FKBP8</label>
    </interactant>
    <organismsDiffer>false</organismsDiffer>
    <experiments>8</experiments>
</comment>
<comment type="interaction">
    <interactant intactId="EBI-296047">
        <id>P07900</id>
    </interactant>
    <interactant intactId="EBI-515315">
        <id>P06241</id>
        <label>FYN</label>
    </interactant>
    <organismsDiffer>false</organismsDiffer>
    <experiments>8</experiments>
</comment>
<comment type="interaction">
    <interactant intactId="EBI-296047">
        <id>P07900</id>
    </interactant>
    <interactant intactId="EBI-25830912">
        <id>Q96LI6-3</id>
        <label>HSFY2</label>
    </interactant>
    <organismsDiffer>false</organismsDiffer>
    <experiments>3</experiments>
</comment>
<comment type="interaction">
    <interactant intactId="EBI-296047">
        <id>P07900</id>
    </interactant>
    <interactant intactId="EBI-296047">
        <id>P07900</id>
        <label>HSP90AA1</label>
    </interactant>
    <organismsDiffer>false</organismsDiffer>
    <experiments>6</experiments>
</comment>
<comment type="interaction">
    <interactant intactId="EBI-296047">
        <id>P07900</id>
    </interactant>
    <interactant intactId="EBI-9356629">
        <id>Q6PK50</id>
        <label>HSP90AB1</label>
    </interactant>
    <organismsDiffer>false</organismsDiffer>
    <experiments>2</experiments>
</comment>
<comment type="interaction">
    <interactant intactId="EBI-296047">
        <id>P07900</id>
    </interactant>
    <interactant intactId="EBI-81279">
        <id>Q9Y6K9</id>
        <label>IKBKG</label>
    </interactant>
    <organismsDiffer>false</organismsDiffer>
    <experiments>4</experiments>
</comment>
<comment type="interaction">
    <interactant intactId="EBI-296047">
        <id>P07900</id>
    </interactant>
    <interactant intactId="EBI-747509">
        <id>Q9UHH9</id>
        <label>IP6K2</label>
    </interactant>
    <organismsDiffer>false</organismsDiffer>
    <experiments>2</experiments>
</comment>
<comment type="interaction">
    <interactant intactId="EBI-296047">
        <id>P07900</id>
    </interactant>
    <interactant intactId="EBI-852823">
        <id>P05412</id>
        <label>JUN</label>
    </interactant>
    <organismsDiffer>false</organismsDiffer>
    <experiments>4</experiments>
</comment>
<comment type="interaction">
    <interactant intactId="EBI-296047">
        <id>P07900</id>
    </interactant>
    <interactant intactId="EBI-20795332">
        <id>Q92993-2</id>
        <label>KAT5</label>
    </interactant>
    <organismsDiffer>false</organismsDiffer>
    <experiments>3</experiments>
</comment>
<comment type="interaction">
    <interactant intactId="EBI-296047">
        <id>P07900</id>
    </interactant>
    <interactant intactId="EBI-6424389">
        <id>Q6VAB6</id>
        <label>KSR2</label>
    </interactant>
    <organismsDiffer>false</organismsDiffer>
    <experiments>6</experiments>
</comment>
<comment type="interaction">
    <interactant intactId="EBI-296047">
        <id>P07900</id>
    </interactant>
    <interactant intactId="EBI-1348">
        <id>P06239</id>
        <label>LCK</label>
    </interactant>
    <organismsDiffer>false</organismsDiffer>
    <experiments>3</experiments>
</comment>
<comment type="interaction">
    <interactant intactId="EBI-296047">
        <id>P07900</id>
    </interactant>
    <interactant intactId="EBI-358011">
        <id>Q99558</id>
        <label>MAP3K14</label>
    </interactant>
    <organismsDiffer>false</organismsDiffer>
    <experiments>5</experiments>
</comment>
<comment type="interaction">
    <interactant intactId="EBI-296047">
        <id>P07900</id>
    </interactant>
    <interactant intactId="EBI-358700">
        <id>O43318-2</id>
        <label>MAP3K7</label>
    </interactant>
    <organismsDiffer>false</organismsDiffer>
    <experiments>5</experiments>
</comment>
<comment type="interaction">
    <interactant intactId="EBI-296047">
        <id>P07900</id>
    </interactant>
    <interactant intactId="EBI-1757866">
        <id>P00540</id>
        <label>MOS</label>
    </interactant>
    <organismsDiffer>false</organismsDiffer>
    <experiments>2</experiments>
</comment>
<comment type="interaction">
    <interactant intactId="EBI-296047">
        <id>P07900</id>
    </interactant>
    <interactant intactId="EBI-493507">
        <id>P04150</id>
        <label>NR3C1</label>
    </interactant>
    <organismsDiffer>false</organismsDiffer>
    <experiments>8</experiments>
</comment>
<comment type="interaction">
    <interactant intactId="EBI-296047">
        <id>P07900</id>
    </interactant>
    <interactant intactId="EBI-1052153">
        <id>Q8WVJ2</id>
        <label>NUDCD2</label>
    </interactant>
    <organismsDiffer>false</organismsDiffer>
    <experiments>4</experiments>
</comment>
<comment type="interaction">
    <interactant intactId="EBI-296047">
        <id>P07900</id>
    </interactant>
    <interactant intactId="EBI-720620">
        <id>P43034</id>
        <label>PAFAH1B1</label>
    </interactant>
    <organismsDiffer>false</organismsDiffer>
    <experiments>5</experiments>
</comment>
<comment type="interaction">
    <interactant intactId="EBI-296047">
        <id>P07900</id>
    </interactant>
    <interactant intactId="EBI-716663">
        <id>P53041</id>
        <label>PPP5C</label>
    </interactant>
    <organismsDiffer>false</organismsDiffer>
    <experiments>13</experiments>
</comment>
<comment type="interaction">
    <interactant intactId="EBI-296047">
        <id>P07900</id>
    </interactant>
    <interactant intactId="EBI-476586">
        <id>P17612</id>
        <label>PRKACA</label>
    </interactant>
    <organismsDiffer>false</organismsDiffer>
    <experiments>4</experiments>
</comment>
<comment type="interaction">
    <interactant intactId="EBI-296047">
        <id>P07900</id>
    </interactant>
    <interactant intactId="EBI-743880">
        <id>Q8WUY3</id>
        <label>PRUNE2</label>
    </interactant>
    <organismsDiffer>false</organismsDiffer>
    <experiments>3</experiments>
</comment>
<comment type="interaction">
    <interactant intactId="EBI-296047">
        <id>P07900</id>
    </interactant>
    <interactant intactId="EBI-6424813">
        <id>Q96QS6</id>
        <label>PSKH2</label>
    </interactant>
    <organismsDiffer>false</organismsDiffer>
    <experiments>3</experiments>
</comment>
<comment type="interaction">
    <interactant intactId="EBI-296047">
        <id>P07900</id>
    </interactant>
    <interactant intactId="EBI-1049387">
        <id>Q15185</id>
        <label>PTGES3</label>
    </interactant>
    <organismsDiffer>false</organismsDiffer>
    <experiments>9</experiments>
</comment>
<comment type="interaction">
    <interactant intactId="EBI-296047">
        <id>P07900</id>
    </interactant>
    <interactant intactId="EBI-365996">
        <id>P04049</id>
        <label>RAF1</label>
    </interactant>
    <organismsDiffer>false</organismsDiffer>
    <experiments>15</experiments>
</comment>
<comment type="interaction">
    <interactant intactId="EBI-296047">
        <id>P07900</id>
    </interactant>
    <interactant intactId="EBI-926706">
        <id>Q13127</id>
        <label>REST</label>
    </interactant>
    <organismsDiffer>false</organismsDiffer>
    <experiments>4</experiments>
</comment>
<comment type="interaction">
    <interactant intactId="EBI-296047">
        <id>P07900</id>
    </interactant>
    <interactant intactId="EBI-356928">
        <id>Q9H6T3</id>
        <label>RPAP3</label>
    </interactant>
    <organismsDiffer>false</organismsDiffer>
    <experiments>7</experiments>
</comment>
<comment type="interaction">
    <interactant intactId="EBI-296047">
        <id>P07900</id>
    </interactant>
    <interactant intactId="EBI-352378">
        <id>P61247</id>
        <label>RPS3A</label>
    </interactant>
    <organismsDiffer>false</organismsDiffer>
    <experiments>3</experiments>
</comment>
<comment type="interaction">
    <interactant intactId="EBI-296047">
        <id>P07900</id>
    </interactant>
    <interactant intactId="EBI-621482">
        <id>P12931</id>
        <label>SRC</label>
    </interactant>
    <organismsDiffer>false</organismsDiffer>
    <experiments>3</experiments>
</comment>
<comment type="interaction">
    <interactant intactId="EBI-296047">
        <id>P07900</id>
    </interactant>
    <interactant intactId="EBI-306838">
        <id>Q15831</id>
        <label>STK11</label>
    </interactant>
    <organismsDiffer>false</organismsDiffer>
    <experiments>6</experiments>
</comment>
<comment type="interaction">
    <interactant intactId="EBI-296047">
        <id>P07900</id>
    </interactant>
    <interactant intactId="EBI-357085">
        <id>Q9UNE7</id>
        <label>STUB1</label>
    </interactant>
    <organismsDiffer>false</organismsDiffer>
    <experiments>9</experiments>
</comment>
<comment type="interaction">
    <interactant intactId="EBI-296047">
        <id>P07900</id>
    </interactant>
    <interactant intactId="EBI-2800236">
        <id>O94826</id>
        <label>TOMM70</label>
    </interactant>
    <organismsDiffer>false</organismsDiffer>
    <experiments>4</experiments>
</comment>
<comment type="interaction">
    <interactant intactId="EBI-296047">
        <id>P07900</id>
    </interactant>
    <interactant intactId="EBI-851883">
        <id>Q9BXA6</id>
        <label>TSSK6</label>
    </interactant>
    <organismsDiffer>false</organismsDiffer>
    <experiments>4</experiments>
</comment>
<comment type="interaction">
    <interactant intactId="EBI-296047">
        <id>P07900</id>
    </interactant>
    <interactant intactId="EBI-594644">
        <id>P10599</id>
        <label>TXN</label>
    </interactant>
    <organismsDiffer>false</organismsDiffer>
    <experiments>3</experiments>
</comment>
<comment type="interaction">
    <interactant intactId="EBI-296047">
        <id>P07900</id>
    </interactant>
    <interactant intactId="EBI-9363363">
        <id>Q8IWX7</id>
        <label>UNC45B</label>
    </interactant>
    <organismsDiffer>false</organismsDiffer>
    <experiments>3</experiments>
</comment>
<comment type="interaction">
    <interactant intactId="EBI-296047">
        <id>P07900</id>
    </interactant>
    <interactant intactId="EBI-25833271">
        <id>Q9H6R7-2</id>
        <label>WDCP</label>
    </interactant>
    <organismsDiffer>false</organismsDiffer>
    <experiments>3</experiments>
</comment>
<comment type="interaction">
    <interactant intactId="EBI-296047">
        <id>P07900</id>
    </interactant>
    <interactant intactId="EBI-6477155">
        <id>P26882</id>
        <label>PPID</label>
    </interactant>
    <organismsDiffer>true</organismsDiffer>
    <experiments>4</experiments>
</comment>
<comment type="interaction">
    <interactant intactId="EBI-296047">
        <id>P07900</id>
    </interactant>
    <interactant intactId="EBI-6477109">
        <id>P35467</id>
        <label>S100a1</label>
    </interactant>
    <organismsDiffer>true</organismsDiffer>
    <experiments>4</experiments>
</comment>
<comment type="subcellular location">
    <subcellularLocation>
        <location evidence="2">Nucleus</location>
    </subcellularLocation>
    <subcellularLocation>
        <location evidence="2">Cytoplasm</location>
    </subcellularLocation>
    <subcellularLocation>
        <location evidence="21">Melanosome</location>
    </subcellularLocation>
    <subcellularLocation>
        <location evidence="7">Cell membrane</location>
    </subcellularLocation>
    <subcellularLocation>
        <location evidence="35">Mitochondrion</location>
    </subcellularLocation>
    <text>Identified by mass spectrometry in melanosome fractions from stage I to stage IV.</text>
</comment>
<comment type="alternative products">
    <event type="alternative splicing"/>
    <isoform>
        <id>P07900-1</id>
        <name>1</name>
        <name>HSP90AA1-1</name>
        <name>HSP90-alpha 2</name>
        <sequence type="displayed"/>
    </isoform>
    <isoform>
        <id>P07900-2</id>
        <name>2</name>
        <name>HSP90AA1-2</name>
        <sequence type="described" ref="VSP_026604"/>
    </isoform>
</comment>
<comment type="domain">
    <text evidence="18">The TPR repeat-binding motif mediates interaction with TPR repeat-containing proteins like the co-chaperone STUB1.</text>
</comment>
<comment type="PTM">
    <text evidence="17">ISGylated.</text>
</comment>
<comment type="PTM">
    <text evidence="16">S-nitrosylated; negatively regulates the ATPase activity and the activation of eNOS by HSP90AA1.</text>
</comment>
<comment type="PTM">
    <text evidence="2">Ubiquitinated via 'Lys-63'-linked polyubiquitination by HECTD1. Ubiquitination promotes translocation into the cytoplasm away from the membrane and secretory pathways.</text>
</comment>
<comment type="similarity">
    <text evidence="53">Belongs to the heat shock protein 90 family.</text>
</comment>